<keyword id="KW-0002">3D-structure</keyword>
<keyword id="KW-0913">Age-related macular degeneration</keyword>
<keyword id="KW-0067">ATP-binding</keyword>
<keyword id="KW-0966">Cell projection</keyword>
<keyword id="KW-0182">Cone-rod dystrophy</keyword>
<keyword id="KW-0968">Cytoplasmic vesicle</keyword>
<keyword id="KW-0225">Disease variant</keyword>
<keyword id="KW-1015">Disulfide bond</keyword>
<keyword id="KW-0256">Endoplasmic reticulum</keyword>
<keyword id="KW-0325">Glycoprotein</keyword>
<keyword id="KW-0378">Hydrolase</keyword>
<keyword id="KW-0472">Membrane</keyword>
<keyword id="KW-0547">Nucleotide-binding</keyword>
<keyword id="KW-0597">Phosphoprotein</keyword>
<keyword id="KW-1267">Proteomics identification</keyword>
<keyword id="KW-1185">Reference proteome</keyword>
<keyword id="KW-0677">Repeat</keyword>
<keyword id="KW-0682">Retinitis pigmentosa</keyword>
<keyword id="KW-0716">Sensory transduction</keyword>
<keyword id="KW-0751">Stargardt disease</keyword>
<keyword id="KW-1278">Translocase</keyword>
<keyword id="KW-0812">Transmembrane</keyword>
<keyword id="KW-1133">Transmembrane helix</keyword>
<keyword id="KW-0813">Transport</keyword>
<keyword id="KW-0844">Vision</keyword>
<proteinExistence type="evidence at protein level"/>
<sequence length="2273" mass="255944">MGFVRQIQLLLWKNWTLRKRQKIRFVVELVWPLSLFLVLIWLRNANPLYSHHECHFPNKAMPSAGMLPWLQGIFCNVNNPCFQSPTPGESPGIVSNYNNSILARVYRDFQELLMNAPESQHLGRIWTELHILSQFMDTLRTHPERIAGRGIRIRDILKDEETLTLFLIKNIGLSDSVVYLLINSQVRPEQFAHGVPDLALKDIACSEALLERFIIFSQRRGAKTVRYALCSLSQGTLQWIEDTLYANVDFFKLFRVLPTLLDSRSQGINLRSWGGILSDMSPRIQEFIHRPSMQDLLWVTRPLMQNGGPETFTKLMGILSDLLCGYPEGGGSRVLSFNWYEDNNYKAFLGIDSTRKDPIYSYDRRTTSFCNALIQSLESNPLTKIAWRAAKPLLMGKILYTPDSPAARRILKNANSTFEELEHVRKLVKAWEEVGPQIWYFFDNSTQMNMIRDTLGNPTVKDFLNRQLGEEGITAEAILNFLYKGPRESQADDMANFDWRDIFNITDRTLRLVNQYLECLVLDKFESYNDETQLTQRALSLLEENMFWAGVVFPDMYPWTSSLPPHVKYKIRMDIDVVEKTNKIKDRYWDSGPRADPVEDFRYIWGGFAYLQDMVEQGITRSQVQAEAPVGIYLQQMPYPCFVDDSFMIILNRCFPIFMVLAWIYSVSMTVKSIVLEKELRLKETLKNQGVSNAVIWCTWFLDSFSIMSMSIFLLTIFIMHGRILHYSDPFILFLFLLAFSTATIMLCFLLSTFFSKASLAAACSGVIYFTLYLPHILCFAWQDRMTAELKKAVSLLSPVAFGFGTEYLVRFEEQGLGLQWSNIGNSPTEGDEFSFLLSMQMMLLDAAVYGLLAWYLDQVFPGDYGTPLPWYFLLQESYWLGGEGCSTREERALEKTEPLTEETEDPEHPEGIHDSFFEREHPGWVPGVCVKNLVKIFEPCGRPAVDRLNITFYENQITAFLGHNGAGKTTTLSILTGLLPPTSGTVLVGGRDIETSLDAVRQSLGMCPQHNILFHHLTVAEHMLFYAQLKGKSQEEAQLEMEAMLEDTGLHHKRNEEAQDLSGGMQRKLSVAIAFVGDAKVVILDEPTSGVDPYSRRSIWDLLLKYRSGRTIIMSTHHMDEADLLGDRIAIIAQGRLYCSGTPLFLKNCFGTGLYLTLVRKMKNIQSQRKGSEGTCSCSSKGFSTTCPAHVDDLTPEQVLDGDVNELMDVVLHHVPEAKLVECIGQELIFLLPNKNFKHRAYASLFRELEETLADLGLSSFGISDTPLEEIFLKVTEDSDSGPLFAGGAQQKRENVNPRHPCLGPREKAGQTPQDSNVCSPGAPAAHPEGQPPPEPECPGPQLNTGTQLVLQHVQALLVKRFQHTIRSHKDFLAQIVLPATFVFLALMLSIVIPPFGEYPALTLHPWIYGQQYTFFSMDEPGSEQFTVLADVLLNKPGFGNRCLKEGWLPEYPCGNSTPWKTPSVSPNITQLFQKQKWTQVNPSPSCRCSTREKLTMLPECPEGAGGLPPPQRTQRSTEILQDLTDRNISDFLVKTYPALIRSSLKSKFWVNEQRYGGISIGGKLPVVPITGEALVGFLSDLGRIMNVSGGPITREASKEIPDFLKHLETEDNIKVWFNNKGWHALVSFLNVAHNAILRASLPKDRSPEEYGITVISQPLNLTKEQLSEITVLTTSVDAVVAICVIFSMSFVPASFVLYLIQERVNKSKHLQFISGVSPTTYWVTNFLWDIMNYSVSAGLVVGIFIGFQKKAYTSPENLPALVALLLLYGWAVIPMMYPASFLFDVPSTAYVALSCANLFIGINSSAITFILELFENNRTLLRFNAVLRKLLIVFPHFCLGRGLIDLALSQAVTDVYARFGEEHSANPFHWDLIGKNLFAMVVEGVVYFLLTLLVQRHFFLSQWIAEPTKEPIVDEDDDVAEERQRIITGGNKTDILRLHELTKIYPGTSSPAVDRLCVGVRPGECFGLLGVNGAGKTTTFKMLTGDTTVTSGDATVAGKSILTNISEVHQNMGYCPQFDAIDELLTGREHLYLYARLRGVPAEEIEKVANWSIKSLGLTVYADCLAGTYSGGNKRKLSTAIALIGCPPLVLLDEPTTGMDPQARRMLWNVIVSIIREGRAVVLTSHSMEECEALCTRLAIMVKGAFRCMGTIQHLKSKFGDGYIVTMKIKSPKDDLLPDLNPVEQFFQGNFPGSVQRERHYNMLQFQVSSSSLARIFQLLLSHKDSLLIEEYSVTQTTLDQVFVNFAKQQTESHDLPLHPRAAGASRQAQD</sequence>
<reference key="1">
    <citation type="journal article" date="1997" name="Nat. Genet.">
        <title>A photoreceptor cell-specific ATP-binding transporter gene (ABCR) is mutated in recessive Stargardt macular dystrophy.</title>
        <authorList>
            <person name="Allikmets R."/>
            <person name="Singh N."/>
            <person name="Sun H."/>
            <person name="Shroyer N.F."/>
            <person name="Hutchinson A."/>
            <person name="Chidambaram A."/>
            <person name="Gerrard B."/>
            <person name="Baird L."/>
            <person name="Stauffer D."/>
            <person name="Peiffer A."/>
            <person name="Rattner A."/>
            <person name="Smallwood P.M."/>
            <person name="Li Y."/>
            <person name="Anderson K.L."/>
            <person name="Lewis R.A."/>
            <person name="Nathans J."/>
            <person name="Leppert M."/>
            <person name="Dean M."/>
            <person name="Lupski J.R."/>
        </authorList>
    </citation>
    <scope>NUCLEOTIDE SEQUENCE [MRNA]</scope>
    <scope>INVOLVEMENT IN STGD1</scope>
    <scope>VARIANTS GLN-943 AND ASP-1817</scope>
    <scope>VARIANTS STGD1 GLU-818; HIS-846; ALA-863; MET-931; VAL-1028; ALA-1072; LYS-1087 AND TRP-2038</scope>
</reference>
<reference key="2">
    <citation type="journal article" date="1997" name="FEBS Lett.">
        <title>The photoreceptor rim protein is an ABC transporter encoded by the gene for recessive Stargardt's disease (ABCR).</title>
        <authorList>
            <person name="Azarian S.M."/>
            <person name="Travis G.H."/>
        </authorList>
    </citation>
    <scope>NUCLEOTIDE SEQUENCE [MRNA]</scope>
</reference>
<reference key="3">
    <citation type="journal article" date="1998" name="Genomics">
        <title>Complete exon-intron structure of the retina-specific ATP binding transporter gene (ABCR) allows the identification of novel mutations underlying Stargardt disease.</title>
        <authorList>
            <person name="Gerber S."/>
            <person name="Rozet J.-M."/>
            <person name="van de Pol T.J.R."/>
            <person name="Hoyng C.B."/>
            <person name="Munnich A."/>
            <person name="Blankenagel A."/>
            <person name="Kaplan J."/>
            <person name="Cremers F.P.M."/>
        </authorList>
    </citation>
    <scope>NUCLEOTIDE SEQUENCE [GENOMIC DNA]</scope>
    <scope>VARIANTS STGD1 TRP-18 AND CYS-212</scope>
    <scope>VARIANT ASP-1817</scope>
</reference>
<reference key="4">
    <citation type="journal article" date="1998" name="Hum. Genet.">
        <title>Mapping of the rod photoreceptor ABC transporter (ABCR) to 1p21-p22.1 and identification of novel mutations in Stargardt's disease.</title>
        <authorList>
            <person name="Nasonkin I."/>
            <person name="Illing M."/>
            <person name="Koehler M.R."/>
            <person name="Schmid M."/>
            <person name="Molday R.S."/>
            <person name="Weber B.H.F."/>
        </authorList>
    </citation>
    <scope>NUCLEOTIDE SEQUENCE [MRNA]</scope>
    <scope>VARIANTS STGD1</scope>
</reference>
<reference key="5">
    <citation type="submission" date="2005-03" db="EMBL/GenBank/DDBJ databases">
        <title>Preparation of a set of expression-ready clones of mammalian long cDNAs encoding large proteins by the ORF trap cloning method.</title>
        <authorList>
            <person name="Nakajima D."/>
            <person name="Saito K."/>
            <person name="Yamakawa H."/>
            <person name="Kikuno R.F."/>
            <person name="Nakayama M."/>
            <person name="Ohara R."/>
            <person name="Okazaki N."/>
            <person name="Koga H."/>
            <person name="Nagase T."/>
            <person name="Ohara O."/>
        </authorList>
    </citation>
    <scope>NUCLEOTIDE SEQUENCE [LARGE SCALE MRNA]</scope>
    <scope>VARIANT GLN-943</scope>
    <source>
        <tissue>Brain</tissue>
    </source>
</reference>
<reference key="6">
    <citation type="journal article" date="2006" name="Nature">
        <title>The DNA sequence and biological annotation of human chromosome 1.</title>
        <authorList>
            <person name="Gregory S.G."/>
            <person name="Barlow K.F."/>
            <person name="McLay K.E."/>
            <person name="Kaul R."/>
            <person name="Swarbreck D."/>
            <person name="Dunham A."/>
            <person name="Scott C.E."/>
            <person name="Howe K.L."/>
            <person name="Woodfine K."/>
            <person name="Spencer C.C.A."/>
            <person name="Jones M.C."/>
            <person name="Gillson C."/>
            <person name="Searle S."/>
            <person name="Zhou Y."/>
            <person name="Kokocinski F."/>
            <person name="McDonald L."/>
            <person name="Evans R."/>
            <person name="Phillips K."/>
            <person name="Atkinson A."/>
            <person name="Cooper R."/>
            <person name="Jones C."/>
            <person name="Hall R.E."/>
            <person name="Andrews T.D."/>
            <person name="Lloyd C."/>
            <person name="Ainscough R."/>
            <person name="Almeida J.P."/>
            <person name="Ambrose K.D."/>
            <person name="Anderson F."/>
            <person name="Andrew R.W."/>
            <person name="Ashwell R.I.S."/>
            <person name="Aubin K."/>
            <person name="Babbage A.K."/>
            <person name="Bagguley C.L."/>
            <person name="Bailey J."/>
            <person name="Beasley H."/>
            <person name="Bethel G."/>
            <person name="Bird C.P."/>
            <person name="Bray-Allen S."/>
            <person name="Brown J.Y."/>
            <person name="Brown A.J."/>
            <person name="Buckley D."/>
            <person name="Burton J."/>
            <person name="Bye J."/>
            <person name="Carder C."/>
            <person name="Chapman J.C."/>
            <person name="Clark S.Y."/>
            <person name="Clarke G."/>
            <person name="Clee C."/>
            <person name="Cobley V."/>
            <person name="Collier R.E."/>
            <person name="Corby N."/>
            <person name="Coville G.J."/>
            <person name="Davies J."/>
            <person name="Deadman R."/>
            <person name="Dunn M."/>
            <person name="Earthrowl M."/>
            <person name="Ellington A.G."/>
            <person name="Errington H."/>
            <person name="Frankish A."/>
            <person name="Frankland J."/>
            <person name="French L."/>
            <person name="Garner P."/>
            <person name="Garnett J."/>
            <person name="Gay L."/>
            <person name="Ghori M.R.J."/>
            <person name="Gibson R."/>
            <person name="Gilby L.M."/>
            <person name="Gillett W."/>
            <person name="Glithero R.J."/>
            <person name="Grafham D.V."/>
            <person name="Griffiths C."/>
            <person name="Griffiths-Jones S."/>
            <person name="Grocock R."/>
            <person name="Hammond S."/>
            <person name="Harrison E.S.I."/>
            <person name="Hart E."/>
            <person name="Haugen E."/>
            <person name="Heath P.D."/>
            <person name="Holmes S."/>
            <person name="Holt K."/>
            <person name="Howden P.J."/>
            <person name="Hunt A.R."/>
            <person name="Hunt S.E."/>
            <person name="Hunter G."/>
            <person name="Isherwood J."/>
            <person name="James R."/>
            <person name="Johnson C."/>
            <person name="Johnson D."/>
            <person name="Joy A."/>
            <person name="Kay M."/>
            <person name="Kershaw J.K."/>
            <person name="Kibukawa M."/>
            <person name="Kimberley A.M."/>
            <person name="King A."/>
            <person name="Knights A.J."/>
            <person name="Lad H."/>
            <person name="Laird G."/>
            <person name="Lawlor S."/>
            <person name="Leongamornlert D.A."/>
            <person name="Lloyd D.M."/>
            <person name="Loveland J."/>
            <person name="Lovell J."/>
            <person name="Lush M.J."/>
            <person name="Lyne R."/>
            <person name="Martin S."/>
            <person name="Mashreghi-Mohammadi M."/>
            <person name="Matthews L."/>
            <person name="Matthews N.S.W."/>
            <person name="McLaren S."/>
            <person name="Milne S."/>
            <person name="Mistry S."/>
            <person name="Moore M.J.F."/>
            <person name="Nickerson T."/>
            <person name="O'Dell C.N."/>
            <person name="Oliver K."/>
            <person name="Palmeiri A."/>
            <person name="Palmer S.A."/>
            <person name="Parker A."/>
            <person name="Patel D."/>
            <person name="Pearce A.V."/>
            <person name="Peck A.I."/>
            <person name="Pelan S."/>
            <person name="Phelps K."/>
            <person name="Phillimore B.J."/>
            <person name="Plumb R."/>
            <person name="Rajan J."/>
            <person name="Raymond C."/>
            <person name="Rouse G."/>
            <person name="Saenphimmachak C."/>
            <person name="Sehra H.K."/>
            <person name="Sheridan E."/>
            <person name="Shownkeen R."/>
            <person name="Sims S."/>
            <person name="Skuce C.D."/>
            <person name="Smith M."/>
            <person name="Steward C."/>
            <person name="Subramanian S."/>
            <person name="Sycamore N."/>
            <person name="Tracey A."/>
            <person name="Tromans A."/>
            <person name="Van Helmond Z."/>
            <person name="Wall M."/>
            <person name="Wallis J.M."/>
            <person name="White S."/>
            <person name="Whitehead S.L."/>
            <person name="Wilkinson J.E."/>
            <person name="Willey D.L."/>
            <person name="Williams H."/>
            <person name="Wilming L."/>
            <person name="Wray P.W."/>
            <person name="Wu Z."/>
            <person name="Coulson A."/>
            <person name="Vaudin M."/>
            <person name="Sulston J.E."/>
            <person name="Durbin R.M."/>
            <person name="Hubbard T."/>
            <person name="Wooster R."/>
            <person name="Dunham I."/>
            <person name="Carter N.P."/>
            <person name="McVean G."/>
            <person name="Ross M.T."/>
            <person name="Harrow J."/>
            <person name="Olson M.V."/>
            <person name="Beck S."/>
            <person name="Rogers J."/>
            <person name="Bentley D.R."/>
        </authorList>
    </citation>
    <scope>NUCLEOTIDE SEQUENCE [LARGE SCALE GENOMIC DNA]</scope>
</reference>
<reference key="7">
    <citation type="journal article" date="2007" name="BMC Genomics">
        <title>Mapping of transcription start sites of human retina expressed genes.</title>
        <authorList>
            <person name="Roni V."/>
            <person name="Carpio R."/>
            <person name="Wissinger B."/>
        </authorList>
    </citation>
    <scope>NUCLEOTIDE SEQUENCE [LARGE SCALE MRNA] OF 1-29</scope>
    <source>
        <tissue>Retina</tissue>
    </source>
</reference>
<reference key="8">
    <citation type="journal article" date="1999" name="J. Biol. Chem.">
        <title>Retinal stimulates ATP hydrolysis by purified and reconstituted ABCR, the photoreceptor-specific ATP-binding cassette transporter responsible for Stargardt disease.</title>
        <authorList>
            <person name="Sun H."/>
            <person name="Molday R.S."/>
            <person name="Nathans J."/>
        </authorList>
    </citation>
    <scope>FUNCTION</scope>
    <scope>SUBCELLULAR LOCATION</scope>
</reference>
<reference key="9">
    <citation type="journal article" date="1998" name="Hum. Mol. Genet.">
        <title>Autosomal recessive retinitis pigmentosa and cone-rod dystrophy caused by splice site mutations in the Stargardt's disease gene ABCR.</title>
        <authorList>
            <person name="Cremers F.P.M."/>
            <person name="van de Pol D.J.R."/>
            <person name="van Driel M.A."/>
            <person name="den Hollander A.I."/>
            <person name="van Haren F.J.J."/>
            <person name="Knoers N.V.A.M."/>
            <person name="Tijmes N."/>
            <person name="Bergen A.A.B."/>
            <person name="Rohrschneider K."/>
            <person name="Blankenagel A."/>
            <person name="Pinckers A.J.L.G."/>
            <person name="Deutman A.F."/>
            <person name="Hoyng C.B."/>
        </authorList>
    </citation>
    <scope>INVOLVEMENT IN RP19</scope>
</reference>
<reference key="10">
    <citation type="journal article" date="2001" name="J. Biol. Chem.">
        <title>Membrane topology of the ATP binding cassette transporter ABCR and its relationship to ABC1 and related ABCA transporters: identification of N-linked glycosylation sites.</title>
        <authorList>
            <person name="Bungert S."/>
            <person name="Molday L.L."/>
            <person name="Molday R.S."/>
        </authorList>
    </citation>
    <scope>MEMBRANE TOPOLOGY</scope>
    <scope>GLYCOSYLATION AT ASN-98; ASN-415; ASN-444; ASN-504; ASN-1469; ASN-1529; ASN-1588 AND ASN-1662</scope>
</reference>
<reference key="11">
    <citation type="journal article" date="2010" name="J. Biol. Chem.">
        <title>Interaction of extracellular domain 2 of the human retina-specific ATP-binding cassette transporter (ABCA4) with all-trans-retinal.</title>
        <authorList>
            <person name="Biswas-Fiss E.E."/>
            <person name="Kurpad D.S."/>
            <person name="Joshi K."/>
            <person name="Biswas S.B."/>
        </authorList>
    </citation>
    <scope>DOMAIN</scope>
    <scope>FUNCTION</scope>
    <scope>VARIANTS STGD1 LEU-1408; HIS-1443 AND ARG-1488</scope>
    <scope>CHARACTERIZATION OF VARIANTS STGD1 LEU-1408; HIS-1443 AND ARG-1488</scope>
</reference>
<reference key="12">
    <citation type="journal article" date="2012" name="J. Biol. Chem.">
        <title>Retinoid binding properties of nucleotide binding domain 1 of the Stargardt disease-associated ATP binding cassette (ABC) transporter, ABCA4.</title>
        <authorList>
            <person name="Biswas-Fiss E.E."/>
            <person name="Affet S."/>
            <person name="Ha M."/>
            <person name="Biswas S.B."/>
        </authorList>
    </citation>
    <scope>DOMAIN</scope>
    <scope>FUNCTION</scope>
    <scope>VARIANT STGD1 ALA-863</scope>
    <scope>CHARACTERIZATION OF VARIANT STGD1 ALA-863</scope>
    <scope>MUTAGENESIS OF PRO-940</scope>
    <scope>VARIANT GLN-943</scope>
</reference>
<reference key="13">
    <citation type="journal article" date="2012" name="Nat. Commun.">
        <title>ABCA4 is an N-retinylidene-phosphatidylethanolamine and phosphatidylethanolamine importer.</title>
        <authorList>
            <person name="Quazi F."/>
            <person name="Lenevich S."/>
            <person name="Molday R.S."/>
        </authorList>
    </citation>
    <scope>FUNCTION</scope>
    <scope>CATALYTIC ACTIVITY</scope>
    <scope>MUTAGENESIS OF LYS-969 AND LYS-1978</scope>
    <scope>VARIANTS STGD1 ALA-863 AND SER-965</scope>
    <scope>CHARACTERIZATION OF VARIANTS STGD1 ALA-863 AND SER-965</scope>
</reference>
<reference key="14">
    <citation type="journal article" date="2013" name="J. Biol. Chem.">
        <title>Differential phospholipid substrates and directional transport by ATP-binding cassette proteins ABCA1, ABCA7, and ABCA4 and disease-causing mutants.</title>
        <authorList>
            <person name="Quazi F."/>
            <person name="Molday R.S."/>
        </authorList>
    </citation>
    <scope>CATALYTIC ACTIVITY</scope>
    <scope>ACTIVITY REGULATION</scope>
    <scope>FUNCTION</scope>
    <scope>SUBCELLULAR LOCATION</scope>
    <scope>VARIANTS STGD1 PRO-100; LEU-608; ILE-959; SER-965 AND MET-1537</scope>
    <scope>CHARACTERIZATION OF VARIANTS STGD1 PRO-100; LEU-608; ILE-959; SER-965 AND MET-1537</scope>
    <scope>MUTAGENESIS OF CYS-1502; ARG-2107 AND PRO-2180</scope>
</reference>
<reference key="15">
    <citation type="journal article" date="2019" name="Biochem. Biophys. Res. Commun.">
        <title>Functional significance of the conserved C-Terminal VFVNFA motif in the retina-specific ABC transporter, ABCA4, and its role in inherited visual disease.</title>
        <authorList>
            <person name="Patel M.J."/>
            <person name="Biswas S.B."/>
            <person name="Biswas-Fiss E.E."/>
        </authorList>
    </citation>
    <scope>REGION</scope>
</reference>
<reference evidence="64 65" key="16">
    <citation type="journal article" date="2021" name="Elife">
        <title>Molecular structures of the eukaryotic retinal importer ABCA4.</title>
        <authorList>
            <person name="Liu F."/>
            <person name="Lee J."/>
            <person name="Chen J."/>
        </authorList>
    </citation>
    <scope>STRUCTURE BY ELECTRON MICROSCOPY (3.27 ANGSTROMS) IN COMPLEX WITH ATP AND MG(2+)</scope>
    <scope>FUNCTION</scope>
    <scope>CATALYTIC ACTIVITY</scope>
    <scope>BIOPHYSICOCHEMICAL PROPERTIES</scope>
    <scope>DISULFIDE BOND</scope>
    <scope>GLYCOSYLATION AT ASN-98; ASN-415; ASN-444; ASN-504; ASN-1469; ASN-1529; ASN-1588 AND ASN-1662</scope>
    <scope>MUTAGENESIS OF GLU-1087 AND GLU-2096</scope>
</reference>
<reference evidence="66 67" key="17">
    <citation type="journal article" date="2021" name="Nat. Commun.">
        <title>Cryo-EM structures of the ABCA4 importer reveal mechanisms underlying substrate binding and Stargardt disease.</title>
        <authorList>
            <person name="Scortecci J.F."/>
            <person name="Molday L.L."/>
            <person name="Curtis S.B."/>
            <person name="Garces F.A."/>
            <person name="Panwar P."/>
            <person name="Van Petegem F."/>
            <person name="Molday R.S."/>
        </authorList>
    </citation>
    <scope>STRUCTURE BY ELECTRON MICROSCOPY (2.92 ANGSTROMS) IN UNBOUND STATE AND IN COMPLEX WITH N-ALL-TRANS-RETINYLIDENEPHOSPHATIDYLETHANOLAMINE AND MG(2+)</scope>
    <scope>DISULFIDE BONDS</scope>
    <scope>BIOPHYSICOCHEMICAL PROPERTIES</scope>
    <scope>MUTAGENESIS OF TYR-345 AND ARG-587</scope>
    <scope>CHARACTERIZATION OF VARIANTS GLY-339 AND CYS-653</scope>
</reference>
<reference evidence="68" key="18">
    <citation type="journal article" date="2024" name="J. Biol. Chem.">
        <title>Structural and functional characterization of the nucleotide-binding domains of ABCA4 and their role in Stargardt disease.</title>
        <authorList>
            <person name="Scortecci J.F."/>
            <person name="Garces F.A."/>
            <person name="Mahto J.K."/>
            <person name="Molday L.L."/>
            <person name="Van Petegem F."/>
            <person name="Molday R.S."/>
        </authorList>
    </citation>
    <scope>STRUCTURE BY ELECTRON MICROSCOPY (3.95 ANGSTROMS) IN COMPLEX WITH ATP ANALOG AND MG(2+)</scope>
    <scope>FUNCTION</scope>
    <scope>CATALYTIC ACTIVITY</scope>
    <scope>BIOPHYSICOCHEMICAL PROPERTIES</scope>
    <scope>MUTAGENESIS OF ASN-965; GLU-1087; ASN-1974 AND GLU-2096</scope>
    <scope>CHARACTERIZATION OF VARIANTS TYR-965 AND ASP-1087</scope>
</reference>
<reference key="19">
    <citation type="journal article" date="1997" name="Science">
        <title>Mutation of the Stargardt disease gene (ABCR) in age-related macular degeneration.</title>
        <authorList>
            <person name="Allikmets R."/>
            <person name="Shroyer N.F."/>
            <person name="Singh N."/>
            <person name="Seddon J.M."/>
            <person name="Lewis R.A."/>
            <person name="Bernstein P.S."/>
            <person name="Peiffer A."/>
            <person name="Zabriskie N.A."/>
            <person name="Li Y."/>
            <person name="Hutchinson A."/>
            <person name="Dean M."/>
            <person name="Lupski J.R."/>
            <person name="Leppert M."/>
        </authorList>
    </citation>
    <scope>VARIANTS ARMD2 LYS-471; LEU-1129; SER-1517; THR-1562; ARG-1578; HIS-1898 AND PHE-1970</scope>
    <scope>VARIANTS STGD1 HIS-846 AND ALA-863</scope>
    <scope>VARIANTS GLY-643; GLN-943; MET-1428; GLU-1961; ASN-2177 AND ILE-2255</scope>
</reference>
<reference key="20">
    <citation type="journal article" date="1998" name="Eur. J. Hum. Genet.">
        <title>Spectrum of ABCR gene mutations in autosomal recessive macular dystrophies.</title>
        <authorList>
            <person name="Rozet J.-M."/>
            <person name="Gerber S."/>
            <person name="Souied E."/>
            <person name="Perrault I."/>
            <person name="Chatelin S."/>
            <person name="Ghazi I."/>
            <person name="Leowski C."/>
            <person name="Dufier J.-L."/>
            <person name="Munnich A."/>
            <person name="Kaplan J."/>
        </authorList>
    </citation>
    <scope>VARIANTS STGD1 TRP-18; CYS-212; HIS-636; MET-1019; VAL-1038; CYS-1108; TRP-1640; SER-1977 AND HIS-2107</scope>
    <scope>VARIANTS FFM PRO-11; PRO-541; VAL-1038; GLU-1091; CYS-1508; PHE-1970 AND ARG-1971</scope>
</reference>
<reference key="21">
    <citation type="journal article" date="1999" name="Am. J. Hum. Genet.">
        <title>Genotype/phenotype analysis of a photoreceptor-specific ATP-binding cassette transporter gene, ABCR, in Stargardt disease.</title>
        <authorList>
            <person name="Lewis R.A."/>
            <person name="Shroyer N.F."/>
            <person name="Singh N."/>
            <person name="Allikmets R."/>
            <person name="Hutchinson A."/>
            <person name="Li Y."/>
            <person name="Lupski J.R."/>
            <person name="Leppert M."/>
            <person name="Dean M."/>
        </authorList>
    </citation>
    <scope>VARIANTS STGD1 ARG-68; GLY-75; GLY-249; CYS-336; GLU-523; ILE-608; ARG-821; HIS-846; ASP-851; VAL-1038; LEU-1071; ALA-1072; CYS-1129; LEU-1129; TYR-1406; LEU-1408; ASP-1439; SER-1440; ARG-1488; ASN-1696; 1761-PRO--LEU-1763 DEL; PRO-1820; TYR-1838; TRP-1843; GLU-1886 AND GLU-1961</scope>
    <scope>REVIEW</scope>
</reference>
<reference key="22">
    <citation type="journal article" date="1999" name="Am. J. Hum. Genet.">
        <title>The 2588G--&gt;C mutation in the ABCR gene is a mild frequent founder mutation in the western European population and allows the classification of ABCR Mutations in patients with Stargardt disease.</title>
        <authorList>
            <person name="Maugeri A."/>
            <person name="van Driel M.A."/>
            <person name="van de Pol D.J.R."/>
            <person name="Klevering B.J."/>
            <person name="van Haren F.J.J."/>
            <person name="Tijmes N."/>
            <person name="Bergen A.A.B."/>
            <person name="Rohrschneider K."/>
            <person name="Blankenagel A."/>
            <person name="Pinckers A.J.L.G."/>
            <person name="Dahl N."/>
            <person name="Brunner H.G."/>
            <person name="Deutman A.F."/>
            <person name="Hoyng C.B."/>
            <person name="Cremers F.P.M."/>
        </authorList>
    </citation>
    <scope>VARIANTS STGD1 ARG-957; ASN-1112; PRO-1631 AND ASP-1794</scope>
</reference>
<reference key="23">
    <citation type="journal article" date="1999" name="Am. J. Ophthalmol.">
        <title>A novel mutation in the ABCR gene in four patients with autosomal recessive Stargardt disease.</title>
        <authorList>
            <person name="Zhang K."/>
            <person name="Garibaldi D.C."/>
            <person name="Kniazeva M."/>
            <person name="Albini T."/>
            <person name="Chiang M.F."/>
            <person name="Kerrigan M."/>
            <person name="Sunness J.S."/>
            <person name="Han M."/>
            <person name="Allikmets R."/>
        </authorList>
    </citation>
    <scope>VARIANT STGD1 TYR-54</scope>
    <scope>VARIANT ALA-863</scope>
</reference>
<reference key="24">
    <citation type="journal article" date="1999" name="Arch. Ophthalmol.">
        <title>Variation of clinical expression in patients with Stargardt dystrophy and sequence variations in the ABCR gene.</title>
        <authorList>
            <person name="Fishman G.A."/>
            <person name="Stone E.M."/>
            <person name="Grover S."/>
            <person name="Derlacki D.J."/>
            <person name="Haines H.L."/>
            <person name="Hockey R.R."/>
        </authorList>
    </citation>
    <scope>VARIANTS STGD1 VAL-60; ARG-206; ASN-300; PRO-541; ALA-849; PRO-974; VAL-1038; CYS-1108; LEU-1408; ARG-1488; ASP-1652; PRO-1729; GLU-1961; TRP-2038; TRP-2077; HIS-2107; ARG-2128 AND TYR-2150</scope>
</reference>
<reference key="25">
    <citation type="journal article" date="2000" name="Am. J. Hum. Genet.">
        <title>Further evidence for an association of ABCR alleles with age-related macular degeneration.</title>
        <authorList>
            <person name="Allikmets R."/>
            <person name="Tammur J."/>
            <person name="Hutchinson A."/>
            <person name="Lewis R.A."/>
            <person name="Shroyer N.F."/>
            <person name="Dalakishvili K."/>
            <person name="Lupski J.R."/>
            <person name="Steiner K."/>
            <person name="Pauleikhoff D."/>
            <person name="Holz F.G."/>
            <person name="Weber B.H.F."/>
            <person name="Dean M."/>
            <person name="Atkinson A."/>
            <person name="Gail M.H."/>
            <person name="Bernstein P.S."/>
            <person name="Singh N."/>
            <person name="Peiffer A."/>
            <person name="Zabriskie N.A."/>
            <person name="Leppert M."/>
            <person name="Seddon J.M."/>
            <person name="Zhang K."/>
            <person name="Sunness J.S."/>
            <person name="Udar N.S."/>
            <person name="Yelchits S."/>
            <person name="Silva-Garcia R."/>
            <person name="Small K.W."/>
            <person name="Simonelli F."/>
            <person name="Testa F."/>
            <person name="D'Urso M."/>
            <person name="Brancato R."/>
            <person name="Rinaldi E."/>
            <person name="Ingvast S."/>
            <person name="Taube A."/>
            <person name="Wadelius C."/>
            <person name="Souied E."/>
            <person name="Ducroq D."/>
            <person name="Kaplan J."/>
            <person name="Assink J.J.M."/>
            <person name="ten Brink J.B."/>
            <person name="de Jong P.T.V.M."/>
            <person name="Bergen A.A.B."/>
            <person name="Maugeri A."/>
            <person name="van Driel M.A."/>
            <person name="Hoyng C.B."/>
            <person name="Cremers F.P.M."/>
            <person name="Paloma E."/>
            <person name="Coco R."/>
            <person name="Balcells S."/>
            <person name="Gonzalez-Duarte R."/>
            <person name="Kermani S."/>
            <person name="Stanga P."/>
            <person name="Bhattacharya S.S."/>
            <person name="Bird A.C."/>
        </authorList>
    </citation>
    <scope>VARIANTS GLU-1961 AND ASN-2177</scope>
</reference>
<reference key="26">
    <citation type="journal article" date="2000" name="Am. J. Hum. Genet.">
        <title>A comprehensive survey of sequence variation in the ABCA4 (ABCR) gene in Stargardt disease and age-related macular degeneration.</title>
        <authorList>
            <person name="Rivera A."/>
            <person name="White K."/>
            <person name="Stoehr H."/>
            <person name="Steiner K."/>
            <person name="Hemmrich N."/>
            <person name="Grimm T."/>
            <person name="Jurklies B."/>
            <person name="Lorenz B."/>
            <person name="Scholl H.P.N."/>
            <person name="Apfelstedt-Sylla E."/>
            <person name="Weber B.H.F."/>
        </authorList>
    </citation>
    <scope>VARIANTS STGD1 GLU-60; THR-60; GLU-65; LEU-68; ARG-72; CYS-212; SER-230; SER-247; VAL-328; LYS-471; PRO-541; GLN-572; ARG-607; LYS-635; CYS-653; TYR-764; ARG-765; ALA-901; ILE-959; LYS-1036; VAL-1038; PRO-1063; ASP-1087; CYS-1097; CYS-1108; LEU-1380; LYS-1399; PRO-1430; VAL-1440; HIS-1443; LEU-1486; TYR-1488; MET-1537; PRO-1689; LEU-1705; THR-1733; ARG-1748; PRO-1763; LYS-1885; HIS-1898; GLU-1961; ARG-1975; SER-1977; GLY-2077; TRP-2077 AND VAL-2241</scope>
    <scope>VARIANTS GLN-152; HIS-212; ARG-423; ILE-552; ARG-914; GLN-943; THR-1562; ILE-1868; MET-1921; LEU-1948; PHE-1970; ALA-2059; ASN-2177 AND VAL-2216</scope>
</reference>
<reference key="27">
    <citation type="journal article" date="2000" name="Am. J. Hum. Genet.">
        <title>Mutations in the ABCA4 (ABCR) gene are the major cause of autosomal recessive cone-rod dystrophy.</title>
        <authorList>
            <person name="Maugeri A."/>
            <person name="Klevering B.J."/>
            <person name="Rohrschneider K."/>
            <person name="Blankenagel A."/>
            <person name="Brunner H.G."/>
            <person name="Deutman A.F."/>
            <person name="Hoyng C.B."/>
            <person name="Cremers F.P.M."/>
        </authorList>
    </citation>
    <scope>VARIANTS CORD3 GLU-65; CYS-212; PRO-541; ALA-863; VAL-1038; LYS-1122; TYR-1490 AND ASP-1598</scope>
</reference>
<reference key="28">
    <citation type="journal article" date="2000" name="Hum. Genet.">
        <title>Complex inheritance of ABCR mutations in Stargardt disease: linkage disequilibrium, complex alleles, and pseudodominance.</title>
        <authorList>
            <person name="Shroyer N.F."/>
            <person name="Lewis R.A."/>
            <person name="Lupski J.R."/>
        </authorList>
    </citation>
    <scope>VARIANTS STGD1 ASP-340; GLN-572; ALA-863; SER-965; VAL-1038; ALA-1780 AND HIS-1898</scope>
    <scope>VARIANT GLN-943</scope>
</reference>
<reference key="29">
    <citation type="journal article" date="2000" name="Invest. Ophthalmol. Vis. Sci.">
        <title>An analysis of ABCR mutations in British patients with recessive retinal dystrophies.</title>
        <authorList>
            <person name="Papaioannou M."/>
            <person name="Ocaka L."/>
            <person name="Bessant D."/>
            <person name="Lois N."/>
            <person name="Bird A.C."/>
            <person name="Payne A."/>
            <person name="Bhattacharya S.S."/>
        </authorList>
    </citation>
    <scope>VARIANTS GLN-943 AND SER-1948</scope>
    <scope>VARIANTS STGD1 TYR-54; ASP-96; HIS-96; VAL-156; VAL-407; ALA-424; ARG-445; TRP-602; 779-CYS--ASP-2273 DEL; ALA-863; ALA-1429; TRP-1640; GLU-1703; 1779-TYR--ASP-2273 DEL AND ARG-2160</scope>
    <scope>VARIANTS CORD3 VAL-407; 2030-ARG--ASP-2273 DEL AND TYR-2150</scope>
    <scope>VARIANT RP19 ALA-424</scope>
</reference>
<reference key="30">
    <citation type="journal article" date="2000" name="Invest. Ophthalmol. Vis. Sci.">
        <title>New ABCR mutations and clinical phenotype in Italian patients with Stargardt disease.</title>
        <authorList>
            <person name="Simonelli F."/>
            <person name="Testa F."/>
            <person name="de Crecchio G."/>
            <person name="Rinaldi E."/>
            <person name="Hutchinson A."/>
            <person name="Atkinson A."/>
            <person name="Dean M."/>
            <person name="D'Urso M."/>
            <person name="Allikmets R."/>
        </authorList>
    </citation>
    <scope>VARIANTS STGD1 CYS-212; ASP-767; ILE-897; VAL-1038; LYS-1087; LYS-1399; GLN-1640 AND GLU-1961</scope>
    <scope>VARIANT HIS-212</scope>
</reference>
<reference key="31">
    <citation type="journal article" date="2000" name="Nat. Genet.">
        <title>Biochemical defects in ABCR protein variants associated with human retinopathies.</title>
        <authorList>
            <person name="Sun H."/>
            <person name="Smallwood P.M."/>
            <person name="Nathans J."/>
        </authorList>
    </citation>
    <scope>CHARACTERIZATION OF VARIANTS</scope>
    <scope>MUTAGENESIS OF GLY-863; GLY-966; LYS-969; GLY-1975 AND LYS-1978</scope>
</reference>
<reference key="32">
    <citation type="journal article" date="2001" name="Acta Ophthalmol. Scand.">
        <title>Different clinical expressions in two families with Stargardt's macular dystrophy (STGD1).</title>
        <authorList>
            <person name="Eksandh L."/>
            <person name="Ekstroem U."/>
            <person name="Abrahamson M."/>
            <person name="Bauer B."/>
            <person name="Andreasson S."/>
        </authorList>
    </citation>
    <scope>VARIANT STGD1 ASN-972</scope>
    <scope>VARIANTS GLN-943; ILE-1868 AND LEU-1948</scope>
</reference>
<reference key="33">
    <citation type="journal article" date="2001" name="Am. J. Ophthalmol.">
        <title>Analysis of the ABCR (ABCA4) gene in 4-aminoquinoline retinopathy: is retinal toxicity by chloroquine and hydroxychloroquine related to Stargardt disease?</title>
        <authorList>
            <person name="Shroyer N.F."/>
            <person name="Lewis R.A."/>
            <person name="Lupski J.R."/>
        </authorList>
    </citation>
    <scope>VARIANTS RETINAL TOXICITY CYS-1129; ARG-1201 AND HIS-2107</scope>
    <scope>VARIANTS HIS-212; ARG-423; ILE-1868 AND ILE-2255</scope>
</reference>
<reference key="34">
    <citation type="journal article" date="2001" name="Arch. Ophthalmol.">
        <title>Variation of codons 1961 and 2177 of the Stargardt disease gene is not associated with age-related macular degeneration.</title>
        <authorList>
            <person name="Guymer R.H."/>
            <person name="Heon E."/>
            <person name="Lotery A.J."/>
            <person name="Munier F.L."/>
            <person name="Schorderet D.F."/>
            <person name="Baird P.N."/>
            <person name="McNeil R.J."/>
            <person name="Haines H.L."/>
            <person name="Sheffield V.C."/>
            <person name="Stone E.M."/>
        </authorList>
    </citation>
    <scope>VARIANTS GLU-1961 AND ASN-2177</scope>
</reference>
<reference key="35">
    <citation type="journal article" date="2001" name="Hum. Genet.">
        <title>Late-onset Stargardt disease is associated with missense mutations that map outside known functional regions of ABCR (ABCA4).</title>
        <authorList>
            <person name="Yatsenko A.N."/>
            <person name="Shroyer N.F."/>
            <person name="Lewis R.A."/>
            <person name="Lupski J.R."/>
        </authorList>
    </citation>
    <scope>VARIANTS FFM GLY-339; ALA-863; TRP-943; ARG-991; VAL-1038; CYS-1108; ARG-1488; THR-1562; GLN-1640; PHE-2027; GLN-2030 AND CYS-2106</scope>
    <scope>VARIANTS HIS-212; ARG-423; GLN-943; THR-1148; ILE-1868 AND ILE-2255</scope>
</reference>
<reference key="36">
    <citation type="journal article" date="2001" name="Hum. Mutat.">
        <title>Spectrum of ABCA4 (ABCR) gene mutations in Spanish patients with autosomal recessive macular dystrophies.</title>
        <authorList>
            <person name="Paloma E."/>
            <person name="Martinez-Mir A."/>
            <person name="Vilageliu L."/>
            <person name="Gonzalez-Duarte R."/>
            <person name="Balcells S."/>
        </authorList>
    </citation>
    <scope>VARIANTS STGD1 SER-686; TRP-1055; CYS-1108; ASP-1799; ASP-1805 AND PRO-1940</scope>
    <scope>VARIANTS FFM MET-1253 AND PRO-1940</scope>
    <scope>VARIANTS CORD3 CYS-212 AND ARG-2060</scope>
    <scope>VARIANTS GLN-943; LEU-1948 AND ILE-2255</scope>
</reference>
<reference key="37">
    <citation type="journal article" date="2001" name="Invest. Ophthalmol. Vis. Sci.">
        <title>An analysis of allelic variation in the ABCA4 gene.</title>
        <authorList>
            <person name="Webster A.R."/>
            <person name="Heon E."/>
            <person name="Lotery A.J."/>
            <person name="Vandenburgh K."/>
            <person name="Casavant T.L."/>
            <person name="Oh K.T."/>
            <person name="Beck G."/>
            <person name="Fishman G.A."/>
            <person name="Lam B.L."/>
            <person name="Levin A."/>
            <person name="Heckenlively J.R."/>
            <person name="Jacobson S.G."/>
            <person name="Weleber R.G."/>
            <person name="Sheffield V.C."/>
            <person name="Stone E.M."/>
        </authorList>
    </citation>
    <scope>VARIANTS STGD1 PRO-100; THR-192; CYS-220; TRP-333; TRP-607; MET-716; TYR-764; ASN-765; THR-854; LEU-873; ASN-971; ALA-1019; GLU-1031; PRO-1250; LEU-1408; PHE-1488; ARG-1513; PRO-1525; ILE-1693; PRO-1736; GLU-1884; ASP-1896; PHE-2071; PRO-2229 AND LEU-2263</scope>
    <scope>VARIANT THR-1314</scope>
    <scope>REVIEW</scope>
</reference>
<reference key="38">
    <citation type="journal article" date="2001" name="Invest. Ophthalmol. Vis. Sci.">
        <title>Mutations in ABCR (ABCA4) in patients with Stargardt macular degeneration or cone-rod degeneration.</title>
        <authorList>
            <person name="Briggs C.E."/>
            <person name="Rucinski D."/>
            <person name="Rosenfeld P.J."/>
            <person name="Hirose T."/>
            <person name="Berson E.L."/>
            <person name="Dryja T.P."/>
        </authorList>
    </citation>
    <scope>VARIANTS STGD1 13-LYS--TRP-15 DEL; TYR-54; LYS-58; VAL-60; GLU-65; GLU-77; HIS-190; PRO-244; ARG-309; CYS-525; CYS-537; PRO-541; PRO-549; ARG-550; GLN-602; ARG-607; MET-643; ASP-767; PRO-797; ARG-821; THR-824; ALA-863; ALA-935; TRP-943; ALA-989; VAL-1038; CYS-1108; LEU-1108; LYS-1122; ARG-1201; GLN-1300; LEU-1380; PRO-1388; ARG-1408; LEU-1486; ARG-1488; TYR-1490; MET-1526; ASN-1532; THR-1562; TRP-1640; LEU-1776; THR-1846; GLU-1961; SER-1977; PHE-2027; GLN-2030; PRO-2035; LEU-2050; CYS-2107; HIS-2107; TRP-2139; ARG-2150 AND TYR-2150</scope>
    <scope>VARIANTS CORD3 GLN-1640 AND ASP-2146</scope>
    <scope>VARIANTS HIS-212; ARG-423; GLN-943; THR-1637; ILE-1868 AND LEU-1948</scope>
</reference>
<reference key="39">
    <citation type="journal article" date="2002" name="J. Hum. Genet.">
        <title>Catalog of 605 single-nucleotide polymorphisms (SNPs) among 13 genes encoding human ATP-binding cassette transporters: ABCA4, ABCA7, ABCA8, ABCD1, ABCD3, ABCD4, ABCE1, ABCF1, ABCG1, ABCG2, ABCG4, ABCG5, and ABCG8.</title>
        <authorList>
            <person name="Iida A."/>
            <person name="Saito S."/>
            <person name="Sekine A."/>
            <person name="Mishima C."/>
            <person name="Kitamura Y."/>
            <person name="Kondo K."/>
            <person name="Harigae S."/>
            <person name="Osawa S."/>
            <person name="Nakamura Y."/>
        </authorList>
    </citation>
    <scope>VARIANT ARG-423</scope>
</reference>
<reference key="40">
    <citation type="journal article" date="2003" name="Biochemistry">
        <title>Functional analysis of genetic mutations in nucleotide binding domain 2 of the human retina specific ABC transporter.</title>
        <authorList>
            <person name="Biswas-Fiss E.E."/>
        </authorList>
    </citation>
    <scope>CHARACTERIZATION OF VARIANTS ARG-1971; PHE-2027; TRP-2038; ASP-2146 AND ASN-2177</scope>
    <scope>MUTAGENESIS OF LYS-2175</scope>
</reference>
<reference key="41">
    <citation type="journal article" date="2004" name="Clin. Chem.">
        <title>Denaturing HPLC profiling of the ABCA4 gene for reliable detection of allelic variations.</title>
        <authorList>
            <person name="Stenirri S."/>
            <person name="Fermo I."/>
            <person name="Battistella S."/>
            <person name="Galbiati S."/>
            <person name="Soriani N."/>
            <person name="Paroni R."/>
            <person name="Manitto M.P."/>
            <person name="Martina E."/>
            <person name="Brancato R."/>
            <person name="Allikmets R."/>
            <person name="Ferrari M."/>
            <person name="Cremonesi L."/>
        </authorList>
    </citation>
    <scope>VARIANTS STGD1 TRP-18; LYS-96; VAL-108; LEU-143; GLN-152; GLN-223; SER-230; 245-TYR--ASP-2273 DEL; THR-246; GLU-498; PRO-541; ARG-550; GLN-572; 639-TYR--ASP-2273 DEL; SER-641; CYS-653; VAL-690; 700-TRP--ASP-2273 DEL; ASP-767; ARG-821; ALA-863; 876-GLN--ASP-2273 DEL; ILE-897; ASP-954; SER-965; ASP-978; LYS-1022; VAL-1038; ASP-1050; LYS-1087; CYS-1098; PRO-1099; CYS-1108; HIS-1108; LEU-1129; ARG-1203; ASP-1203; ASN-1204; 1300-ARG--ASP-2273 DEL; GLN-1300; TYR-1490; ARG-1512; MET-1526; ASP-1598; 1652-TYR--ASP-2273 DEL; ASP-1762; ASN-1838; TYR-1838; GLU-1961; PHE-1970; PHE-2027; GLN-2030; LEU-2050; HIS-2107; TRP-2139; LEU-2149; TYR-2150; ASN-2177 AND VAL-2241</scope>
    <scope>VARIANTS HIS-212; ARG-423; GLN-943; LEU-1380; ILE-1868 AND LEU-1948</scope>
</reference>
<reference key="42">
    <citation type="journal article" date="2006" name="Science">
        <title>The consensus coding sequences of human breast and colorectal cancers.</title>
        <authorList>
            <person name="Sjoeblom T."/>
            <person name="Jones S."/>
            <person name="Wood L.D."/>
            <person name="Parsons D.W."/>
            <person name="Lin J."/>
            <person name="Barber T.D."/>
            <person name="Mandelker D."/>
            <person name="Leary R.J."/>
            <person name="Ptak J."/>
            <person name="Silliman N."/>
            <person name="Szabo S."/>
            <person name="Buckhaults P."/>
            <person name="Farrell C."/>
            <person name="Meeh P."/>
            <person name="Markowitz S.D."/>
            <person name="Willis J."/>
            <person name="Dawson D."/>
            <person name="Willson J.K.V."/>
            <person name="Gazdar A.F."/>
            <person name="Hartigan J."/>
            <person name="Wu L."/>
            <person name="Liu C."/>
            <person name="Parmigiani G."/>
            <person name="Park B.H."/>
            <person name="Bachman K.E."/>
            <person name="Papadopoulos N."/>
            <person name="Vogelstein B."/>
            <person name="Kinzler K.W."/>
            <person name="Velculescu V.E."/>
        </authorList>
    </citation>
    <scope>VARIANT [LARGE SCALE ANALYSIS] MET-224</scope>
</reference>
<reference key="43">
    <citation type="journal article" date="2008" name="Mol. Vis.">
        <title>Molecular analysis of ABCA4 and CRB1 genes in a Spanish family segregating both Stargardt disease and autosomal recessive retinitis pigmentosa.</title>
        <authorList>
            <person name="Riveiro-Alvarez R."/>
            <person name="Vallespin E."/>
            <person name="Wilke R."/>
            <person name="Garcia-Sandoval B."/>
            <person name="Cantalapiedra D."/>
            <person name="Aguirre-Lamban J."/>
            <person name="Avila-Fernandez A."/>
            <person name="Gimenez A."/>
            <person name="Trujillo-Tiebas M.J."/>
            <person name="Ayuso C."/>
        </authorList>
    </citation>
    <scope>VARIANT STGD1 ASP-1805</scope>
</reference>
<reference key="44">
    <citation type="journal article" date="2009" name="Br. J. Ophthalmol.">
        <title>Molecular analysis of the ABCA4 gene for reliable detection of allelic variations in Spanish patients: identification of 21 novel variants.</title>
        <authorList>
            <person name="Aguirre-Lamban J."/>
            <person name="Riveiro-Alvarez R."/>
            <person name="Maia-Lopes S."/>
            <person name="Cantalapiedra D."/>
            <person name="Vallespin E."/>
            <person name="Avila-Fernandez A."/>
            <person name="Villaverde-Montero C."/>
            <person name="Trujillo-Tiebas M.J."/>
            <person name="Ramos C."/>
            <person name="Ayuso C."/>
        </authorList>
    </citation>
    <scope>VARIANTS STGD1 TRP-602; MET-931; MET-1019; HIS-1108; LEU-1129; LEU-1486; GLN-1640; GLU-1961; SER-1977; PHE-2027 AND HIS-2107</scope>
    <scope>VARIANTS CORD3 LEU-1129 AND ILE-1433</scope>
    <scope>VARIANTS RP19 VAL-156; LEU-1129 AND ILE-1433</scope>
    <scope>VARIANT ILE-552</scope>
</reference>
<reference key="45">
    <citation type="journal article" date="2009" name="Br. J. Ophthalmol.">
        <title>Frequency of ABCA4 mutations in 278 Spanish controls: an insight into the prevalence of autosomal recessive Stargardt disease.</title>
        <authorList>
            <person name="Riveiro-Alvarez R."/>
            <person name="Aguirre-Lamban J."/>
            <person name="Lopez-Martinez M.A."/>
            <person name="Trujillo-Tiebas M.J."/>
            <person name="Cantalapiedra D."/>
            <person name="Vallespin E."/>
            <person name="Avila-Fernandez A."/>
            <person name="Ramos C."/>
            <person name="Ayuso C."/>
        </authorList>
    </citation>
    <scope>VARIANTS STGD1 VAL-156; CYS-212; LYS-380; ARG-550; PRO-572; TRP-602; ARG-607; CYS-653; ASP-767; ILE-897; ALA-901; MET-931; SER-965; MET-1019; HIS-1108; LEU-1129; LEU-1380; ILE-1433; LEU-1486; TYR-1490; GLN-1640; TRP-1640; ARG-1748; ASP-1799; PRO-1940; GLU-1961; SER-1977; PHE-2027; ARG-2060; HIS-2107; TYR-2150 AND VAL-2241</scope>
</reference>
<reference key="46">
    <citation type="journal article" date="2010" name="Eye">
        <title>Novel mutations in of the ABCR gene in Italian patients with Stargardt disease.</title>
        <authorList>
            <person name="Passerini I."/>
            <person name="Sodi A."/>
            <person name="Giambene B."/>
            <person name="Mariottini A."/>
            <person name="Menchini U."/>
            <person name="Torricelli F."/>
        </authorList>
    </citation>
    <scope>VARIANTS STGD1 21-GLN--ASP-2273 DEL; LEU-68; HIS-96; LYS-96; SER-172; CYS-212; LYS-415; PRO-541; 572-ARG--ASP-2273 DEL; LYS-616; CYS-653; VAL-690; 700-TRP--ASP-2273 DEL; ASP-767; ARG-821; ARG-840; MET-931; SER-965; PRO-970; PRO-977; ASP-978; MET-1019; VAL-1038; TRP-1055; GLU-1078; LYS-1087; CYS-1098; 1099-SER--ASP-2273 DEL; CYS-1108; 1177-CYS--ASP-2273 DEL; 1332-GLN--ASP-2273 DEL; LEU-1380; 1408-TRP--ASP-2273 DEL; ILE-1433; 1461-TRP--ASP-2273 DEL; 1479-TRP--ASP-2273 DEL; SER-1484; MET-1526; ASP-1598; ASN-1696; GLU-1961; PHE-1970; SER-1977; 2030-ARG--ASP-2273 DEL; LYS-2096; GLN-2140 AND PRO-2221</scope>
</reference>
<reference key="47">
    <citation type="journal article" date="2010" name="Invest. Ophthalmol. Vis. Sci.">
        <title>ABCA4 and ROM1: implications for modification of the PRPH2-associated macular dystrophy phenotype.</title>
        <authorList>
            <person name="Poloschek C.M."/>
            <person name="Bach M."/>
            <person name="Lagreze W.A."/>
            <person name="Glaus E."/>
            <person name="Lemke J.R."/>
            <person name="Berger W."/>
            <person name="Neidhardt J."/>
        </authorList>
    </citation>
    <scope>VARIANT LEU-2050</scope>
</reference>
<reference key="48">
    <citation type="journal article" date="2012" name="Arch. Ophthalmol.">
        <title>Detection rate of pathogenic mutations in ABCA4 using direct sequencing: clinical and research implications.</title>
        <authorList>
            <person name="Downes S.M."/>
            <person name="Packham E."/>
            <person name="Cranston T."/>
            <person name="Clouston P."/>
            <person name="Seller A."/>
            <person name="Nemeth A.H."/>
        </authorList>
    </citation>
    <scope>VARIANTS 219-ARG--ASP-2273 DEL; HIS-576; GLN-943; ARG-1488; MET-1526; CYS-1557; THR-1562; GLU-1773; ASP-1794; 2040-ARG--ASP-2273 DEL AND CYS-2107</scope>
    <scope>VARIANTS STGD1 TYR-54; GLN-152; ARG-184; PHE-184; CYS-212; SER-418; LYS-471; MET-643; CYS-653; 782-TRP--ASP-2273 DEL; ALA-863; ALA-989; ARG-991; MET-1019; LYS-1022; SER-1097; CYS-1108; LYS-1122; LEU-1129; ARG-1201; LEU-1380; LYS-1442; LEU-1486; TYR-1490; ASP-1598; ASP-1754; THR-1846; GLU-1961; PHE-2027; GLN-2030; CYS-2106; LYS-2131; TYR-2150 AND PRO-2237</scope>
</reference>
<reference key="49">
    <citation type="journal article" date="2013" name="Exp. Eye Res.">
        <title>ABCA4 mutational spectrum in Mexican patients with Stargardt disease: Identification of 12 novel mutations and evidence of a founder effect for the common p.A1773V mutation.</title>
        <authorList>
            <person name="Chacon-Camacho O.F."/>
            <person name="Granillo-Alvarez M."/>
            <person name="Ayala-Ramirez R."/>
            <person name="Zenteno J.C."/>
        </authorList>
    </citation>
    <scope>VARIANTS STGD1 TRP-18; HIS-24; 89-GLU--ASP-2273 DEL; CYS-212; ASP-241; TRP-290; TRP-602; GLU-818; SER-965; ARG-1014; LEU-1129; LEU-1380; PHE-1416 DEL; HIS-1443; TRP-1551 DEL; THR-1556; 1681-VAL--VAL-1685 DEL; GLN-1705; VAL-1773; ASN-1775; HIS-1779; GLN-1942; VAL-2074 AND ARG-2128</scope>
    <scope>VARIANTS GLN-943; ILE-1868 AND ILE-2255</scope>
</reference>
<reference key="50">
    <citation type="journal article" date="2013" name="Ophthalmology">
        <title>Outcome of ABCA4 disease-associated alleles in autosomal recessive retinal dystrophies: retrospective analysis in 420 Spanish families.</title>
        <authorList>
            <person name="Riveiro-Alvarez R."/>
            <person name="Lopez-Martinez M.A."/>
            <person name="Zernant J."/>
            <person name="Aguirre-Lamban J."/>
            <person name="Cantalapiedra D."/>
            <person name="Avila-Fernandez A."/>
            <person name="Gimenez A."/>
            <person name="Lopez-Molina M.I."/>
            <person name="Garcia-Sandoval B."/>
            <person name="Blanco-Kelly F."/>
            <person name="Corton M."/>
            <person name="Tatu S."/>
            <person name="Fernandez-San Jose P."/>
            <person name="Trujillo-Tiebas M.J."/>
            <person name="Ramos C."/>
            <person name="Allikmets R."/>
            <person name="Ayuso C."/>
        </authorList>
    </citation>
    <scope>VARIANTS STGD1 TRP-18; LEU-153; CYS-212; ALA-291; CYS-537; PRO-541; TRP-602; PRO-611; CYS-653; SER-686; GLU-762; MET-931; ALA-989; MET-1019; ARG-1094; LEU-1096; CYS-1098; HIS-1108; LYS-1122; GLU-1127; LEU-1129; THR-1357; LEU-1380; LEU-1486; MET-1526; ASP-1598; GLN-1640; CYS-1724; ASP-1799; ASP-1805; ASP-1838; ASP-1844; PRO-1940; ARG-1961; GLU-1961; SER-1977; ASN-2047; ARG-2060; GLN-2077; TYR-2137; TYR-2150 AND SER-2188</scope>
    <scope>REVIEW</scope>
</reference>
<reference key="51">
    <citation type="journal article" date="2014" name="BMC Med. Genet.">
        <title>Whole exome sequencing detects homozygosity for ABCA4 p.Arg602Trp missense mutation in a pediatric patient with rapidly progressive retinal dystrophy.</title>
        <authorList>
            <person name="Ortube M.C."/>
            <person name="Strom S.P."/>
            <person name="Nelson S.F."/>
            <person name="Nusinowitz S."/>
            <person name="Martinez A."/>
            <person name="Gorin M.B."/>
        </authorList>
    </citation>
    <scope>VARIANT STGD1 TRP-602</scope>
</reference>
<reference key="52">
    <citation type="journal article" date="2014" name="Br. J. Ophthalmol.">
        <title>Predictors of visual acuity and genotype-phenotype correlates in a cohort of patients with Stargardt disease.</title>
        <authorList>
            <person name="Miraldi Utz V."/>
            <person name="Coussa R.G."/>
            <person name="Marino M.J."/>
            <person name="Chappelow A.V."/>
            <person name="Pauer G.J."/>
            <person name="Hagstrom S.A."/>
            <person name="Traboulsi E.I."/>
        </authorList>
    </citation>
    <scope>VARIANTS STGD1 CYS-212; PRO-541; LEU-640; ASP-767; VAL-1038; CYS-1108; ARG-1408; GLN-1640; TRP-1640; ASP-1838; GLU-1961 AND HIS-2107</scope>
</reference>
<reference key="53">
    <citation type="journal article" date="2015" name="Hum. Mutat.">
        <title>An augmented ABCA4 screen targeting noncoding regions reveals a deep intronic founder variant in Belgian Stargardt patients.</title>
        <authorList>
            <person name="Bauwens M."/>
            <person name="De Zaeytijd J."/>
            <person name="Weisschuh N."/>
            <person name="Kohl S."/>
            <person name="Meire F."/>
            <person name="Dahan K."/>
            <person name="Depasse F."/>
            <person name="De Jaegere S."/>
            <person name="De Ravel T."/>
            <person name="De Rademaeker M."/>
            <person name="Loeys B."/>
            <person name="Coppieters F."/>
            <person name="Leroy B.P."/>
            <person name="De Baere E."/>
        </authorList>
    </citation>
    <scope>VARIANTS CORD3 CYS-440; GLY-643; HIS-1145; GLU-1203; GLU-1961; LEU-2050 AND ASN-2177</scope>
    <scope>VARIANTS STGD1 HIS-24; GLU-65; SER-247; 431-TRP--ASP-2273 DEL; PRO-541; ARG-607; HIS-653; ALA-863; 1029-GLN--ASP-2273 DEL; VAL-1038; GLN-1300; MET-1537; TRP-1640; PRO-1763; HIS-1898; GLU-1961; PHE-1970; PHE-2027; GLN-2030 AND ARG-2033</scope>
    <scope>VARIANTS RP19 MET-455 AND ILE-552</scope>
    <scope>VARIANT 681-ARG--ASP-2273 DEL</scope>
</reference>
<reference key="54">
    <citation type="journal article" date="2016" name="Invest. Ophthalmol. Vis. Sci.">
        <title>Screening of ABCA4 Gene in a Chinese Cohort With Stargardt Disease or Cone-Rod Dystrophy With a Report on 85 Novel Mutations.</title>
        <authorList>
            <person name="Jiang F."/>
            <person name="Pan Z."/>
            <person name="Xu K."/>
            <person name="Tian L."/>
            <person name="Xie Y."/>
            <person name="Zhang X."/>
            <person name="Chen J."/>
            <person name="Dong B."/>
            <person name="Li Y."/>
        </authorList>
    </citation>
    <scope>VARIANTS STGD1 LYS-14; PRO-18; HIS-24; VAL-72; CYS-97; 185-GLN--ASP-2273 DEL; ARG-240; LEU-291; 326-TYR--ASP-2273 DEL; VAL-328; SER-345; THR-410; CYS-508; CYS-511; ARG-519; 533-GLN--ASP-2273 DEL; CYS-537; ARG-548; ARG-550; LEU-593; TRP-602; CYS-603; ARG-607; ASN-645; HIS-653; SER-754; 808-TYR--ASP-2273 DEL; VAL-816; SER-965; TYR-965; SER-973; MET-1019; GLY-1022; LYS-1036; LEU-1074; THR-1094; HIS-1108; LYS-1122; THR-1130; TRP-1140; SER-1159; HIS-1161; 1300-ARG--ASP-2273 DEL; ASN-1371; 1453-TYR--ASP-2273 DEL; LEU-1503; HIS-1511; MET-1526; MET-1537; ARG-1591; 1724-TRP--ASP-2273 DEL; VAL-1773; LEU-1776; LYS-1885; GLY-1921; MET-1921; ARG-1961; SER-1977; TYR-2017; THR-2023; 2030-ARG--ASP-2273 DEL; ARG-2032; TRP-2038; 2040-ARG--ASP-2273 DEL; GLN-2040; GLY-2042; THR-2064; GLU-2078; SER-2097; ARG-2150 AND SER-2188</scope>
    <scope>VARIANTS ARG-423; TYR-1102; THR-1209; MET-1428; MET-1572; 1618-TRP--ASP-2273 DEL; VAL-1623; GLN-1640; 1652-TYR--ASP-2273 DEL; ILE-1868 AND ILE-2255</scope>
    <scope>VARIANTS CORD3 53-GLU--ASP-2273 DEL; ARG-55; PRO-63; 107-ARG--ASP-2273 DEL; 218-GLN--ASP-2273 DEL; CYS-320; 339-TRP--ASP-2273 DEL; 605-TRP--ASP-2273 DEL; LYS-636; ARG-661; CYS-1183; CYS-1368; 1479-TRP--ASP-2273 DEL; 1650-GLU--ASP-2273 DEL; ILE-1882; SER-2043; HIS-2107 AND ASP-2146</scope>
</reference>
<reference key="55">
    <citation type="journal article" date="2018" name="Invest. Ophthalmol. Vis. Sci.">
        <title>Correlating the Expression and Functional Activity of ABCA4 Disease Variants With the Phenotype of Patients With Stargardt Disease.</title>
        <authorList>
            <person name="Garces F."/>
            <person name="Jiang K."/>
            <person name="Molday L.L."/>
            <person name="Stoehr H."/>
            <person name="Weber B.H."/>
            <person name="Lyons C.J."/>
            <person name="Maberley D."/>
            <person name="Molday R.S."/>
        </authorList>
    </citation>
    <scope>VARIANTS STGD1 ARG-72; PRO-541; VAL-1038; GLU-1091; THR-1357; PRO-1794 AND TRP-2077</scope>
    <scope>CHARACTERIZATION OF VARIANTS STGD1 ARG-72; LYS-448; PRO-541; VAL-1038; GLU-1091; THR-1357; PRO-1794; GLU-1961; PHE-2027 AND TRP-2077</scope>
    <scope>CHARACTERIZATION OF VARIANT RP19 ILE-552</scope>
    <scope>FUNCTION</scope>
    <scope>CATALYTIC ACTIVITY</scope>
    <scope>SUBCELLULAR LOCATION</scope>
</reference>
<reference key="56">
    <citation type="journal article" date="2018" name="J. Med. Genet.">
        <title>Homozygous variants in KIAA1549, encoding a ciliary protein, are associated with autosomal recessive retinitis pigmentosa.</title>
        <authorList>
            <person name="de Bruijn S.E."/>
            <person name="Verbakel S.K."/>
            <person name="de Vrieze E."/>
            <person name="Kremer H."/>
            <person name="Cremers F.P.M."/>
            <person name="Hoyng C.B."/>
            <person name="van den Born L.I."/>
            <person name="Roosing S."/>
        </authorList>
    </citation>
    <scope>VARIANT ILE-1868</scope>
</reference>
<reference key="57">
    <citation type="journal article" date="2020" name="Int. J. Mol. Sci.">
        <title>Functional Characterization of ABCA4 Missense Variants Linked to Stargardt Macular Degeneration.</title>
        <authorList>
            <person name="Garces F.A."/>
            <person name="Scortecci J.F."/>
            <person name="Molday R.S."/>
        </authorList>
    </citation>
    <scope>CHARACTERIZATION OF VARIANTS STGD1 CYS-653; HIS-653; ARG-661; SER-686; VAL-690; MET-716; TYR-764; ARG-765; ASN-765; ASP-767; PRO-797; GLU-818; ARG-821; THR-824; ARG-840; ALA-849; ASP-851; THR-854; LEU-1380; LYS-1399; ASN-1696; GLU-1703; LYS-1703; LEU-1705; VAL-1773; ASP-1794; PRO-1794; ASP-1805; ASN-1838; ASP-1838; TYR-1838; TRP-1843 AND HIS-1898</scope>
    <scope>CHARACTERIZATION OF VARIANTS HIS-846; GLU-1773; ILE-1868 AND CYS-1898</scope>
    <scope>MUTAGENESIS OF GLN-1703 AND HIS-1838</scope>
    <scope>FUNCTION</scope>
    <scope>CATALYTIC ACTIVITY</scope>
    <scope>SUBCELLULAR LOCATION</scope>
</reference>
<gene>
    <name evidence="63" type="primary">ABCA4</name>
    <name evidence="58" type="synonym">ABCR</name>
</gene>
<evidence type="ECO:0000250" key="1">
    <source>
        <dbReference type="UniProtKB" id="F1MWM0"/>
    </source>
</evidence>
<evidence type="ECO:0000255" key="2"/>
<evidence type="ECO:0000255" key="3">
    <source>
        <dbReference type="PROSITE-ProRule" id="PRU00434"/>
    </source>
</evidence>
<evidence type="ECO:0000256" key="4">
    <source>
        <dbReference type="SAM" id="MobiDB-lite"/>
    </source>
</evidence>
<evidence type="ECO:0000269" key="5">
    <source>
    </source>
</evidence>
<evidence type="ECO:0000269" key="6">
    <source>
    </source>
</evidence>
<evidence type="ECO:0000269" key="7">
    <source>
    </source>
</evidence>
<evidence type="ECO:0000269" key="8">
    <source>
    </source>
</evidence>
<evidence type="ECO:0000269" key="9">
    <source>
    </source>
</evidence>
<evidence type="ECO:0000269" key="10">
    <source>
    </source>
</evidence>
<evidence type="ECO:0000269" key="11">
    <source>
    </source>
</evidence>
<evidence type="ECO:0000269" key="12">
    <source>
    </source>
</evidence>
<evidence type="ECO:0000269" key="13">
    <source>
    </source>
</evidence>
<evidence type="ECO:0000269" key="14">
    <source>
    </source>
</evidence>
<evidence type="ECO:0000269" key="15">
    <source>
    </source>
</evidence>
<evidence type="ECO:0000269" key="16">
    <source>
    </source>
</evidence>
<evidence type="ECO:0000269" key="17">
    <source>
    </source>
</evidence>
<evidence type="ECO:0000269" key="18">
    <source>
    </source>
</evidence>
<evidence type="ECO:0000269" key="19">
    <source>
    </source>
</evidence>
<evidence type="ECO:0000269" key="20">
    <source>
    </source>
</evidence>
<evidence type="ECO:0000269" key="21">
    <source>
    </source>
</evidence>
<evidence type="ECO:0000269" key="22">
    <source>
    </source>
</evidence>
<evidence type="ECO:0000269" key="23">
    <source>
    </source>
</evidence>
<evidence type="ECO:0000269" key="24">
    <source>
    </source>
</evidence>
<evidence type="ECO:0000269" key="25">
    <source>
    </source>
</evidence>
<evidence type="ECO:0000269" key="26">
    <source>
    </source>
</evidence>
<evidence type="ECO:0000269" key="27">
    <source>
    </source>
</evidence>
<evidence type="ECO:0000269" key="28">
    <source>
    </source>
</evidence>
<evidence type="ECO:0000269" key="29">
    <source>
    </source>
</evidence>
<evidence type="ECO:0000269" key="30">
    <source>
    </source>
</evidence>
<evidence type="ECO:0000269" key="31">
    <source>
    </source>
</evidence>
<evidence type="ECO:0000269" key="32">
    <source>
    </source>
</evidence>
<evidence type="ECO:0000269" key="33">
    <source>
    </source>
</evidence>
<evidence type="ECO:0000269" key="34">
    <source>
    </source>
</evidence>
<evidence type="ECO:0000269" key="35">
    <source>
    </source>
</evidence>
<evidence type="ECO:0000269" key="36">
    <source>
    </source>
</evidence>
<evidence type="ECO:0000269" key="37">
    <source>
    </source>
</evidence>
<evidence type="ECO:0000269" key="38">
    <source>
    </source>
</evidence>
<evidence type="ECO:0000269" key="39">
    <source>
    </source>
</evidence>
<evidence type="ECO:0000269" key="40">
    <source>
    </source>
</evidence>
<evidence type="ECO:0000269" key="41">
    <source>
    </source>
</evidence>
<evidence type="ECO:0000269" key="42">
    <source>
    </source>
</evidence>
<evidence type="ECO:0000269" key="43">
    <source>
    </source>
</evidence>
<evidence type="ECO:0000269" key="44">
    <source>
    </source>
</evidence>
<evidence type="ECO:0000269" key="45">
    <source>
    </source>
</evidence>
<evidence type="ECO:0000269" key="46">
    <source>
    </source>
</evidence>
<evidence type="ECO:0000269" key="47">
    <source>
    </source>
</evidence>
<evidence type="ECO:0000269" key="48">
    <source>
    </source>
</evidence>
<evidence type="ECO:0000269" key="49">
    <source>
    </source>
</evidence>
<evidence type="ECO:0000269" key="50">
    <source>
    </source>
</evidence>
<evidence type="ECO:0000269" key="51">
    <source>
    </source>
</evidence>
<evidence type="ECO:0000269" key="52">
    <source>
    </source>
</evidence>
<evidence type="ECO:0000269" key="53">
    <source>
    </source>
</evidence>
<evidence type="ECO:0000269" key="54">
    <source>
    </source>
</evidence>
<evidence type="ECO:0000269" key="55">
    <source>
    </source>
</evidence>
<evidence type="ECO:0000269" key="56">
    <source>
    </source>
</evidence>
<evidence type="ECO:0000269" key="57">
    <source ref="5"/>
</evidence>
<evidence type="ECO:0000303" key="58">
    <source>
    </source>
</evidence>
<evidence type="ECO:0000305" key="59"/>
<evidence type="ECO:0000305" key="60">
    <source>
    </source>
</evidence>
<evidence type="ECO:0000305" key="61">
    <source>
    </source>
</evidence>
<evidence type="ECO:0000305" key="62">
    <source>
    </source>
</evidence>
<evidence type="ECO:0000312" key="63">
    <source>
        <dbReference type="HGNC" id="HGNC:34"/>
    </source>
</evidence>
<evidence type="ECO:0007744" key="64">
    <source>
        <dbReference type="PDB" id="7LKP"/>
    </source>
</evidence>
<evidence type="ECO:0007744" key="65">
    <source>
        <dbReference type="PDB" id="7LKZ"/>
    </source>
</evidence>
<evidence type="ECO:0007744" key="66">
    <source>
        <dbReference type="PDB" id="7M1P"/>
    </source>
</evidence>
<evidence type="ECO:0007744" key="67">
    <source>
        <dbReference type="PDB" id="7M1Q"/>
    </source>
</evidence>
<evidence type="ECO:0007744" key="68">
    <source>
        <dbReference type="PDB" id="8F5B"/>
    </source>
</evidence>
<evidence type="ECO:0007829" key="69">
    <source>
        <dbReference type="PDB" id="7E7I"/>
    </source>
</evidence>
<evidence type="ECO:0007829" key="70">
    <source>
        <dbReference type="PDB" id="7E7O"/>
    </source>
</evidence>
<evidence type="ECO:0007829" key="71">
    <source>
        <dbReference type="PDB" id="7E7Q"/>
    </source>
</evidence>
<evidence type="ECO:0007829" key="72">
    <source>
        <dbReference type="PDB" id="7LKP"/>
    </source>
</evidence>
<evidence type="ECO:0007829" key="73">
    <source>
        <dbReference type="PDB" id="7LKZ"/>
    </source>
</evidence>
<evidence type="ECO:0007829" key="74">
    <source>
        <dbReference type="PDB" id="7M1Q"/>
    </source>
</evidence>
<accession>P78363</accession>
<accession>O15112</accession>
<accession>O60438</accession>
<accession>O60915</accession>
<accession>Q0QD48</accession>
<accession>Q4LE31</accession>
<dbReference type="EC" id="7.6.2.1" evidence="39"/>
<dbReference type="EMBL" id="U88667">
    <property type="protein sequence ID" value="AAC51144.1"/>
    <property type="molecule type" value="mRNA"/>
</dbReference>
<dbReference type="EMBL" id="AF000148">
    <property type="protein sequence ID" value="AAC23915.1"/>
    <property type="molecule type" value="mRNA"/>
</dbReference>
<dbReference type="EMBL" id="Y15635">
    <property type="protein sequence ID" value="CAA75729.1"/>
    <property type="molecule type" value="Genomic_DNA"/>
</dbReference>
<dbReference type="EMBL" id="Y15636">
    <property type="protein sequence ID" value="CAA75729.1"/>
    <property type="status" value="JOINED"/>
    <property type="molecule type" value="Genomic_DNA"/>
</dbReference>
<dbReference type="EMBL" id="Y15637">
    <property type="protein sequence ID" value="CAA75729.1"/>
    <property type="status" value="JOINED"/>
    <property type="molecule type" value="Genomic_DNA"/>
</dbReference>
<dbReference type="EMBL" id="Y15638">
    <property type="protein sequence ID" value="CAA75729.1"/>
    <property type="status" value="JOINED"/>
    <property type="molecule type" value="Genomic_DNA"/>
</dbReference>
<dbReference type="EMBL" id="Y15639">
    <property type="protein sequence ID" value="CAA75729.1"/>
    <property type="status" value="JOINED"/>
    <property type="molecule type" value="Genomic_DNA"/>
</dbReference>
<dbReference type="EMBL" id="Y15640">
    <property type="protein sequence ID" value="CAA75729.1"/>
    <property type="status" value="JOINED"/>
    <property type="molecule type" value="Genomic_DNA"/>
</dbReference>
<dbReference type="EMBL" id="Y15641">
    <property type="protein sequence ID" value="CAA75729.1"/>
    <property type="status" value="JOINED"/>
    <property type="molecule type" value="Genomic_DNA"/>
</dbReference>
<dbReference type="EMBL" id="Y15642">
    <property type="protein sequence ID" value="CAA75729.1"/>
    <property type="status" value="JOINED"/>
    <property type="molecule type" value="Genomic_DNA"/>
</dbReference>
<dbReference type="EMBL" id="Y15643">
    <property type="protein sequence ID" value="CAA75729.1"/>
    <property type="status" value="JOINED"/>
    <property type="molecule type" value="Genomic_DNA"/>
</dbReference>
<dbReference type="EMBL" id="Y15644">
    <property type="protein sequence ID" value="CAA75729.1"/>
    <property type="status" value="JOINED"/>
    <property type="molecule type" value="Genomic_DNA"/>
</dbReference>
<dbReference type="EMBL" id="Y15645">
    <property type="protein sequence ID" value="CAA75729.1"/>
    <property type="status" value="JOINED"/>
    <property type="molecule type" value="Genomic_DNA"/>
</dbReference>
<dbReference type="EMBL" id="Y15646">
    <property type="protein sequence ID" value="CAA75729.1"/>
    <property type="status" value="JOINED"/>
    <property type="molecule type" value="Genomic_DNA"/>
</dbReference>
<dbReference type="EMBL" id="Y15647">
    <property type="protein sequence ID" value="CAA75729.1"/>
    <property type="status" value="JOINED"/>
    <property type="molecule type" value="Genomic_DNA"/>
</dbReference>
<dbReference type="EMBL" id="Y15648">
    <property type="protein sequence ID" value="CAA75729.1"/>
    <property type="status" value="JOINED"/>
    <property type="molecule type" value="Genomic_DNA"/>
</dbReference>
<dbReference type="EMBL" id="Y15649">
    <property type="protein sequence ID" value="CAA75729.1"/>
    <property type="status" value="JOINED"/>
    <property type="molecule type" value="Genomic_DNA"/>
</dbReference>
<dbReference type="EMBL" id="Y15650">
    <property type="protein sequence ID" value="CAA75729.1"/>
    <property type="status" value="JOINED"/>
    <property type="molecule type" value="Genomic_DNA"/>
</dbReference>
<dbReference type="EMBL" id="Y15651">
    <property type="protein sequence ID" value="CAA75729.1"/>
    <property type="status" value="JOINED"/>
    <property type="molecule type" value="Genomic_DNA"/>
</dbReference>
<dbReference type="EMBL" id="Y15652">
    <property type="protein sequence ID" value="CAA75729.1"/>
    <property type="status" value="JOINED"/>
    <property type="molecule type" value="Genomic_DNA"/>
</dbReference>
<dbReference type="EMBL" id="Y15653">
    <property type="protein sequence ID" value="CAA75729.1"/>
    <property type="status" value="JOINED"/>
    <property type="molecule type" value="Genomic_DNA"/>
</dbReference>
<dbReference type="EMBL" id="Y15654">
    <property type="protein sequence ID" value="CAA75729.1"/>
    <property type="status" value="JOINED"/>
    <property type="molecule type" value="Genomic_DNA"/>
</dbReference>
<dbReference type="EMBL" id="Y15655">
    <property type="protein sequence ID" value="CAA75729.1"/>
    <property type="status" value="JOINED"/>
    <property type="molecule type" value="Genomic_DNA"/>
</dbReference>
<dbReference type="EMBL" id="Y15656">
    <property type="protein sequence ID" value="CAA75729.1"/>
    <property type="status" value="JOINED"/>
    <property type="molecule type" value="Genomic_DNA"/>
</dbReference>
<dbReference type="EMBL" id="Y15657">
    <property type="protein sequence ID" value="CAA75729.1"/>
    <property type="status" value="JOINED"/>
    <property type="molecule type" value="Genomic_DNA"/>
</dbReference>
<dbReference type="EMBL" id="Y15658">
    <property type="protein sequence ID" value="CAA75729.1"/>
    <property type="status" value="JOINED"/>
    <property type="molecule type" value="Genomic_DNA"/>
</dbReference>
<dbReference type="EMBL" id="Y15659">
    <property type="protein sequence ID" value="CAA75729.1"/>
    <property type="status" value="JOINED"/>
    <property type="molecule type" value="Genomic_DNA"/>
</dbReference>
<dbReference type="EMBL" id="Y15660">
    <property type="protein sequence ID" value="CAA75729.1"/>
    <property type="status" value="JOINED"/>
    <property type="molecule type" value="Genomic_DNA"/>
</dbReference>
<dbReference type="EMBL" id="Y15661">
    <property type="protein sequence ID" value="CAA75729.1"/>
    <property type="status" value="JOINED"/>
    <property type="molecule type" value="Genomic_DNA"/>
</dbReference>
<dbReference type="EMBL" id="Y15662">
    <property type="protein sequence ID" value="CAA75729.1"/>
    <property type="status" value="JOINED"/>
    <property type="molecule type" value="Genomic_DNA"/>
</dbReference>
<dbReference type="EMBL" id="Y15663">
    <property type="protein sequence ID" value="CAA75729.1"/>
    <property type="status" value="JOINED"/>
    <property type="molecule type" value="Genomic_DNA"/>
</dbReference>
<dbReference type="EMBL" id="Y15664">
    <property type="protein sequence ID" value="CAA75729.1"/>
    <property type="status" value="JOINED"/>
    <property type="molecule type" value="Genomic_DNA"/>
</dbReference>
<dbReference type="EMBL" id="Y15665">
    <property type="protein sequence ID" value="CAA75729.1"/>
    <property type="status" value="JOINED"/>
    <property type="molecule type" value="Genomic_DNA"/>
</dbReference>
<dbReference type="EMBL" id="Y15666">
    <property type="protein sequence ID" value="CAA75729.1"/>
    <property type="status" value="JOINED"/>
    <property type="molecule type" value="Genomic_DNA"/>
</dbReference>
<dbReference type="EMBL" id="Y15667">
    <property type="protein sequence ID" value="CAA75729.1"/>
    <property type="status" value="JOINED"/>
    <property type="molecule type" value="Genomic_DNA"/>
</dbReference>
<dbReference type="EMBL" id="Y15668">
    <property type="protein sequence ID" value="CAA75729.1"/>
    <property type="status" value="JOINED"/>
    <property type="molecule type" value="Genomic_DNA"/>
</dbReference>
<dbReference type="EMBL" id="Y15669">
    <property type="protein sequence ID" value="CAA75729.1"/>
    <property type="status" value="JOINED"/>
    <property type="molecule type" value="Genomic_DNA"/>
</dbReference>
<dbReference type="EMBL" id="Y15670">
    <property type="protein sequence ID" value="CAA75729.1"/>
    <property type="status" value="JOINED"/>
    <property type="molecule type" value="Genomic_DNA"/>
</dbReference>
<dbReference type="EMBL" id="Y15671">
    <property type="protein sequence ID" value="CAA75729.1"/>
    <property type="status" value="JOINED"/>
    <property type="molecule type" value="Genomic_DNA"/>
</dbReference>
<dbReference type="EMBL" id="Y15672">
    <property type="protein sequence ID" value="CAA75729.1"/>
    <property type="status" value="JOINED"/>
    <property type="molecule type" value="Genomic_DNA"/>
</dbReference>
<dbReference type="EMBL" id="Y15673">
    <property type="protein sequence ID" value="CAA75729.1"/>
    <property type="status" value="JOINED"/>
    <property type="molecule type" value="Genomic_DNA"/>
</dbReference>
<dbReference type="EMBL" id="Y15674">
    <property type="protein sequence ID" value="CAA75729.1"/>
    <property type="status" value="JOINED"/>
    <property type="molecule type" value="Genomic_DNA"/>
</dbReference>
<dbReference type="EMBL" id="Y15675">
    <property type="protein sequence ID" value="CAA75729.1"/>
    <property type="status" value="JOINED"/>
    <property type="molecule type" value="Genomic_DNA"/>
</dbReference>
<dbReference type="EMBL" id="Y15676">
    <property type="protein sequence ID" value="CAA75729.1"/>
    <property type="status" value="JOINED"/>
    <property type="molecule type" value="Genomic_DNA"/>
</dbReference>
<dbReference type="EMBL" id="Y15677">
    <property type="protein sequence ID" value="CAA75729.1"/>
    <property type="status" value="JOINED"/>
    <property type="molecule type" value="Genomic_DNA"/>
</dbReference>
<dbReference type="EMBL" id="Y15678">
    <property type="protein sequence ID" value="CAA75729.1"/>
    <property type="status" value="JOINED"/>
    <property type="molecule type" value="Genomic_DNA"/>
</dbReference>
<dbReference type="EMBL" id="Y15679">
    <property type="protein sequence ID" value="CAA75729.1"/>
    <property type="status" value="JOINED"/>
    <property type="molecule type" value="Genomic_DNA"/>
</dbReference>
<dbReference type="EMBL" id="Y15680">
    <property type="protein sequence ID" value="CAA75729.1"/>
    <property type="status" value="JOINED"/>
    <property type="molecule type" value="Genomic_DNA"/>
</dbReference>
<dbReference type="EMBL" id="Y15681">
    <property type="protein sequence ID" value="CAA75729.1"/>
    <property type="status" value="JOINED"/>
    <property type="molecule type" value="Genomic_DNA"/>
</dbReference>
<dbReference type="EMBL" id="Y15682">
    <property type="protein sequence ID" value="CAA75729.1"/>
    <property type="status" value="JOINED"/>
    <property type="molecule type" value="Genomic_DNA"/>
</dbReference>
<dbReference type="EMBL" id="Y15683">
    <property type="protein sequence ID" value="CAA75729.1"/>
    <property type="status" value="JOINED"/>
    <property type="molecule type" value="Genomic_DNA"/>
</dbReference>
<dbReference type="EMBL" id="Y15684">
    <property type="protein sequence ID" value="CAA75729.1"/>
    <property type="status" value="JOINED"/>
    <property type="molecule type" value="Genomic_DNA"/>
</dbReference>
<dbReference type="EMBL" id="AF001945">
    <property type="protein sequence ID" value="AAC05632.1"/>
    <property type="molecule type" value="mRNA"/>
</dbReference>
<dbReference type="EMBL" id="AB210040">
    <property type="protein sequence ID" value="BAE06122.1"/>
    <property type="status" value="ALT_INIT"/>
    <property type="molecule type" value="mRNA"/>
</dbReference>
<dbReference type="EMBL" id="AC093579">
    <property type="status" value="NOT_ANNOTATED_CDS"/>
    <property type="molecule type" value="Genomic_DNA"/>
</dbReference>
<dbReference type="EMBL" id="AC105278">
    <property type="status" value="NOT_ANNOTATED_CDS"/>
    <property type="molecule type" value="Genomic_DNA"/>
</dbReference>
<dbReference type="EMBL" id="DQ426859">
    <property type="protein sequence ID" value="ABD90529.1"/>
    <property type="molecule type" value="mRNA"/>
</dbReference>
<dbReference type="CCDS" id="CCDS747.1"/>
<dbReference type="RefSeq" id="NP_000341.2">
    <property type="nucleotide sequence ID" value="NM_000350.3"/>
</dbReference>
<dbReference type="PDB" id="7E7I">
    <property type="method" value="EM"/>
    <property type="resolution" value="3.30 A"/>
    <property type="chains" value="A=1-2273"/>
</dbReference>
<dbReference type="PDB" id="7E7O">
    <property type="method" value="EM"/>
    <property type="resolution" value="3.40 A"/>
    <property type="chains" value="A=1-2273"/>
</dbReference>
<dbReference type="PDB" id="7E7Q">
    <property type="method" value="EM"/>
    <property type="resolution" value="3.30 A"/>
    <property type="chains" value="A=1-2273"/>
</dbReference>
<dbReference type="PDB" id="7LKP">
    <property type="method" value="EM"/>
    <property type="resolution" value="3.27 A"/>
    <property type="chains" value="A=1-2273"/>
</dbReference>
<dbReference type="PDB" id="7LKZ">
    <property type="method" value="EM"/>
    <property type="resolution" value="3.27 A"/>
    <property type="chains" value="A=1-2273"/>
</dbReference>
<dbReference type="PDB" id="7M1P">
    <property type="method" value="EM"/>
    <property type="resolution" value="3.60 A"/>
    <property type="chains" value="A=1-2273"/>
</dbReference>
<dbReference type="PDB" id="7M1Q">
    <property type="method" value="EM"/>
    <property type="resolution" value="2.92 A"/>
    <property type="chains" value="A=1-2273"/>
</dbReference>
<dbReference type="PDB" id="8F5B">
    <property type="method" value="EM"/>
    <property type="resolution" value="3.95 A"/>
    <property type="chains" value="A=1-2273"/>
</dbReference>
<dbReference type="PDBsum" id="7E7I"/>
<dbReference type="PDBsum" id="7E7O"/>
<dbReference type="PDBsum" id="7E7Q"/>
<dbReference type="PDBsum" id="7LKP"/>
<dbReference type="PDBsum" id="7LKZ"/>
<dbReference type="PDBsum" id="7M1P"/>
<dbReference type="PDBsum" id="7M1Q"/>
<dbReference type="PDBsum" id="8F5B"/>
<dbReference type="EMDB" id="EMD-23409"/>
<dbReference type="EMDB" id="EMD-23410"/>
<dbReference type="EMDB" id="EMD-23617"/>
<dbReference type="EMDB" id="EMD-23618"/>
<dbReference type="EMDB" id="EMD-27079"/>
<dbReference type="EMDB" id="EMD-28864"/>
<dbReference type="EMDB" id="EMD-31000"/>
<dbReference type="EMDB" id="EMD-31001"/>
<dbReference type="EMDB" id="EMD-31002"/>
<dbReference type="SMR" id="P78363"/>
<dbReference type="BioGRID" id="106542">
    <property type="interactions" value="5"/>
</dbReference>
<dbReference type="ELM" id="P78363"/>
<dbReference type="FunCoup" id="P78363">
    <property type="interactions" value="159"/>
</dbReference>
<dbReference type="IntAct" id="P78363">
    <property type="interactions" value="3"/>
</dbReference>
<dbReference type="STRING" id="9606.ENSP00000359245"/>
<dbReference type="SwissLipids" id="SLP:000000347"/>
<dbReference type="TCDB" id="3.A.1.211.2">
    <property type="family name" value="the atp-binding cassette (abc) superfamily"/>
</dbReference>
<dbReference type="GlyCosmos" id="P78363">
    <property type="glycosylation" value="8 sites, No reported glycans"/>
</dbReference>
<dbReference type="GlyGen" id="P78363">
    <property type="glycosylation" value="14 sites, 1 O-linked glycan (1 site)"/>
</dbReference>
<dbReference type="iPTMnet" id="P78363"/>
<dbReference type="PhosphoSitePlus" id="P78363"/>
<dbReference type="BioMuta" id="ABCA4"/>
<dbReference type="DMDM" id="6707663"/>
<dbReference type="MassIVE" id="P78363"/>
<dbReference type="PaxDb" id="9606-ENSP00000359245"/>
<dbReference type="PeptideAtlas" id="P78363"/>
<dbReference type="ProteomicsDB" id="57593"/>
<dbReference type="Antibodypedia" id="33661">
    <property type="antibodies" value="187 antibodies from 33 providers"/>
</dbReference>
<dbReference type="DNASU" id="24"/>
<dbReference type="Ensembl" id="ENST00000370225.4">
    <property type="protein sequence ID" value="ENSP00000359245.3"/>
    <property type="gene ID" value="ENSG00000198691.14"/>
</dbReference>
<dbReference type="GeneID" id="24"/>
<dbReference type="KEGG" id="hsa:24"/>
<dbReference type="MANE-Select" id="ENST00000370225.4">
    <property type="protein sequence ID" value="ENSP00000359245.3"/>
    <property type="RefSeq nucleotide sequence ID" value="NM_000350.3"/>
    <property type="RefSeq protein sequence ID" value="NP_000341.2"/>
</dbReference>
<dbReference type="UCSC" id="uc001dqh.4">
    <property type="organism name" value="human"/>
</dbReference>
<dbReference type="AGR" id="HGNC:34"/>
<dbReference type="CTD" id="24"/>
<dbReference type="DisGeNET" id="24"/>
<dbReference type="GeneCards" id="ABCA4"/>
<dbReference type="GeneReviews" id="ABCA4"/>
<dbReference type="HGNC" id="HGNC:34">
    <property type="gene designation" value="ABCA4"/>
</dbReference>
<dbReference type="HPA" id="ENSG00000198691">
    <property type="expression patterns" value="Group enriched (choroid plexus, retina)"/>
</dbReference>
<dbReference type="MalaCards" id="ABCA4"/>
<dbReference type="MIM" id="153800">
    <property type="type" value="phenotype"/>
</dbReference>
<dbReference type="MIM" id="248200">
    <property type="type" value="phenotype"/>
</dbReference>
<dbReference type="MIM" id="601691">
    <property type="type" value="gene"/>
</dbReference>
<dbReference type="MIM" id="601718">
    <property type="type" value="phenotype"/>
</dbReference>
<dbReference type="MIM" id="604116">
    <property type="type" value="phenotype"/>
</dbReference>
<dbReference type="neXtProt" id="NX_P78363"/>
<dbReference type="OpenTargets" id="ENSG00000198691"/>
<dbReference type="Orphanet" id="1872">
    <property type="disease" value="Cone rod dystrophy"/>
</dbReference>
<dbReference type="Orphanet" id="791">
    <property type="disease" value="Retinitis pigmentosa"/>
</dbReference>
<dbReference type="Orphanet" id="827">
    <property type="disease" value="Stargardt disease"/>
</dbReference>
<dbReference type="PharmGKB" id="PA24379"/>
<dbReference type="VEuPathDB" id="HostDB:ENSG00000198691"/>
<dbReference type="eggNOG" id="KOG0059">
    <property type="taxonomic scope" value="Eukaryota"/>
</dbReference>
<dbReference type="GeneTree" id="ENSGT00940000155624"/>
<dbReference type="HOGENOM" id="CLU_000604_19_1_1"/>
<dbReference type="InParanoid" id="P78363"/>
<dbReference type="OMA" id="FMWNVIA"/>
<dbReference type="OrthoDB" id="10255969at2759"/>
<dbReference type="PAN-GO" id="P78363">
    <property type="GO annotations" value="5 GO annotations based on evolutionary models"/>
</dbReference>
<dbReference type="PhylomeDB" id="P78363"/>
<dbReference type="TreeFam" id="TF105191"/>
<dbReference type="PathwayCommons" id="P78363"/>
<dbReference type="Reactome" id="R-HSA-2453902">
    <property type="pathway name" value="The canonical retinoid cycle in rods (twilight vision)"/>
</dbReference>
<dbReference type="Reactome" id="R-HSA-382556">
    <property type="pathway name" value="ABC-family proteins mediated transport"/>
</dbReference>
<dbReference type="Reactome" id="R-HSA-9918454">
    <property type="pathway name" value="Defective visual phototransduction due to ABCA4 loss of function"/>
</dbReference>
<dbReference type="SignaLink" id="P78363"/>
<dbReference type="BioGRID-ORCS" id="24">
    <property type="hits" value="13 hits in 1147 CRISPR screens"/>
</dbReference>
<dbReference type="ChiTaRS" id="ABCA4">
    <property type="organism name" value="human"/>
</dbReference>
<dbReference type="GeneWiki" id="ABCA4"/>
<dbReference type="GenomeRNAi" id="24"/>
<dbReference type="Pharos" id="P78363">
    <property type="development level" value="Tbio"/>
</dbReference>
<dbReference type="PRO" id="PR:P78363"/>
<dbReference type="Proteomes" id="UP000005640">
    <property type="component" value="Chromosome 1"/>
</dbReference>
<dbReference type="RNAct" id="P78363">
    <property type="molecule type" value="protein"/>
</dbReference>
<dbReference type="Bgee" id="ENSG00000198691">
    <property type="expression patterns" value="Expressed in pigmented layer of retina and 104 other cell types or tissues"/>
</dbReference>
<dbReference type="ExpressionAtlas" id="P78363">
    <property type="expression patterns" value="baseline and differential"/>
</dbReference>
<dbReference type="GO" id="GO:0031410">
    <property type="term" value="C:cytoplasmic vesicle"/>
    <property type="evidence" value="ECO:0000314"/>
    <property type="project" value="UniProtKB"/>
</dbReference>
<dbReference type="GO" id="GO:0005783">
    <property type="term" value="C:endoplasmic reticulum"/>
    <property type="evidence" value="ECO:0000314"/>
    <property type="project" value="UniProtKB"/>
</dbReference>
<dbReference type="GO" id="GO:0043231">
    <property type="term" value="C:intracellular membrane-bounded organelle"/>
    <property type="evidence" value="ECO:0000318"/>
    <property type="project" value="GO_Central"/>
</dbReference>
<dbReference type="GO" id="GO:0016020">
    <property type="term" value="C:membrane"/>
    <property type="evidence" value="ECO:0000304"/>
    <property type="project" value="ProtInc"/>
</dbReference>
<dbReference type="GO" id="GO:0097381">
    <property type="term" value="C:photoreceptor disc membrane"/>
    <property type="evidence" value="ECO:0000304"/>
    <property type="project" value="Reactome"/>
</dbReference>
<dbReference type="GO" id="GO:0001750">
    <property type="term" value="C:photoreceptor outer segment"/>
    <property type="evidence" value="ECO:0000250"/>
    <property type="project" value="UniProtKB"/>
</dbReference>
<dbReference type="GO" id="GO:0005886">
    <property type="term" value="C:plasma membrane"/>
    <property type="evidence" value="ECO:0007669"/>
    <property type="project" value="InterPro"/>
</dbReference>
<dbReference type="GO" id="GO:0120202">
    <property type="term" value="C:rod photoreceptor disc membrane"/>
    <property type="evidence" value="ECO:0000250"/>
    <property type="project" value="UniProtKB"/>
</dbReference>
<dbReference type="GO" id="GO:0005502">
    <property type="term" value="F:11-cis retinal binding"/>
    <property type="evidence" value="ECO:0000314"/>
    <property type="project" value="UniProtKB"/>
</dbReference>
<dbReference type="GO" id="GO:0140359">
    <property type="term" value="F:ABC-type transporter activity"/>
    <property type="evidence" value="ECO:0007669"/>
    <property type="project" value="InterPro"/>
</dbReference>
<dbReference type="GO" id="GO:0005503">
    <property type="term" value="F:all-trans retinal binding"/>
    <property type="evidence" value="ECO:0000314"/>
    <property type="project" value="UniProtKB"/>
</dbReference>
<dbReference type="GO" id="GO:0005524">
    <property type="term" value="F:ATP binding"/>
    <property type="evidence" value="ECO:0000304"/>
    <property type="project" value="ProtInc"/>
</dbReference>
<dbReference type="GO" id="GO:0016887">
    <property type="term" value="F:ATP hydrolysis activity"/>
    <property type="evidence" value="ECO:0000314"/>
    <property type="project" value="UniProtKB"/>
</dbReference>
<dbReference type="GO" id="GO:0140326">
    <property type="term" value="F:ATPase-coupled intramembrane lipid transporter activity"/>
    <property type="evidence" value="ECO:0000318"/>
    <property type="project" value="GO_Central"/>
</dbReference>
<dbReference type="GO" id="GO:0042626">
    <property type="term" value="F:ATPase-coupled transmembrane transporter activity"/>
    <property type="evidence" value="ECO:0000318"/>
    <property type="project" value="GO_Central"/>
</dbReference>
<dbReference type="GO" id="GO:0140327">
    <property type="term" value="F:flippase activity"/>
    <property type="evidence" value="ECO:0000314"/>
    <property type="project" value="UniProtKB"/>
</dbReference>
<dbReference type="GO" id="GO:0003924">
    <property type="term" value="F:GTPase activity"/>
    <property type="evidence" value="ECO:0000250"/>
    <property type="project" value="UniProtKB"/>
</dbReference>
<dbReference type="GO" id="GO:0140347">
    <property type="term" value="F:N-retinylidene-phosphatidylethanolamine flippase activity"/>
    <property type="evidence" value="ECO:0000250"/>
    <property type="project" value="UniProtKB"/>
</dbReference>
<dbReference type="GO" id="GO:0090555">
    <property type="term" value="F:phosphatidylethanolamine flippase activity"/>
    <property type="evidence" value="ECO:0000314"/>
    <property type="project" value="BHF-UCL"/>
</dbReference>
<dbReference type="GO" id="GO:0005548">
    <property type="term" value="F:phospholipid transporter activity"/>
    <property type="evidence" value="ECO:0000318"/>
    <property type="project" value="GO_Central"/>
</dbReference>
<dbReference type="GO" id="GO:0005501">
    <property type="term" value="F:retinoid binding"/>
    <property type="evidence" value="ECO:0000250"/>
    <property type="project" value="UniProtKB"/>
</dbReference>
<dbReference type="GO" id="GO:0034632">
    <property type="term" value="F:retinol transmembrane transporter activity"/>
    <property type="evidence" value="ECO:0000304"/>
    <property type="project" value="Reactome"/>
</dbReference>
<dbReference type="GO" id="GO:0006869">
    <property type="term" value="P:lipid transport"/>
    <property type="evidence" value="ECO:0000318"/>
    <property type="project" value="GO_Central"/>
</dbReference>
<dbReference type="GO" id="GO:0006649">
    <property type="term" value="P:phospholipid transfer to membrane"/>
    <property type="evidence" value="ECO:0007669"/>
    <property type="project" value="Ensembl"/>
</dbReference>
<dbReference type="GO" id="GO:0045332">
    <property type="term" value="P:phospholipid translocation"/>
    <property type="evidence" value="ECO:0000314"/>
    <property type="project" value="BHF-UCL"/>
</dbReference>
<dbReference type="GO" id="GO:0045494">
    <property type="term" value="P:photoreceptor cell maintenance"/>
    <property type="evidence" value="ECO:0007669"/>
    <property type="project" value="Ensembl"/>
</dbReference>
<dbReference type="GO" id="GO:0007603">
    <property type="term" value="P:phototransduction, visible light"/>
    <property type="evidence" value="ECO:0000304"/>
    <property type="project" value="ProtInc"/>
</dbReference>
<dbReference type="GO" id="GO:0042574">
    <property type="term" value="P:retinal metabolic process"/>
    <property type="evidence" value="ECO:0000314"/>
    <property type="project" value="UniProtKB"/>
</dbReference>
<dbReference type="GO" id="GO:0001523">
    <property type="term" value="P:retinoid metabolic process"/>
    <property type="evidence" value="ECO:0000250"/>
    <property type="project" value="UniProtKB"/>
</dbReference>
<dbReference type="GO" id="GO:0055085">
    <property type="term" value="P:transmembrane transport"/>
    <property type="evidence" value="ECO:0000304"/>
    <property type="project" value="Reactome"/>
</dbReference>
<dbReference type="GO" id="GO:0007601">
    <property type="term" value="P:visual perception"/>
    <property type="evidence" value="ECO:0000304"/>
    <property type="project" value="ProtInc"/>
</dbReference>
<dbReference type="CDD" id="cd03263">
    <property type="entry name" value="ABC_subfamily_A"/>
    <property type="match status" value="2"/>
</dbReference>
<dbReference type="FunFam" id="3.40.50.300:FF:000232">
    <property type="entry name" value="ATP-binding cassette, sub-family A (ABC1), member 1"/>
    <property type="match status" value="1"/>
</dbReference>
<dbReference type="FunFam" id="3.40.50.300:FF:000264">
    <property type="entry name" value="ATP-binding cassette, sub-family A (ABC1), member 1"/>
    <property type="match status" value="1"/>
</dbReference>
<dbReference type="Gene3D" id="3.40.50.300">
    <property type="entry name" value="P-loop containing nucleotide triphosphate hydrolases"/>
    <property type="match status" value="2"/>
</dbReference>
<dbReference type="InterPro" id="IPR003593">
    <property type="entry name" value="AAA+_ATPase"/>
</dbReference>
<dbReference type="InterPro" id="IPR013525">
    <property type="entry name" value="ABC2_TM"/>
</dbReference>
<dbReference type="InterPro" id="IPR003439">
    <property type="entry name" value="ABC_transporter-like_ATP-bd"/>
</dbReference>
<dbReference type="InterPro" id="IPR017871">
    <property type="entry name" value="ABC_transporter-like_CS"/>
</dbReference>
<dbReference type="InterPro" id="IPR026082">
    <property type="entry name" value="ABCA"/>
</dbReference>
<dbReference type="InterPro" id="IPR005951">
    <property type="entry name" value="ABCA4/ABCR"/>
</dbReference>
<dbReference type="InterPro" id="IPR027417">
    <property type="entry name" value="P-loop_NTPase"/>
</dbReference>
<dbReference type="InterPro" id="IPR056264">
    <property type="entry name" value="R2_ABCA1-4-like"/>
</dbReference>
<dbReference type="NCBIfam" id="TIGR01257">
    <property type="entry name" value="rim_protein"/>
    <property type="match status" value="1"/>
</dbReference>
<dbReference type="PANTHER" id="PTHR19229:SF250">
    <property type="entry name" value="ABC TRANSPORTER DOMAIN-CONTAINING PROTEIN-RELATED"/>
    <property type="match status" value="1"/>
</dbReference>
<dbReference type="PANTHER" id="PTHR19229">
    <property type="entry name" value="ATP-BINDING CASSETTE TRANSPORTER SUBFAMILY A ABCA"/>
    <property type="match status" value="1"/>
</dbReference>
<dbReference type="Pfam" id="PF12698">
    <property type="entry name" value="ABC2_membrane_3"/>
    <property type="match status" value="2"/>
</dbReference>
<dbReference type="Pfam" id="PF00005">
    <property type="entry name" value="ABC_tran"/>
    <property type="match status" value="2"/>
</dbReference>
<dbReference type="Pfam" id="PF23321">
    <property type="entry name" value="R1_ABCA1"/>
    <property type="match status" value="1"/>
</dbReference>
<dbReference type="SMART" id="SM00382">
    <property type="entry name" value="AAA"/>
    <property type="match status" value="2"/>
</dbReference>
<dbReference type="SUPFAM" id="SSF52540">
    <property type="entry name" value="P-loop containing nucleoside triphosphate hydrolases"/>
    <property type="match status" value="2"/>
</dbReference>
<dbReference type="PROSITE" id="PS00211">
    <property type="entry name" value="ABC_TRANSPORTER_1"/>
    <property type="match status" value="1"/>
</dbReference>
<dbReference type="PROSITE" id="PS50893">
    <property type="entry name" value="ABC_TRANSPORTER_2"/>
    <property type="match status" value="2"/>
</dbReference>
<name>ABCA4_HUMAN</name>
<comment type="function">
    <text evidence="1 5 33 34 36 39 44 47 48 50">Flippase that catalyzes in an ATP-dependent manner the transport of retinal-phosphatidylethanolamine conjugates like 11-cis and all-trans isomers of N-retinylidene-phosphatidylethanolamine (N-Ret-PE) from the lumen to the cytoplasmic leaflet of photoreceptor outer segment disk membranes, where 11-cis-retinylidene-phosphatidylethanolamine is then isomerized to its all-trans isomer and reduced by RDH8 to produce all-trans-retinol. This transport activity ensures that all-trans-retinal generated from photoexcitation and 11-cis-retinal not needed for the regeneration of rhodopsin and cone opsins are effectively cleared from the photoreceptors, therefore preventing their accumulation and the formation of toxic bisretinoid (PubMed:10075733, PubMed:20404325, PubMed:22735453, PubMed:23144455, PubMed:24097981, PubMed:29847635, PubMed:33375396). Displays ATPase activity in vitro in absence of retinal substrate (PubMed:33605212, PubMed:39128720, PubMed:29847635, PubMed:33375396). May display GTPase activity that is strongly influenced by the lipid environment and the presence of retinoid compounds (PubMed:22735453). Binds the unprotonated form of N-retinylidene-phosphatidylethanolamine with high affinity in the absence of ATP, and ATP binding and hydrolysis induce a protein conformational change that causes N-retinylidene-phosphatidylethanolamine release (By similarity).</text>
</comment>
<comment type="catalytic activity">
    <reaction evidence="34">
        <text>an N-all-trans-retinylidenephosphatidylethanolamine(out) + ATP + H2O = an N-all-trans-retinylidenephosphatidylethanolamine(in) + ADP + phosphate + H(+)</text>
        <dbReference type="Rhea" id="RHEA:67188"/>
        <dbReference type="ChEBI" id="CHEBI:15377"/>
        <dbReference type="ChEBI" id="CHEBI:15378"/>
        <dbReference type="ChEBI" id="CHEBI:30616"/>
        <dbReference type="ChEBI" id="CHEBI:43474"/>
        <dbReference type="ChEBI" id="CHEBI:167884"/>
        <dbReference type="ChEBI" id="CHEBI:456216"/>
    </reaction>
    <physiologicalReaction direction="left-to-right" evidence="60">
        <dbReference type="Rhea" id="RHEA:67189"/>
    </physiologicalReaction>
</comment>
<comment type="catalytic activity">
    <reaction evidence="39">
        <text>ATP + H2O + phospholipidSide 1 = ADP + phosphate + phospholipidSide 2.</text>
        <dbReference type="EC" id="7.6.2.1"/>
    </reaction>
</comment>
<comment type="catalytic activity">
    <reaction evidence="34 39">
        <text>a 1,2-diacyl-sn-glycero-3-phosphoethanolamine(out) + ATP + H2O = a 1,2-diacyl-sn-glycero-3-phosphoethanolamine(in) + ADP + phosphate + H(+)</text>
        <dbReference type="Rhea" id="RHEA:66132"/>
        <dbReference type="ChEBI" id="CHEBI:15377"/>
        <dbReference type="ChEBI" id="CHEBI:15378"/>
        <dbReference type="ChEBI" id="CHEBI:30616"/>
        <dbReference type="ChEBI" id="CHEBI:43474"/>
        <dbReference type="ChEBI" id="CHEBI:64612"/>
        <dbReference type="ChEBI" id="CHEBI:456216"/>
    </reaction>
    <physiologicalReaction direction="left-to-right" evidence="61">
        <dbReference type="Rhea" id="RHEA:66133"/>
    </physiologicalReaction>
</comment>
<comment type="catalytic activity">
    <reaction evidence="1">
        <text>N-11-cis-retinylidenephosphatidylethanolamine(out) + ATP + H2O = N-11-cis-retinylidenephosphatidylethanolamine(in) + ADP + phosphate + H(+)</text>
        <dbReference type="Rhea" id="RHEA:67192"/>
        <dbReference type="ChEBI" id="CHEBI:15377"/>
        <dbReference type="ChEBI" id="CHEBI:15378"/>
        <dbReference type="ChEBI" id="CHEBI:30616"/>
        <dbReference type="ChEBI" id="CHEBI:43474"/>
        <dbReference type="ChEBI" id="CHEBI:167887"/>
        <dbReference type="ChEBI" id="CHEBI:456216"/>
    </reaction>
    <physiologicalReaction direction="left-to-right" evidence="1">
        <dbReference type="Rhea" id="RHEA:67193"/>
    </physiologicalReaction>
</comment>
<comment type="catalytic activity">
    <reaction evidence="44 47 48 50">
        <text>ATP + H2O = ADP + phosphate + H(+)</text>
        <dbReference type="Rhea" id="RHEA:13065"/>
        <dbReference type="ChEBI" id="CHEBI:15377"/>
        <dbReference type="ChEBI" id="CHEBI:15378"/>
        <dbReference type="ChEBI" id="CHEBI:30616"/>
        <dbReference type="ChEBI" id="CHEBI:43474"/>
        <dbReference type="ChEBI" id="CHEBI:456216"/>
    </reaction>
</comment>
<comment type="activity regulation">
    <text evidence="39">ATPase activity is decreased by cholesterol and ceramide. Phospholipids translocase activity is highly reduced by berylium fluoride and aluminum floride. N-ethylmaleimide inhibits phospholipid translocase activity.</text>
</comment>
<comment type="biophysicochemical properties">
    <kinetics>
        <KM evidence="48">80 uM for ATP (at 28 degrees Celsius)</KM>
        <KM evidence="50">240 uM for ATP (at 37 degrees Celsius)</KM>
        <KM evidence="49">50 uM for ATP (in the presence of phosphatidylethanolamine at 37 degrees Celsius)</KM>
        <KM evidence="49">69 uM for ATP (in the presence of all-trans retinal and phosphatidylethanolamine at 37 degrees Celsius)</KM>
        <Vmax evidence="48">112.5 nmol/min/mg enzyme (for basal ATP hydrolysis at 28 degrees Celsius)</Vmax>
        <Vmax evidence="50">136.0 nmol/min/mg enzyme (for basal ATP hydrolysis at 37 degrees Celsius)</Vmax>
        <Vmax evidence="49">75.0 nmol/min/mg enzyme (for ATP hydrolysis in the presence of phosphatidylethanolamine at 37 degrees Celsius)</Vmax>
        <Vmax evidence="49">140.0 nmol/min/mg enzyme (for N-Ret-PE-stimulated ATP hydrolysis in the presence of all-trans retinal and phosphatidylethanolamine at 37 degrees Celsius)</Vmax>
    </kinetics>
</comment>
<comment type="subcellular location">
    <subcellularLocation>
        <location evidence="5">Membrane</location>
        <topology evidence="2">Multi-pass membrane protein</topology>
    </subcellularLocation>
    <subcellularLocation>
        <location evidence="39">Endoplasmic reticulum</location>
    </subcellularLocation>
    <subcellularLocation>
        <location evidence="44 47">Cytoplasmic vesicle</location>
    </subcellularLocation>
    <subcellularLocation>
        <location evidence="1">Cell projection</location>
        <location evidence="1">Cilium</location>
        <location evidence="1">Photoreceptor outer segment</location>
    </subcellularLocation>
    <text evidence="1">Localized to the rim and incisures of rod outer segments disks.</text>
</comment>
<comment type="tissue specificity">
    <text>Retinal-specific. Seems to be exclusively found in the rims of rod photoreceptor cells.</text>
</comment>
<comment type="domain">
    <text evidence="33 36">The second extracellular domain (ECD2, aa 1395-1680) undergoes conformational change in response to its specific interaction with its substrate all-trans-retinal (PubMed:20404325). Nucleotide binding domain 1 (NBD1, aa 854-1375) binds preferentially and with high affinity with the 11-cis retinal (PubMed:23144455).</text>
</comment>
<comment type="PTM">
    <text evidence="16">Proteolytic cleavage by trypsin leads to a 120-kDa N-terminal fragment and a 115-kDa C-terminal fragment that are linked through disulfide bonds.</text>
</comment>
<comment type="PTM">
    <text evidence="16">N-glycosylated.</text>
</comment>
<comment type="PTM">
    <text evidence="1">Phosphorylation is independent of light exposure and modulates ATPase activity.</text>
</comment>
<comment type="disease" evidence="6 7 8 9 10 11 14 17 21 22 23 26 28 29 30 31 33 34 35 36 37 38 39 40 41 42 43 44 47 51 52 53 54 55 56">
    <disease id="DI-01084">
        <name>Stargardt disease 1</name>
        <acronym>STGD1</acronym>
        <description>An autosomal recessive form of Stargardt disease, a retinal degenerative disease characterized by macular dystrophy, progressive bilateral atrophy of the foveal retinal pigment epithelium, and accumulation of fluorescent flecks around the macula and/or in the central and near-peripheral areas of the retina. STGD1 patients typically lose central vision in their first or second decade of life.</description>
        <dbReference type="MIM" id="248200"/>
    </disease>
    <text>The disease is caused by variants affecting the gene represented in this entry.</text>
</comment>
<comment type="disease" evidence="9 19 21 55">
    <disease id="DI-01640">
        <name>Fundus flavimaculatus</name>
        <acronym>FFM</acronym>
        <description>Autosomal recessive retinal disorder very similar to Stargardt disease. In contrast to Stargardt disease, FFM is characterized by later onset and slowly progressive course.</description>
        <dbReference type="MIM" id="248200"/>
    </disease>
    <text>The disease is caused by variants affecting the gene represented in this entry.</text>
</comment>
<comment type="disease" evidence="52">
    <disease id="DI-00056">
        <name>Macular degeneration, age-related, 2</name>
        <acronym>ARMD2</acronym>
        <description>A form of age-related macular degeneration, a multifactorial eye disease and the most common cause of irreversible vision loss in the developed world. In most patients, the disease is manifest as ophthalmoscopically visible yellowish accumulations of protein and lipid that lie beneath the retinal pigment epithelium and within an elastin-containing structure known as Bruch membrane.</description>
        <dbReference type="MIM" id="153800"/>
    </disease>
    <text>Disease susceptibility is associated with variants affecting the gene represented in this entry.</text>
</comment>
<comment type="disease" evidence="9 13 21 22 30 42 43">
    <disease id="DI-00319">
        <name>Cone-rod dystrophy 3</name>
        <acronym>CORD3</acronym>
        <description>An inherited retinal dystrophy characterized by retinal pigment deposits visible on fundus examination, predominantly in the macular region, and initial loss of cone photoreceptors followed by rod degeneration. This leads to decreased visual acuity and sensitivity in the central visual field, followed by loss of peripheral vision. Severe loss of vision occurs earlier than in retinitis pigmentosa, due to cone photoreceptors degenerating at a higher rate than rod photoreceptors.</description>
        <dbReference type="MIM" id="604116"/>
    </disease>
    <text>The disease is caused by variants affecting the gene represented in this entry.</text>
</comment>
<comment type="disease" evidence="9 14 30 42 44">
    <disease id="DI-00985">
        <name>Retinitis pigmentosa 19</name>
        <acronym>RP19</acronym>
        <description>A retinal dystrophy belonging to the group of pigmentary retinopathies. Retinitis pigmentosa is characterized by retinal pigment deposits visible on fundus examination and primary loss of rod photoreceptor cells followed by secondary loss of cone photoreceptors. Patients typically have night vision blindness and loss of midperipheral visual field. As their condition progresses, they lose their far peripheral visual field and eventually central vision as well. RP19 is characterized by choroidal atrophy.</description>
        <dbReference type="MIM" id="601718"/>
    </disease>
    <text>The disease is caused by variants affecting the gene represented in this entry.</text>
</comment>
<comment type="similarity">
    <text evidence="59">Belongs to the ABC transporter superfamily. ABCA family.</text>
</comment>
<comment type="sequence caution" evidence="59">
    <conflict type="erroneous initiation">
        <sequence resource="EMBL-CDS" id="BAE06122"/>
    </conflict>
    <text>Extended N-terminus.</text>
</comment>
<comment type="online information" name="ABCMdb">
    <link uri="http://abcm2.hegelab.org/search"/>
    <text>Database for mutations in ABC proteins</text>
</comment>
<protein>
    <recommendedName>
        <fullName evidence="59">Retinal-specific phospholipid-transporting ATPase ABCA4</fullName>
        <ecNumber evidence="39">7.6.2.1</ecNumber>
    </recommendedName>
    <alternativeName>
        <fullName>ATP-binding cassette sub-family A member 4</fullName>
    </alternativeName>
    <alternativeName>
        <fullName>RIM ABC transporter</fullName>
        <shortName>RIM proteinv</shortName>
        <shortName>RmP</shortName>
    </alternativeName>
    <alternativeName>
        <fullName>Retinal-specific ATP-binding cassette transporter</fullName>
    </alternativeName>
    <alternativeName>
        <fullName>Stargardt disease protein</fullName>
    </alternativeName>
</protein>
<organism>
    <name type="scientific">Homo sapiens</name>
    <name type="common">Human</name>
    <dbReference type="NCBI Taxonomy" id="9606"/>
    <lineage>
        <taxon>Eukaryota</taxon>
        <taxon>Metazoa</taxon>
        <taxon>Chordata</taxon>
        <taxon>Craniata</taxon>
        <taxon>Vertebrata</taxon>
        <taxon>Euteleostomi</taxon>
        <taxon>Mammalia</taxon>
        <taxon>Eutheria</taxon>
        <taxon>Euarchontoglires</taxon>
        <taxon>Primates</taxon>
        <taxon>Haplorrhini</taxon>
        <taxon>Catarrhini</taxon>
        <taxon>Hominidae</taxon>
        <taxon>Homo</taxon>
    </lineage>
</organism>
<feature type="chain" id="PRO_0000093301" description="Retinal-specific phospholipid-transporting ATPase ABCA4">
    <location>
        <begin position="1"/>
        <end position="2273"/>
    </location>
</feature>
<feature type="topological domain" description="Cytoplasmic" evidence="59">
    <location>
        <begin position="1"/>
        <end position="21"/>
    </location>
</feature>
<feature type="transmembrane region" description="Helical" evidence="2">
    <location>
        <begin position="22"/>
        <end position="42"/>
    </location>
</feature>
<feature type="topological domain" description="Extracellular" evidence="16">
    <location>
        <begin position="43"/>
        <end position="646"/>
    </location>
</feature>
<feature type="transmembrane region" description="Helical" evidence="2">
    <location>
        <begin position="647"/>
        <end position="667"/>
    </location>
</feature>
<feature type="topological domain" description="Cytoplasmic" evidence="59">
    <location>
        <begin position="668"/>
        <end position="699"/>
    </location>
</feature>
<feature type="transmembrane region" description="Helical" evidence="2">
    <location>
        <begin position="700"/>
        <end position="720"/>
    </location>
</feature>
<feature type="topological domain" description="Extracellular" evidence="59">
    <location>
        <begin position="721"/>
        <end position="730"/>
    </location>
</feature>
<feature type="transmembrane region" description="Helical" evidence="2">
    <location>
        <begin position="731"/>
        <end position="751"/>
    </location>
</feature>
<feature type="topological domain" description="Cytoplasmic" evidence="59">
    <location>
        <begin position="752"/>
        <end position="759"/>
    </location>
</feature>
<feature type="transmembrane region" description="Helical" evidence="2">
    <location>
        <begin position="760"/>
        <end position="780"/>
    </location>
</feature>
<feature type="topological domain" description="Extracellular" evidence="59">
    <location>
        <begin position="781"/>
        <end position="835"/>
    </location>
</feature>
<feature type="transmembrane region" description="Helical" evidence="2">
    <location>
        <begin position="836"/>
        <end position="856"/>
    </location>
</feature>
<feature type="topological domain" description="Cytoplasmic" evidence="59">
    <location>
        <begin position="857"/>
        <end position="1376"/>
    </location>
</feature>
<feature type="transmembrane region" description="Helical" evidence="2">
    <location>
        <begin position="1377"/>
        <end position="1397"/>
    </location>
</feature>
<feature type="topological domain" description="Extracellular" evidence="16">
    <location>
        <begin position="1398"/>
        <end position="1727"/>
    </location>
</feature>
<feature type="transmembrane region" description="Helical" evidence="2">
    <location>
        <begin position="1728"/>
        <end position="1748"/>
    </location>
</feature>
<feature type="topological domain" description="Cytoplasmic" evidence="59">
    <location>
        <begin position="1749"/>
        <end position="1759"/>
    </location>
</feature>
<feature type="transmembrane region" description="Helical" evidence="2">
    <location>
        <begin position="1760"/>
        <end position="1780"/>
    </location>
</feature>
<feature type="topological domain" description="Extracellular" evidence="59">
    <location>
        <begin position="1781"/>
        <end position="1792"/>
    </location>
</feature>
<feature type="transmembrane region" description="Helical" evidence="2">
    <location>
        <begin position="1793"/>
        <end position="1813"/>
    </location>
</feature>
<feature type="topological domain" description="Cytoplasmic" evidence="59">
    <location>
        <begin position="1814"/>
        <end position="1831"/>
    </location>
</feature>
<feature type="transmembrane region" description="Helical" evidence="2">
    <location>
        <begin position="1832"/>
        <end position="1852"/>
    </location>
</feature>
<feature type="topological domain" description="Extracellular" evidence="59">
    <location>
        <begin position="1853"/>
        <end position="1873"/>
    </location>
</feature>
<feature type="transmembrane region" description="Helical" evidence="2">
    <location>
        <begin position="1874"/>
        <end position="1894"/>
    </location>
</feature>
<feature type="topological domain" description="Cytoplasmic" evidence="59">
    <location>
        <begin position="1895"/>
        <end position="2273"/>
    </location>
</feature>
<feature type="domain" description="ABC transporter 1" evidence="3">
    <location>
        <begin position="929"/>
        <end position="1160"/>
    </location>
</feature>
<feature type="domain" description="ABC transporter 2" evidence="3">
    <location>
        <begin position="1938"/>
        <end position="2170"/>
    </location>
</feature>
<feature type="region of interest" description="Disordered" evidence="4">
    <location>
        <begin position="891"/>
        <end position="911"/>
    </location>
</feature>
<feature type="region of interest" description="Disordered" evidence="4">
    <location>
        <begin position="1284"/>
        <end position="1345"/>
    </location>
</feature>
<feature type="region of interest" description="Essential for ATP binding and ATPase activity" evidence="46">
    <location>
        <begin position="2244"/>
        <end position="2249"/>
    </location>
</feature>
<feature type="compositionally biased region" description="Pro residues" evidence="4">
    <location>
        <begin position="1331"/>
        <end position="1340"/>
    </location>
</feature>
<feature type="binding site" evidence="49 67">
    <location>
        <position position="336"/>
    </location>
    <ligand>
        <name>Mg(2+)</name>
        <dbReference type="ChEBI" id="CHEBI:18420"/>
        <label>1</label>
        <note>in protein in complex with N-all-trans-retinylidenephosphatidylethanolamine</note>
    </ligand>
</feature>
<feature type="binding site" evidence="49 67">
    <location>
        <position position="338"/>
    </location>
    <ligand>
        <name>Mg(2+)</name>
        <dbReference type="ChEBI" id="CHEBI:18420"/>
        <label>1</label>
        <note>in protein in complex with N-all-trans-retinylidenephosphatidylethanolamine</note>
    </ligand>
</feature>
<feature type="binding site" evidence="49 67">
    <location>
        <position position="587"/>
    </location>
    <ligand>
        <name>an N-all-trans-retinylidenephosphatidylethanolamine</name>
        <dbReference type="ChEBI" id="CHEBI:167884"/>
    </ligand>
</feature>
<feature type="binding site" evidence="49 67">
    <location>
        <position position="653"/>
    </location>
    <ligand>
        <name>an N-all-trans-retinylidenephosphatidylethanolamine</name>
        <dbReference type="ChEBI" id="CHEBI:167884"/>
    </ligand>
</feature>
<feature type="binding site" evidence="48 62 65 68">
    <location>
        <position position="938"/>
    </location>
    <ligand>
        <name>ATP</name>
        <dbReference type="ChEBI" id="CHEBI:30616"/>
        <label>1</label>
    </ligand>
</feature>
<feature type="binding site" evidence="48 62 65 68">
    <location>
        <position position="966"/>
    </location>
    <ligand>
        <name>ATP</name>
        <dbReference type="ChEBI" id="CHEBI:30616"/>
        <label>1</label>
    </ligand>
</feature>
<feature type="binding site" evidence="48 62 65 68">
    <location>
        <position position="969"/>
    </location>
    <ligand>
        <name>ATP</name>
        <dbReference type="ChEBI" id="CHEBI:30616"/>
        <label>1</label>
    </ligand>
</feature>
<feature type="binding site" evidence="48 50 65 68">
    <location>
        <position position="970"/>
    </location>
    <ligand>
        <name>Mg(2+)</name>
        <dbReference type="ChEBI" id="CHEBI:18420"/>
        <label>2</label>
        <note>in ATP-bound protein</note>
    </ligand>
</feature>
<feature type="binding site" evidence="48 62 65 68">
    <location>
        <position position="971"/>
    </location>
    <ligand>
        <name>ATP</name>
        <dbReference type="ChEBI" id="CHEBI:30616"/>
        <label>1</label>
    </ligand>
</feature>
<feature type="binding site" evidence="48 62 65 68">
    <location>
        <position position="1010"/>
    </location>
    <ligand>
        <name>ATP</name>
        <dbReference type="ChEBI" id="CHEBI:30616"/>
        <label>1</label>
    </ligand>
</feature>
<feature type="binding site" evidence="48 65">
    <location>
        <position position="1054"/>
    </location>
    <ligand>
        <name>ATP</name>
        <dbReference type="ChEBI" id="CHEBI:30616"/>
        <label>2</label>
    </ligand>
</feature>
<feature type="binding site" evidence="48 65">
    <location>
        <position position="1064"/>
    </location>
    <ligand>
        <name>ATP</name>
        <dbReference type="ChEBI" id="CHEBI:30616"/>
        <label>2</label>
    </ligand>
</feature>
<feature type="binding site" evidence="48 65">
    <location>
        <position position="1065"/>
    </location>
    <ligand>
        <name>ATP</name>
        <dbReference type="ChEBI" id="CHEBI:30616"/>
        <label>2</label>
    </ligand>
</feature>
<feature type="binding site" evidence="48 65">
    <location>
        <position position="1118"/>
    </location>
    <ligand>
        <name>ATP</name>
        <dbReference type="ChEBI" id="CHEBI:30616"/>
        <label>1</label>
    </ligand>
</feature>
<feature type="binding site" evidence="48 65">
    <location>
        <position position="1974"/>
    </location>
    <ligand>
        <name>ATP</name>
        <dbReference type="ChEBI" id="CHEBI:30616"/>
        <label>2</label>
    </ligand>
</feature>
<feature type="binding site" evidence="48 62 65 68">
    <location>
        <position position="1975"/>
    </location>
    <ligand>
        <name>ATP</name>
        <dbReference type="ChEBI" id="CHEBI:30616"/>
        <label>2</label>
    </ligand>
</feature>
<feature type="binding site" evidence="48 62 65 68">
    <location>
        <position position="1978"/>
    </location>
    <ligand>
        <name>ATP</name>
        <dbReference type="ChEBI" id="CHEBI:30616"/>
        <label>2</label>
    </ligand>
</feature>
<feature type="binding site" evidence="48 62 65 68">
    <location>
        <position position="1979"/>
    </location>
    <ligand>
        <name>ATP</name>
        <dbReference type="ChEBI" id="CHEBI:30616"/>
        <label>2</label>
    </ligand>
</feature>
<feature type="binding site" evidence="48 50 65 68">
    <location>
        <position position="1979"/>
    </location>
    <ligand>
        <name>Mg(2+)</name>
        <dbReference type="ChEBI" id="CHEBI:18420"/>
        <label>3</label>
        <note>in ATP-bound protein</note>
    </ligand>
</feature>
<feature type="binding site" evidence="48 62 65 68">
    <location>
        <position position="1980"/>
    </location>
    <ligand>
        <name>ATP</name>
        <dbReference type="ChEBI" id="CHEBI:30616"/>
        <label>2</label>
    </ligand>
</feature>
<feature type="binding site" evidence="48 65">
    <location>
        <position position="2073"/>
    </location>
    <ligand>
        <name>ATP</name>
        <dbReference type="ChEBI" id="CHEBI:30616"/>
        <label>1</label>
    </ligand>
</feature>
<feature type="site" description="Cleavage; by trypsin" evidence="1">
    <location>
        <position position="1309"/>
    </location>
</feature>
<feature type="modified residue" description="Phosphothreonine" evidence="1">
    <location>
        <position position="901"/>
    </location>
</feature>
<feature type="modified residue" description="Phosphoserine" evidence="1">
    <location>
        <position position="1185"/>
    </location>
</feature>
<feature type="modified residue" description="Phosphothreonine" evidence="1">
    <location>
        <position position="1313"/>
    </location>
</feature>
<feature type="modified residue" description="Phosphoserine" evidence="1">
    <location>
        <position position="1317"/>
    </location>
</feature>
<feature type="glycosylation site" description="N-linked (GlcNAc...) asparagine" evidence="16 48 49 64 65 66 67">
    <location>
        <position position="98"/>
    </location>
</feature>
<feature type="glycosylation site" description="N-linked (GlcNAc...) asparagine" evidence="16 48 49 64 65 66 67">
    <location>
        <position position="415"/>
    </location>
</feature>
<feature type="glycosylation site" description="N-linked (GlcNAc...) asparagine" evidence="16 48 49 64 65 66 67">
    <location>
        <position position="444"/>
    </location>
</feature>
<feature type="glycosylation site" description="N-linked (GlcNAc...) asparagine" evidence="16 48 49 64 66 67">
    <location>
        <position position="504"/>
    </location>
</feature>
<feature type="glycosylation site" description="N-linked (GlcNAc...) asparagine" evidence="16 48 49 64 65 66 67">
    <location>
        <position position="1469"/>
    </location>
</feature>
<feature type="glycosylation site" description="N-linked (GlcNAc...) asparagine" evidence="16 48 49 64 65 66 67">
    <location>
        <position position="1529"/>
    </location>
</feature>
<feature type="glycosylation site" description="N-linked (GlcNAc...) asparagine" evidence="16 48 49 64 65 66 67">
    <location>
        <position position="1588"/>
    </location>
</feature>
<feature type="glycosylation site" description="N-linked (GlcNAc...) asparagine" evidence="16 48 49 64 65 66 67">
    <location>
        <position position="1662"/>
    </location>
</feature>
<feature type="disulfide bond" evidence="48 49 64 65 66 67">
    <location>
        <begin position="54"/>
        <end position="81"/>
    </location>
</feature>
<feature type="disulfide bond" evidence="48 49 64 65 66 67">
    <location>
        <begin position="75"/>
        <end position="324"/>
    </location>
</feature>
<feature type="disulfide bond" evidence="48 49 64 65 66 67">
    <location>
        <begin position="370"/>
        <end position="519"/>
    </location>
</feature>
<feature type="disulfide bond" description="Interchain" evidence="48 49 64 65 66 67">
    <location>
        <begin position="641"/>
        <end position="1490"/>
    </location>
</feature>
<feature type="disulfide bond" evidence="48 64 65">
    <location>
        <begin position="1444"/>
        <end position="1455"/>
    </location>
</feature>
<feature type="disulfide bond" evidence="48 49 64 65 66 67">
    <location>
        <begin position="1488"/>
        <end position="1502"/>
    </location>
</feature>
<feature type="sequence variant" id="VAR_012493" description="In FFM; dbSNP:rs62645946." evidence="55">
    <original>L</original>
    <variation>P</variation>
    <location>
        <position position="11"/>
    </location>
</feature>
<feature type="sequence variant" id="VAR_012494" description="In STGD1." evidence="22">
    <location>
        <begin position="13"/>
        <end position="15"/>
    </location>
</feature>
<feature type="sequence variant" id="VAR_084833" description="In STGD1; uncertain significance." evidence="43">
    <original>N</original>
    <variation>K</variation>
    <location>
        <position position="14"/>
    </location>
</feature>
<feature type="sequence variant" id="VAR_084834" description="In STGD1; uncertain significance; dbSNP:rs868543294." evidence="43">
    <original>R</original>
    <variation>P</variation>
    <location>
        <position position="18"/>
    </location>
</feature>
<feature type="sequence variant" id="VAR_008398" description="In STGD1; dbSNP:rs121909205." evidence="26 37 38 54 55">
    <original>R</original>
    <variation>W</variation>
    <location>
        <position position="18"/>
    </location>
</feature>
<feature type="sequence variant" id="VAR_084835" description="In STGD1; uncertain significance." evidence="31">
    <location>
        <begin position="21"/>
        <end position="2273"/>
    </location>
</feature>
<feature type="sequence variant" id="VAR_008399" description="In STGD1; uncertain significance; dbSNP:rs62645958." evidence="37 42 43">
    <original>R</original>
    <variation>H</variation>
    <location>
        <position position="24"/>
    </location>
</feature>
<feature type="sequence variant" id="VAR_084836" description="In CORD3; uncertain significance; dbSNP:rs764744217." evidence="43">
    <location>
        <begin position="53"/>
        <end position="2273"/>
    </location>
</feature>
<feature type="sequence variant" id="VAR_008400" description="In STGD1; dbSNP:rs150774447." evidence="8 9 22 35">
    <original>C</original>
    <variation>Y</variation>
    <location>
        <position position="54"/>
    </location>
</feature>
<feature type="sequence variant" id="VAR_084837" description="In CORD3; uncertain significance." evidence="43">
    <original>H</original>
    <variation>R</variation>
    <location>
        <position position="55"/>
    </location>
</feature>
<feature type="sequence variant" id="VAR_012495" description="In STGD1; dbSNP:rs61748524." evidence="22">
    <original>N</original>
    <variation>K</variation>
    <location>
        <position position="58"/>
    </location>
</feature>
<feature type="sequence variant" id="VAR_012496" description="In STGD1." evidence="14">
    <original>A</original>
    <variation>E</variation>
    <location>
        <position position="60"/>
    </location>
</feature>
<feature type="sequence variant" id="VAR_012497" description="In STGD1; dbSNP:rs61751411." evidence="14">
    <original>A</original>
    <variation>T</variation>
    <location>
        <position position="60"/>
    </location>
</feature>
<feature type="sequence variant" id="VAR_008492" description="In STGD1; dbSNP:rs55732384." evidence="7 22">
    <original>A</original>
    <variation>V</variation>
    <location>
        <position position="60"/>
    </location>
</feature>
<feature type="sequence variant" id="VAR_084838" description="In CORD3; uncertain significance." evidence="43">
    <original>S</original>
    <variation>P</variation>
    <location>
        <position position="63"/>
    </location>
</feature>
<feature type="sequence variant" id="VAR_008401" description="In STGD1 and CORD3; dbSNP:rs62654395." evidence="13 14 22 42">
    <original>G</original>
    <variation>E</variation>
    <location>
        <position position="65"/>
    </location>
</feature>
<feature type="sequence variant" id="VAR_012498" description="In STGD1; dbSNP:rs62654397." evidence="14 31">
    <original>P</original>
    <variation>L</variation>
    <location>
        <position position="68"/>
    </location>
</feature>
<feature type="sequence variant" id="VAR_012499" description="In STGD1; dbSNP:rs62654397." evidence="56">
    <original>P</original>
    <variation>R</variation>
    <location>
        <position position="68"/>
    </location>
</feature>
<feature type="sequence variant" id="VAR_012500" description="In STGD1; pathogenic; does not affect intracellular vesicle localization; does not affect solubility; significantly reduces N-all-trans-retinylidenephosphatidylethanolamine binding; drastically reduces basal and N-Ret-PE-stimulated ATPase activity; dbSNP:rs61751412." evidence="14 44">
    <original>G</original>
    <variation>R</variation>
    <location>
        <position position="72"/>
    </location>
</feature>
<feature type="sequence variant" id="VAR_084839" description="In STGD1; uncertain significance; dbSNP:rs2101162548." evidence="43">
    <original>G</original>
    <variation>V</variation>
    <location>
        <position position="72"/>
    </location>
</feature>
<feature type="sequence variant" id="VAR_008402" description="In STGD1; dbSNP:rs61748526." evidence="56">
    <original>C</original>
    <variation>G</variation>
    <location>
        <position position="75"/>
    </location>
</feature>
<feature type="sequence variant" id="VAR_012501" description="In STGD1; dbSNP:rs61748527." evidence="22">
    <original>V</original>
    <variation>E</variation>
    <location>
        <position position="77"/>
    </location>
</feature>
<feature type="sequence variant" id="VAR_085009" description="In STGD1; uncertain significance." evidence="37">
    <location>
        <begin position="89"/>
        <end position="2273"/>
    </location>
</feature>
<feature type="sequence variant" id="VAR_008403" description="In STGD1; dbSNP:rs61748529." evidence="9">
    <original>N</original>
    <variation>D</variation>
    <location>
        <position position="96"/>
    </location>
</feature>
<feature type="sequence variant" id="VAR_008404" description="In STGD1; uncertain significance; dbSNP:rs61748529." evidence="9 31">
    <original>N</original>
    <variation>H</variation>
    <location>
        <position position="96"/>
    </location>
</feature>
<feature type="sequence variant" id="VAR_084840" description="In STGD1; uncertain significance; dbSNP:rs886039297." evidence="26 31">
    <original>N</original>
    <variation>K</variation>
    <location>
        <position position="96"/>
    </location>
</feature>
<feature type="sequence variant" id="VAR_084841" description="In STGD1; uncertain significance; dbSNP:rs755691060." evidence="43">
    <original>Y</original>
    <variation>C</variation>
    <location>
        <position position="97"/>
    </location>
</feature>
<feature type="sequence variant" id="VAR_012502" description="In STGD1; likely pathogenic; decreased ATPase activity; decreased phospholipid translocase activity; dbSNP:rs61748530." evidence="17 39">
    <original>S</original>
    <variation>P</variation>
    <location>
        <position position="100"/>
    </location>
</feature>
<feature type="sequence variant" id="VAR_084842" description="In CORD3; uncertain significance; dbSNP:rs765429911." evidence="43">
    <location>
        <begin position="107"/>
        <end position="2273"/>
    </location>
</feature>
<feature type="sequence variant" id="VAR_084843" description="In STGD1; uncertain significance; dbSNP:rs1662508600." evidence="26">
    <original>D</original>
    <variation>V</variation>
    <location>
        <position position="108"/>
    </location>
</feature>
<feature type="sequence variant" id="VAR_084844" description="In STGD1; uncertain significance; dbSNP:rs62646860." evidence="26">
    <original>P</original>
    <variation>L</variation>
    <location>
        <position position="143"/>
    </location>
</feature>
<feature type="sequence variant" id="VAR_012503" description="In STGD1; dbSNP:rs62646862." evidence="14 26 35">
    <original>R</original>
    <variation>Q</variation>
    <location>
        <position position="152"/>
    </location>
</feature>
<feature type="sequence variant" id="VAR_090218" description="In STGD1; uncertain significance." evidence="38">
    <original>I</original>
    <variation>L</variation>
    <location>
        <position position="153"/>
    </location>
</feature>
<feature type="sequence variant" id="VAR_012504" description="In STGD1 and RP19; dbSNP:rs62646863." evidence="9 29 30">
    <original>I</original>
    <variation>V</variation>
    <location>
        <position position="156"/>
    </location>
</feature>
<feature type="sequence variant" id="VAR_084845" description="In STGD1; uncertain significance; dbSNP:rs61748532." evidence="31">
    <original>G</original>
    <variation>S</variation>
    <location>
        <position position="172"/>
    </location>
</feature>
<feature type="sequence variant" id="VAR_084846" description="In STGD1; uncertain significance." evidence="35">
    <original>S</original>
    <variation>F</variation>
    <location>
        <position position="184"/>
    </location>
</feature>
<feature type="sequence variant" id="VAR_084847" description="In STGD1; uncertain significance." evidence="35">
    <original>S</original>
    <variation>R</variation>
    <location>
        <position position="184"/>
    </location>
</feature>
<feature type="sequence variant" id="VAR_084848" description="In STGD1; uncertain significance." evidence="43">
    <location>
        <begin position="185"/>
        <end position="2273"/>
    </location>
</feature>
<feature type="sequence variant" id="VAR_012505" description="In STGD1; dbSNP:rs281865397." evidence="22">
    <original>Q</original>
    <variation>H</variation>
    <location>
        <position position="190"/>
    </location>
</feature>
<feature type="sequence variant" id="VAR_008405" description="In STGD1; dbSNP:rs61748535." evidence="17">
    <original>A</original>
    <variation>T</variation>
    <location>
        <position position="192"/>
    </location>
</feature>
<feature type="sequence variant" id="VAR_012506" description="In STGD1; uncertain significance; reduced basal and retinal-stimulated ATP-hydrolysis; dbSNP:rs61748536." evidence="7 15">
    <original>S</original>
    <variation>R</variation>
    <location>
        <position position="206"/>
    </location>
</feature>
<feature type="sequence variant" id="VAR_008406" description="In STGD1 and CORD3; likely pathogenic; common mutation in southern Europe; dbSNP:rs61750200." evidence="10 13 14 21 29 31 35 37 38 41 54 55">
    <original>R</original>
    <variation>C</variation>
    <location>
        <position position="212"/>
    </location>
</feature>
<feature type="sequence variant" id="VAR_012507" description="In dbSNP:rs6657239." evidence="10 14 19 20 22 26">
    <original>R</original>
    <variation>H</variation>
    <location>
        <position position="212"/>
    </location>
</feature>
<feature type="sequence variant" id="VAR_084849" description="In CORD3; uncertain significance." evidence="43">
    <location>
        <begin position="218"/>
        <end position="2273"/>
    </location>
</feature>
<feature type="sequence variant" id="VAR_084850" description="Found in a patient with chorioretinal atrophy; uncertain significance." evidence="35">
    <location>
        <begin position="219"/>
        <end position="2273"/>
    </location>
</feature>
<feature type="sequence variant" id="VAR_012508" description="In STGD1; dbSNP:rs61748538." evidence="17">
    <original>R</original>
    <variation>C</variation>
    <location>
        <position position="220"/>
    </location>
</feature>
<feature type="sequence variant" id="VAR_084851" description="In STGD1; uncertain significance; dbSNP:rs147619585." evidence="26">
    <original>K</original>
    <variation>Q</variation>
    <location>
        <position position="223"/>
    </location>
</feature>
<feature type="sequence variant" id="VAR_035736" description="In a breast cancer sample; somatic mutation; dbSNP:rs373540612." evidence="27">
    <original>T</original>
    <variation>M</variation>
    <location>
        <position position="224"/>
    </location>
</feature>
<feature type="sequence variant" id="VAR_012509" description="In STGD1; dbSNP:rs1057518767." evidence="14 26">
    <original>C</original>
    <variation>S</variation>
    <location>
        <position position="230"/>
    </location>
</feature>
<feature type="sequence variant" id="VAR_084852" description="In STGD1; uncertain significance; dbSNP:rs1553195472." evidence="43">
    <original>I</original>
    <variation>R</variation>
    <location>
        <position position="240"/>
    </location>
</feature>
<feature type="sequence variant" id="VAR_085010" description="In STGD1; uncertain significance." evidence="37">
    <original>E</original>
    <variation>D</variation>
    <location>
        <position position="241"/>
    </location>
</feature>
<feature type="sequence variant" id="VAR_012510" description="In STGD1; dbSNP:rs62646864." evidence="22">
    <original>L</original>
    <variation>P</variation>
    <location>
        <position position="244"/>
    </location>
</feature>
<feature type="sequence variant" id="VAR_084853" description="In STGD1; uncertain significance." evidence="26">
    <location>
        <begin position="245"/>
        <end position="2273"/>
    </location>
</feature>
<feature type="sequence variant" id="VAR_084854" description="In STGD1; uncertain significance; dbSNP:rs1662207986." evidence="26">
    <original>A</original>
    <variation>T</variation>
    <location>
        <position position="246"/>
    </location>
</feature>
<feature type="sequence variant" id="VAR_012511" description="In STGD1; dbSNP:rs62645950." evidence="14 42">
    <original>N</original>
    <variation>S</variation>
    <location>
        <position position="247"/>
    </location>
</feature>
<feature type="sequence variant" id="VAR_008407" description="In STGD1; dbSNP:rs62646865." evidence="56">
    <original>D</original>
    <variation>G</variation>
    <location>
        <position position="249"/>
    </location>
</feature>
<feature type="sequence variant" id="VAR_085011" description="In STGD1; uncertain significance; dbSNP:rs781716640." evidence="37">
    <original>R</original>
    <variation>W</variation>
    <location>
        <position position="290"/>
    </location>
</feature>
<feature type="sequence variant" id="VAR_090219" description="In STGD1; uncertain significance." evidence="38">
    <original>P</original>
    <variation>A</variation>
    <location>
        <position position="291"/>
    </location>
</feature>
<feature type="sequence variant" id="VAR_084855" description="In STGD1; uncertain significance; dbSNP:rs190540405." evidence="43">
    <original>P</original>
    <variation>L</variation>
    <location>
        <position position="291"/>
    </location>
</feature>
<feature type="sequence variant" id="VAR_008408" description="In STGD1; dbSNP:rs61748544." evidence="7">
    <original>T</original>
    <variation>N</variation>
    <location>
        <position position="300"/>
    </location>
</feature>
<feature type="sequence variant" id="VAR_012512" description="In STGD1; dbSNP:rs61748545." evidence="22">
    <original>P</original>
    <variation>R</variation>
    <location>
        <position position="309"/>
    </location>
</feature>
<feature type="sequence variant" id="VAR_084856" description="In CORD3; uncertain significance." evidence="43">
    <original>S</original>
    <variation>C</variation>
    <location>
        <position position="320"/>
    </location>
</feature>
<feature type="sequence variant" id="VAR_084857" description="In STGD1; uncertain significance; dbSNP:rs747540967." evidence="43">
    <location>
        <begin position="326"/>
        <end position="2273"/>
    </location>
</feature>
<feature type="sequence variant" id="VAR_012513" description="In STGD1; dbSNP:rs61751419." evidence="14 43">
    <original>E</original>
    <variation>V</variation>
    <location>
        <position position="328"/>
    </location>
</feature>
<feature type="sequence variant" id="VAR_012514" description="In STGD1; dbSNP:rs61748546." evidence="17">
    <original>R</original>
    <variation>W</variation>
    <location>
        <position position="333"/>
    </location>
</feature>
<feature type="sequence variant" id="VAR_008409" description="In STGD1; dbSNP:rs61748547." evidence="56">
    <original>S</original>
    <variation>C</variation>
    <location>
        <position position="336"/>
    </location>
</feature>
<feature type="sequence variant" id="VAR_084858" description="In CORD3; uncertain significance." evidence="43">
    <location>
        <begin position="339"/>
        <end position="2273"/>
    </location>
</feature>
<feature type="sequence variant" id="VAR_012515" description="In FFM; loss of N-Ret-PE-stimulated ATPase activity and no effect on basal activity; decreased N-retinylidene-phosphatidylethanolamine flippase activity; 2-fold decreased affinity for N-all-trans-retinylidenephosphatidylethanolamine compared to wild-type values; dbSNP:rs61751420." evidence="19 49">
    <original>W</original>
    <variation>G</variation>
    <location>
        <position position="339"/>
    </location>
</feature>
<feature type="sequence variant" id="VAR_008410" description="In STGD1; dbSNP:rs61748548." evidence="11">
    <original>Y</original>
    <variation>D</variation>
    <location>
        <position position="340"/>
    </location>
</feature>
<feature type="sequence variant" id="VAR_084859" description="In STGD1; uncertain significance; dbSNP:rs1417184535." evidence="43">
    <original>Y</original>
    <variation>S</variation>
    <location>
        <position position="345"/>
    </location>
</feature>
<feature type="sequence variant" id="VAR_012516" description="In STGD1; dbSNP:rs61748549." evidence="29">
    <original>N</original>
    <variation>K</variation>
    <location>
        <position position="380"/>
    </location>
</feature>
<feature type="sequence variant" id="VAR_008411" description="In STGD1 and CORD3; dbSNP:rs61751264." evidence="9">
    <original>A</original>
    <variation>V</variation>
    <location>
        <position position="407"/>
    </location>
</feature>
<feature type="sequence variant" id="VAR_084860" description="In STGD1; uncertain significance." evidence="43">
    <original>I</original>
    <variation>T</variation>
    <location>
        <position position="410"/>
    </location>
</feature>
<feature type="sequence variant" id="VAR_084861" description="In STGD1; uncertain significance; dbSNP:rs1661605073." evidence="31">
    <original>N</original>
    <variation>K</variation>
    <location>
        <position position="415"/>
    </location>
</feature>
<feature type="sequence variant" id="VAR_084862" description="In STGD1; uncertain significance; dbSNP:rs794726979." evidence="35">
    <original>F</original>
    <variation>S</variation>
    <location>
        <position position="418"/>
    </location>
</feature>
<feature type="sequence variant" id="VAR_012517" description="In dbSNP:rs3112831." evidence="14 19 20 22 24 26 43">
    <original>H</original>
    <variation>R</variation>
    <location>
        <position position="423"/>
    </location>
</feature>
<feature type="sequence variant" id="VAR_085012" description="In STGD1 and RP19; uncertain significance; dbSNP:rs1661603358." evidence="9">
    <original>V</original>
    <variation>A</variation>
    <location>
        <position position="424"/>
    </location>
</feature>
<feature type="sequence variant" id="VAR_084863" description="In STGD1; uncertain significance." evidence="42">
    <location>
        <begin position="431"/>
        <end position="2273"/>
    </location>
</feature>
<feature type="sequence variant" id="VAR_084864" description="In CORD3; uncertain significance; dbSNP:rs770439859." evidence="42">
    <original>Y</original>
    <variation>C</variation>
    <location>
        <position position="440"/>
    </location>
</feature>
<feature type="sequence variant" id="VAR_008412" description="In STGD1; dbSNP:rs61748552." evidence="9">
    <original>S</original>
    <variation>R</variation>
    <location>
        <position position="445"/>
    </location>
</feature>
<feature type="sequence variant" id="VAR_090239" description="In STGD1; likely pathogenic; no effect on solubility; no effect on localization to cytoplasmic vesicle; decreased basal and N-Ret-PE-stimulated ATPase activity; decreased N-all-trans-retinylidenephosphatidylethanolamine binding; dbSNP:rs777078540." evidence="44">
    <original>M</original>
    <variation>K</variation>
    <location>
        <position position="448"/>
    </location>
</feature>
<feature type="sequence variant" id="VAR_084865" description="In RP19; uncertain significance; dbSNP:rs764170051." evidence="42">
    <original>L</original>
    <variation>M</variation>
    <location>
        <position position="455"/>
    </location>
</feature>
<feature type="sequence variant" id="VAR_008413" description="In ARMD2 and STGD1; uncertain significance; ATP-binding capacity and retinal stimulation as in wild-type; dbSNP:rs1800548." evidence="14 15 35 52">
    <original>E</original>
    <variation>K</variation>
    <location>
        <position position="471"/>
    </location>
</feature>
<feature type="sequence variant" id="VAR_084866" description="In STGD1; uncertain significance; dbSNP:rs1661575300." evidence="26">
    <original>D</original>
    <variation>E</variation>
    <location>
        <position position="498"/>
    </location>
</feature>
<feature type="sequence variant" id="VAR_084867" description="In STGD1; uncertain significance; dbSNP:rs138157885." evidence="43">
    <original>R</original>
    <variation>C</variation>
    <location>
        <position position="508"/>
    </location>
</feature>
<feature type="sequence variant" id="VAR_084868" description="In STGD1; uncertain significance; dbSNP:rs752786160." evidence="43">
    <original>R</original>
    <variation>C</variation>
    <location>
        <position position="511"/>
    </location>
</feature>
<feature type="sequence variant" id="VAR_084869" description="In STGD1; uncertain significance; dbSNP:rs1224959251." evidence="43">
    <original>C</original>
    <variation>R</variation>
    <location>
        <position position="519"/>
    </location>
</feature>
<feature type="sequence variant" id="VAR_008414" description="In STGD1; dbSNP:rs62646868." evidence="56">
    <original>D</original>
    <variation>E</variation>
    <location>
        <position position="523"/>
    </location>
</feature>
<feature type="sequence variant" id="VAR_012518" description="In STGD1; dbSNP:rs1661181033." evidence="22">
    <original>F</original>
    <variation>C</variation>
    <location>
        <position position="525"/>
    </location>
</feature>
<feature type="sequence variant" id="VAR_084870" description="In STGD1; uncertain significance." evidence="43">
    <location>
        <begin position="533"/>
        <end position="2273"/>
    </location>
</feature>
<feature type="sequence variant" id="VAR_012519" description="In STGD1; dbSNP:rs61748556." evidence="22 38 43">
    <original>R</original>
    <variation>C</variation>
    <location>
        <position position="537"/>
    </location>
</feature>
<feature type="sequence variant" id="VAR_008415" description="In STGD1, FFM and CORD3; pathogenic; does not affect solubility; does not affect intracellular vesicle localization; significantly reduces N-all-trans-retinylidenephosphatidylethanolamine binding; drastically reduces basal and N-Ret-PE-stimulated ATPase activity; dbSNP:rs61751392." evidence="7 13 14 15 22 26 31 38 41 42 44 55">
    <original>L</original>
    <variation>P</variation>
    <location>
        <position position="541"/>
    </location>
</feature>
<feature type="sequence variant" id="VAR_084871" description="In STGD1; uncertain significance." evidence="43">
    <original>W</original>
    <variation>R</variation>
    <location>
        <position position="548"/>
    </location>
</feature>
<feature type="sequence variant" id="VAR_012520" description="In STGD1; dbSNP:rs61748557." evidence="22">
    <original>A</original>
    <variation>P</variation>
    <location>
        <position position="549"/>
    </location>
</feature>
<feature type="sequence variant" id="VAR_012521" description="In STGD1; dbSNP:rs61748558." evidence="22 26 29 43">
    <original>G</original>
    <variation>R</variation>
    <location>
        <position position="550"/>
    </location>
</feature>
<feature type="sequence variant" id="VAR_012522" description="In RP19; benign; no effect on N-all-trans-retinylidenephosphatidylethanolamine binding; does not affect solubility; does not affect intracellular vesicle localization; does not affect basal and N-Ret-PE-stimulated ATPase activity; dbSNP:rs145525174." evidence="14 30 42 44">
    <original>V</original>
    <variation>I</variation>
    <location>
        <position position="552"/>
    </location>
</feature>
<feature type="sequence variant" id="VAR_084872" description="In STGD1; uncertain significance." evidence="31">
    <location>
        <begin position="572"/>
        <end position="2273"/>
    </location>
</feature>
<feature type="sequence variant" id="VAR_008416" description="In STGD1; dbSNP:rs61748559." evidence="29">
    <original>R</original>
    <variation>P</variation>
    <location>
        <position position="572"/>
    </location>
</feature>
<feature type="sequence variant" id="VAR_008417" description="In STGD1; dbSNP:rs61748559." evidence="11 14 26">
    <original>R</original>
    <variation>Q</variation>
    <location>
        <position position="572"/>
    </location>
</feature>
<feature type="sequence variant" id="VAR_084873" description="Found in a patient with pattern dystrophy; uncertain significance; dbSNP:rs374224955." evidence="35">
    <original>D</original>
    <variation>H</variation>
    <location>
        <position position="576"/>
    </location>
</feature>
<feature type="sequence variant" id="VAR_084874" description="In STGD1; uncertain significance." evidence="43">
    <original>P</original>
    <variation>L</variation>
    <location>
        <position position="593"/>
    </location>
</feature>
<feature type="sequence variant" id="VAR_012523" description="In STGD1; dbSNP:rs61749410." evidence="22">
    <original>R</original>
    <variation>Q</variation>
    <location>
        <position position="602"/>
    </location>
</feature>
<feature type="sequence variant" id="VAR_008418" description="In STGD1; dbSNP:rs61749409." evidence="9 29 30 37 38 40 43">
    <original>R</original>
    <variation>W</variation>
    <location>
        <position position="602"/>
    </location>
</feature>
<feature type="sequence variant" id="VAR_084875" description="In STGD1; uncertain significance." evidence="43">
    <original>Y</original>
    <variation>C</variation>
    <location>
        <position position="603"/>
    </location>
</feature>
<feature type="sequence variant" id="VAR_084876" description="In CORD3; uncertain significance." evidence="43">
    <location>
        <begin position="605"/>
        <end position="2273"/>
    </location>
</feature>
<feature type="sequence variant" id="VAR_012524" description="In STGD1; dbSNP:rs61749412." evidence="14 22 29 42 43">
    <original>G</original>
    <variation>R</variation>
    <location>
        <position position="607"/>
    </location>
</feature>
<feature type="sequence variant" id="VAR_012525" description="In STGD1; dbSNP:rs61749412." evidence="17">
    <original>G</original>
    <variation>W</variation>
    <location>
        <position position="607"/>
    </location>
</feature>
<feature type="sequence variant" id="VAR_008419" description="In STGD1; likely pathogenic; dbSNP:rs61752398." evidence="56">
    <original>F</original>
    <variation>I</variation>
    <location>
        <position position="608"/>
    </location>
</feature>
<feature type="sequence variant" id="VAR_090208" description="In STGD1; likely pathogenic; highly decreased ATPase activity; highly decreased phospholipid translocase activity; dbSNP:rs61752398." evidence="39">
    <original>F</original>
    <variation>L</variation>
    <location>
        <position position="608"/>
    </location>
</feature>
<feature type="sequence variant" id="VAR_090220" description="In STGD1; dbSNP:rs760735952." evidence="38">
    <original>L</original>
    <variation>P</variation>
    <location>
        <position position="611"/>
    </location>
</feature>
<feature type="sequence variant" id="VAR_084877" description="In STGD1; uncertain significance; dbSNP:rs1557787473." evidence="31">
    <original>E</original>
    <variation>K</variation>
    <location>
        <position position="616"/>
    </location>
</feature>
<feature type="sequence variant" id="VAR_012526" description="In STGD1; dbSNP:rs61749414." evidence="14">
    <original>Q</original>
    <variation>K</variation>
    <location>
        <position position="635"/>
    </location>
</feature>
<feature type="sequence variant" id="VAR_012527" description="In STGD1; dbSNP:rs61752400." evidence="55">
    <original>Q</original>
    <variation>H</variation>
    <location>
        <position position="636"/>
    </location>
</feature>
<feature type="sequence variant" id="VAR_084878" description="In CORD3; uncertain significance." evidence="43">
    <original>Q</original>
    <variation>K</variation>
    <location>
        <position position="636"/>
    </location>
</feature>
<feature type="sequence variant" id="VAR_084879" description="In STGD1; uncertain significance." evidence="26">
    <location>
        <begin position="639"/>
        <end position="2273"/>
    </location>
</feature>
<feature type="sequence variant" id="VAR_085013" description="In STGD1; uncertain significance; dbSNP:rs760790294." evidence="41">
    <original>P</original>
    <variation>L</variation>
    <location>
        <position position="640"/>
    </location>
</feature>
<feature type="sequence variant" id="VAR_084880" description="In STGD1; uncertain significance; dbSNP:rs61749416." evidence="26">
    <original>C</original>
    <variation>S</variation>
    <location>
        <position position="641"/>
    </location>
</feature>
<feature type="sequence variant" id="VAR_008420" description="In CORD3; uncertain significance; dbSNP:rs61754024." evidence="42 52">
    <original>V</original>
    <variation>G</variation>
    <location>
        <position position="643"/>
    </location>
</feature>
<feature type="sequence variant" id="VAR_012528" description="In STGD1; dbSNP:rs61749417." evidence="22 35">
    <original>V</original>
    <variation>M</variation>
    <location>
        <position position="643"/>
    </location>
</feature>
<feature type="sequence variant" id="VAR_008421" description="In STGD1; dbSNP:rs61749418." evidence="43">
    <original>D</original>
    <variation>N</variation>
    <location>
        <position position="645"/>
    </location>
</feature>
<feature type="sequence variant" id="VAR_012529" description="In STGD1; likely pathogenic; severely decreased, if any, N-Ret-PE-stimulated ATPase activity although basal activity is unchanged; decreased N-retinylidene-phosphatidylethanolamine flippase activity; severely decreased N-all-trans-retinylidenephosphatidylethanolamine binding; does not affect solubility; does not affect location in cytoplasmic vesicle; dbSNP:rs61749420." evidence="14 26 29 31 35 38 47 49">
    <original>R</original>
    <variation>C</variation>
    <location>
        <position position="653"/>
    </location>
</feature>
<feature type="sequence variant" id="VAR_084881" description="In STGD1; likely pathogenic; severely decreased N-all-trans-retinylidenephosphatidylethanolamine binding; does not affect solubility; does not affect location in cytoplasmic vesicle; does not affect both basal and N-Ret-PE-stimulated ATPase activity; dbSNP:rs141823837." evidence="42 43 47">
    <original>R</original>
    <variation>H</variation>
    <location>
        <position position="653"/>
    </location>
</feature>
<feature type="sequence variant" id="VAR_084882" description="In CORD3; pathogenic; severely decreases solubility; loss of cytoplasmic vesicle localization; severe decrease of basal and N-Ret-PE-stimulated ATPase activity; severely decreased N-all-trans-retinylidenephosphatidylethanolamine binding." evidence="43 47">
    <original>L</original>
    <variation>R</variation>
    <location>
        <position position="661"/>
    </location>
</feature>
<feature type="sequence variant" id="VAR_084883" description="Found in a patient with macular dystrophy; uncertain significance." evidence="42">
    <location>
        <begin position="681"/>
        <end position="2273"/>
    </location>
</feature>
<feature type="sequence variant" id="VAR_012530" description="In STGD1; pathogenic; severely decreases solubility; loss of cytoplasmic vesicle localization; severe decrease of basal and N-Ret-PE-stimulated ATPase activity; severely decreased N-all-trans-retinylidenephosphatidylethanolamine binding; dbSNP:rs61752402." evidence="21 38 47">
    <original>L</original>
    <variation>S</variation>
    <location>
        <position position="686"/>
    </location>
</feature>
<feature type="sequence variant" id="VAR_084884" description="In STGD1; pathogenic; severely decreases solubility; loss of cytoplasmic vesicle localization; decreases basal and N-Ret-PE-stimulated ATPase activity below 50% of wild-type values; severely decreased N-all-trans-retinylidenephosphatidylethanolamine binding; dbSNP:rs942734318." evidence="26 31 47">
    <original>G</original>
    <variation>V</variation>
    <location>
        <position position="690"/>
    </location>
</feature>
<feature type="sequence variant" id="VAR_084885" description="In STGD1; uncertain significance." evidence="26 31">
    <location>
        <begin position="700"/>
        <end position="2273"/>
    </location>
</feature>
<feature type="sequence variant" id="VAR_012531" description="In STGD1; uncertain significance; does not affect solubility; does not affect location in cytoplasmic vesicle; does not affect both basal and N-Ret-PE-stimulated ATPase activity; modest decrease of N-all-trans-retinylidenephosphatidylethanolamine binding; dbSNP:rs61749426." evidence="17 47">
    <original>T</original>
    <variation>M</variation>
    <location>
        <position position="716"/>
    </location>
</feature>
<feature type="sequence variant" id="VAR_014703" description="In dbSNP:rs1801369.">
    <original>S</original>
    <variation>I</variation>
    <location>
        <position position="752"/>
    </location>
</feature>
<feature type="sequence variant" id="VAR_084886" description="In STGD1; uncertain significance." evidence="43">
    <original>F</original>
    <variation>S</variation>
    <location>
        <position position="754"/>
    </location>
</feature>
<feature type="sequence variant" id="VAR_067427" description="In STGD1; dbSNP:rs1660993194." evidence="30 38">
    <original>A</original>
    <variation>E</variation>
    <location>
        <position position="762"/>
    </location>
</feature>
<feature type="sequence variant" id="VAR_012532" description="In STGD1; likely pathogenic; does not affect solubility; does not affect location in cytoplasmic vesicle; does not affect both basal and N-Ret-PE-stimulated ATPase activity; modest decrease of N-all-trans-retinylidenephosphatidylethanolamine binding; dbSNP:rs61749428." evidence="14 17 47">
    <original>C</original>
    <variation>Y</variation>
    <location>
        <position position="764"/>
    </location>
</feature>
<feature type="sequence variant" id="VAR_012534" description="In STGD1; likely pathogenic; severely decreases solubility; loss of cytoplasmic vesicle localization; decreases basal and N-Ret-PE-stimulated ATPase activity below 50% of wild-type values; severely decreased N-all-trans-retinylidenephosphatidylethanolamine binding; dbSNP:rs61749429." evidence="17 47">
    <original>S</original>
    <variation>N</variation>
    <location>
        <position position="765"/>
    </location>
</feature>
<feature type="sequence variant" id="VAR_012533" description="In STGD1; likely pathogenic; severely decreases solubility; loss of cytoplasmic vesicle localization; severe decrease of basal and N-Ret-PE-stimulated ATPase activity; severely decreased N-all-trans-retinylidenephosphatidylethanolamine binding; dbSNP:rs61752404." evidence="14 47">
    <original>S</original>
    <variation>R</variation>
    <location>
        <position position="765"/>
    </location>
</feature>
<feature type="sequence variant" id="VAR_012535" description="In STGD1; pathogenic; severely decreases solubility; loss of cytoplasmic vesicle localization; decreases basal and N-Ret-PE-stimulated ATPase activity below 50% of wild-type values; severely decreased N-all-trans-retinylidenephosphatidylethanolamine binding; dbSNP:rs61751395." evidence="10 22 26 29 31 41 47">
    <original>V</original>
    <variation>D</variation>
    <location>
        <position position="767"/>
    </location>
</feature>
<feature type="sequence variant" id="VAR_085014" description="In STGD1; uncertain significance." evidence="9">
    <location>
        <begin position="779"/>
        <end position="2273"/>
    </location>
</feature>
<feature type="sequence variant" id="VAR_084887" description="In STGD1; uncertain significance." evidence="35">
    <location>
        <begin position="782"/>
        <end position="2273"/>
    </location>
</feature>
<feature type="sequence variant" id="VAR_012536" description="In STGD1; likely pathogenic; severely decreases solubility; loss of cytoplasmic vesicle localization; decreases basal and N-Ret-PE-induced ATPase activity to 20-30% of wild-type values; severely decreased N-all-trans-retinylidenephosphatidylethanolamine binding; dbSNP:rs61749432." evidence="22 47">
    <original>L</original>
    <variation>P</variation>
    <location>
        <position position="797"/>
    </location>
</feature>
<feature type="sequence variant" id="VAR_084888" description="In STGD1; uncertain significance." evidence="43">
    <location>
        <begin position="808"/>
        <end position="2273"/>
    </location>
</feature>
<feature type="sequence variant" id="VAR_084889" description="In STGD1; uncertain significance." evidence="43">
    <original>G</original>
    <variation>V</variation>
    <location>
        <position position="816"/>
    </location>
</feature>
<feature type="sequence variant" id="VAR_008422" description="In STGD1; pathogenic; moderately decreases solubility; loss of cytoplasmic vesicle localization; decreases basal and N-Ret-PE-stimulated ATPase activity; decreased N-all-trans-retinylidenephosphatidylethanolamine binding; dbSNP:rs61750202." evidence="37 47 51">
    <original>G</original>
    <variation>E</variation>
    <location>
        <position position="818"/>
    </location>
</feature>
<feature type="sequence variant" id="VAR_008423" description="In STGD1; pathogenic; moderately decreases solubility; loss of cytoplasmic vesicle localization; decreases basal and N-Ret-PE-stimulated ATPase activity to 50-60% of wild-type values; severely decreased N-all-trans-retinylidenephosphatidylethanolamine binding; dbSNP:rs61749433." evidence="22 26 31 47 56">
    <original>W</original>
    <variation>R</variation>
    <location>
        <position position="821"/>
    </location>
</feature>
<feature type="sequence variant" id="VAR_012537" description="In STGD1; likely pathogenic; moderately decreases solubility; loss of cytoplasmic vesicle localization; decreases basal and N-Ret-PE-stimulated ATPase activity to 60-70% of wild-type values; severely decreased N-all-trans-retinylidenephosphatidylethanolamine binding; dbSNP:rs1660942697." evidence="22 47">
    <original>I</original>
    <variation>T</variation>
    <location>
        <position position="824"/>
    </location>
</feature>
<feature type="sequence variant" id="VAR_084890" description="In STGD1; likely pathogenic; severely decreases solubility; loss of cytoplasmic vesicle localization; decreases basal and N-Ret-PE-stimulated ATPase activity to 20-40% of wild-type values; severely decreased N-all-trans-retinylidenephosphatidylethanolamine binding." evidence="31 47">
    <original>M</original>
    <variation>R</variation>
    <location>
        <position position="840"/>
    </location>
</feature>
<feature type="sequence variant" id="VAR_008493" description="In STGD1; likely pathogenic; severely decreases solubility; loss of cytoplasmic vesicle localization; decreases basal and N-Ret-PE-stimulated ATPase activity; severely decreased N-all-trans-retinylidenephosphatidylethanolamine binding; dbSNP:rs61754027." evidence="47 51 52 56">
    <original>D</original>
    <variation>H</variation>
    <location>
        <position position="846"/>
    </location>
</feature>
<feature type="sequence variant" id="VAR_012538" description="In STGD1; uncertain significance; does not affect solubility; does not affect location in cytoplasmic vesicle; does not affect both basal and N-Ret-PE-stimulated ATPase activity; decreases N-all-trans-retinylidenephosphatidylethanolamine binding; dbSNP:rs61749435." evidence="7 47">
    <original>V</original>
    <variation>A</variation>
    <location>
        <position position="849"/>
    </location>
</feature>
<feature type="sequence variant" id="VAR_008424" description="In STGD1; likely pathogenic; severely decreases solubility; loss of cytoplasmic vesicle localization; decreases basal ATPase activity below 50%; severe decrease of N-Ret-PE-induced ATPase activity; severely decreased N-all-trans-retinylidenephosphatidylethanolamine binding; dbSNP:rs61749436." evidence="15 47 56">
    <original>G</original>
    <variation>D</variation>
    <location>
        <position position="851"/>
    </location>
</feature>
<feature type="sequence variant" id="VAR_012539" description="In STGD1; uncertain significance; does not affect solubility; does not affect location in cytoplasmic vesicle; modest decrease of basal and N-Ret-PE-stimulated ATPase activity; modest decrease of N-all-trans-retinylidenephosphatidylethanolamine binding; dbSNP:rs61749437." evidence="17 47">
    <original>A</original>
    <variation>T</variation>
    <location>
        <position position="854"/>
    </location>
</feature>
<feature type="sequence variant" id="VAR_008425" description="In STGD1, FFM and CORD3; also found in a patient with bull's eye maculopathy; mild alteration probably leading to disease phenotype only in combination with a more severe allele; frequent mutation in northern Europe in linkage disequilibrium with the polymorphic variant Q-943; severely decreased basal and N-Ret-PE-stimulated ATPase activity; significantly reduces N-retinylidene-phosphatidylethanolamine transport; does not affect N-retinylidene-phosphatidylethanolamine binding; significantly attenuates 11-cis-retinal binding; significantly reduces phosphatidylethanolamine flippase activity; dbSNP:rs76157638." evidence="8 9 11 13 19 22 26 34 35 36 42 51 52">
    <original>G</original>
    <variation>A</variation>
    <location>
        <position position="863"/>
    </location>
</feature>
<feature type="sequence variant" id="VAR_012541" description="In STGD1; dbSNP:rs62642570." evidence="17">
    <original>F</original>
    <variation>L</variation>
    <location>
        <position position="873"/>
    </location>
</feature>
<feature type="sequence variant" id="VAR_084891" description="In STGD1; uncertain significance." evidence="26">
    <location>
        <begin position="876"/>
        <end position="2273"/>
    </location>
</feature>
<feature type="sequence variant" id="VAR_012542" description="In STGD1; dbSNP:rs61749440." evidence="10 26 29">
    <original>T</original>
    <variation>I</variation>
    <location>
        <position position="897"/>
    </location>
</feature>
<feature type="sequence variant" id="VAR_008426" description="In dbSNP:rs61754030." evidence="14 29">
    <original>T</original>
    <variation>A</variation>
    <location>
        <position position="901"/>
    </location>
</feature>
<feature type="sequence variant" id="VAR_012543" evidence="14">
    <original>H</original>
    <variation>R</variation>
    <location>
        <position position="914"/>
    </location>
</feature>
<feature type="sequence variant" id="VAR_008427" description="In STGD1; dbSNP:rs58331765." evidence="29 30 31 38 51">
    <original>V</original>
    <variation>M</variation>
    <location>
        <position position="931"/>
    </location>
</feature>
<feature type="sequence variant" id="VAR_012544" description="In STGD1; dbSNP:rs61749444." evidence="22">
    <original>V</original>
    <variation>A</variation>
    <location>
        <position position="935"/>
    </location>
</feature>
<feature type="sequence variant" id="VAR_008428" description="Risk factor for STGD1; risk factor for ARMD2; decreases 11-cis-Retinal binding affinity by 100-fold; dbSNP:rs1801581." evidence="9 11 14 19 21 22 23 26 35 36 37 51 52 57">
    <original>R</original>
    <variation>Q</variation>
    <location>
        <position position="943"/>
    </location>
</feature>
<feature type="sequence variant" id="VAR_012545" description="In STGD1 and FFM; dbSNP:rs61749446." evidence="19 22">
    <original>R</original>
    <variation>W</variation>
    <location>
        <position position="943"/>
    </location>
</feature>
<feature type="sequence variant" id="VAR_084892" description="In STGD1; uncertain significance; dbSNP:rs61749447." evidence="26">
    <original>Y</original>
    <variation>D</variation>
    <location>
        <position position="954"/>
    </location>
</feature>
<feature type="sequence variant" id="VAR_008429" description="In STGD1; dbSNP:rs61749448." evidence="6">
    <original>Q</original>
    <variation>R</variation>
    <location>
        <position position="957"/>
    </location>
</feature>
<feature type="sequence variant" id="VAR_012546" description="In STGD1; likely pathogenic; highly decreased ATPase activity; highly decreased phospholipid translocase activity; dbSNP:rs61752409." evidence="14 39">
    <original>T</original>
    <variation>I</variation>
    <location>
        <position position="959"/>
    </location>
</feature>
<feature type="sequence variant" id="VAR_008430" description="In STGD1; pathogenic; severely decreased basal and N-Ret-PE-stimulated ATPase activity; reduces N-retinylidene-phosphatidylethanolamine transport; does not affect N-all-trans-retinylidenephosphatidylethanolamine binding; decreased phospholipid transport; decreased phosphatidylethanolamine flippase activity; dbSNP:rs201471607." evidence="11 15 26 29 31 34 37 39 43">
    <original>N</original>
    <variation>S</variation>
    <location>
        <position position="965"/>
    </location>
</feature>
<feature type="sequence variant" id="VAR_084893" description="In STGD1; likely pathogenic; results in minimal, if any, basal ATPase activity and loss of N-Ret-PE-stimulated ATPase activity; dbSNP:rs61749449." evidence="43 50">
    <original>N</original>
    <variation>Y</variation>
    <location>
        <position position="965"/>
    </location>
</feature>
<feature type="sequence variant" id="VAR_084894" description="In STGD1; uncertain significance; dbSNP:rs1570377849." evidence="31">
    <original>T</original>
    <variation>P</variation>
    <location>
        <position position="970"/>
    </location>
</feature>
<feature type="sequence variant" id="VAR_012547" description="In STGD1; pathogenic; loss of basal and all-trans-retinal stimulated ATPase activity; dbSNP:rs61749450." evidence="15 17">
    <original>T</original>
    <variation>N</variation>
    <location>
        <position position="971"/>
    </location>
</feature>
<feature type="sequence variant" id="VAR_012548" description="In STGD1; uncertain significance; dbSNP:rs61749451." evidence="23">
    <original>T</original>
    <variation>N</variation>
    <location>
        <position position="972"/>
    </location>
</feature>
<feature type="sequence variant" id="VAR_084895" description="In STGD1; uncertain significance." evidence="43">
    <original>L</original>
    <variation>S</variation>
    <location>
        <position position="973"/>
    </location>
</feature>
<feature type="sequence variant" id="VAR_012549" description="In STGD1; dbSNP:rs281865400." evidence="7">
    <original>S</original>
    <variation>P</variation>
    <location>
        <position position="974"/>
    </location>
</feature>
<feature type="sequence variant" id="VAR_084896" description="In STGD1; uncertain significance; dbSNP:rs1660625648." evidence="31">
    <original>T</original>
    <variation>P</variation>
    <location>
        <position position="977"/>
    </location>
</feature>
<feature type="sequence variant" id="VAR_008431" description="In STGD1; dbSNP:rs61749452." evidence="6">
    <original>G</original>
    <variation>C</variation>
    <location>
        <position position="978"/>
    </location>
</feature>
<feature type="sequence variant" id="VAR_084897" description="In STGD1; uncertain significance; dbSNP:rs61749453." evidence="26 31">
    <original>G</original>
    <variation>D</variation>
    <location>
        <position position="978"/>
    </location>
</feature>
<feature type="sequence variant" id="VAR_012550" description="In STGD1; dbSNP:rs61749454." evidence="22 35 38">
    <original>V</original>
    <variation>A</variation>
    <location>
        <position position="989"/>
    </location>
</feature>
<feature type="sequence variant" id="VAR_012551" description="In FFM and STGD1; dbSNP:rs61749455." evidence="19 35">
    <original>G</original>
    <variation>R</variation>
    <location>
        <position position="991"/>
    </location>
</feature>
<feature type="sequence variant" id="VAR_012552" description="In STGD1; dbSNP:rs61749456." evidence="37">
    <original>L</original>
    <variation>R</variation>
    <location>
        <position position="1014"/>
    </location>
</feature>
<feature type="sequence variant" id="VAR_012553" description="In STGD1; dbSNP:rs61749457." evidence="17">
    <original>T</original>
    <variation>A</variation>
    <location>
        <position position="1019"/>
    </location>
</feature>
<feature type="sequence variant" id="VAR_012554" description="In STGD1; dbSNP:rs201855602." evidence="29 30 31 35 38 43 55">
    <original>T</original>
    <variation>M</variation>
    <location>
        <position position="1019"/>
    </location>
</feature>
<feature type="sequence variant" id="VAR_084898" description="In STGD1; uncertain significance." evidence="43">
    <original>E</original>
    <variation>G</variation>
    <location>
        <position position="1022"/>
    </location>
</feature>
<feature type="sequence variant" id="VAR_012555" description="In STGD1; uncertain significance; dbSNP:rs61749459." evidence="26 35">
    <original>E</original>
    <variation>K</variation>
    <location>
        <position position="1022"/>
    </location>
</feature>
<feature type="sequence variant" id="VAR_090221" description="In STGD1; uncertain significance; dbSNP:rs121909204." evidence="51">
    <original>A</original>
    <variation>V</variation>
    <location>
        <position position="1028"/>
    </location>
</feature>
<feature type="sequence variant" id="VAR_084899" description="In STGD1; uncertain significance." evidence="42">
    <location>
        <begin position="1029"/>
        <end position="2273"/>
    </location>
</feature>
<feature type="sequence variant" id="VAR_012556" description="In STGD1; dbSNP:rs61750060." evidence="17">
    <original>K</original>
    <variation>E</variation>
    <location>
        <position position="1031"/>
    </location>
</feature>
<feature type="sequence variant" id="VAR_008432" description="In STGD1; dbSNP:rs61750061." evidence="14 43">
    <original>E</original>
    <variation>K</variation>
    <location>
        <position position="1036"/>
    </location>
</feature>
<feature type="sequence variant" id="VAR_008433" description="In STGD1, FFM and CORD3; pathogenic; common variant; decreased solubility; does not affect intracellular vesicle localization; significantly reduces N-all-trans-retinylidenephosphatidylethanolamine binding; severely reduces basal and N-Ret-PE-stimulated ATPase activity; dbSNP:rs61751374." evidence="7 10 11 13 14 15 19 22 26 31 41 42 44 55 56">
    <original>A</original>
    <variation>V</variation>
    <location>
        <position position="1038"/>
    </location>
</feature>
<feature type="sequence variant" id="VAR_084900" description="In STGD1; uncertain significance; dbSNP:rs61750062." evidence="26">
    <original>G</original>
    <variation>D</variation>
    <location>
        <position position="1050"/>
    </location>
</feature>
<feature type="sequence variant" id="VAR_012557" description="In STGD1; dbSNP:rs61752412." evidence="21 31">
    <original>R</original>
    <variation>W</variation>
    <location>
        <position position="1055"/>
    </location>
</feature>
<feature type="sequence variant" id="VAR_012558" description="In STGD1; dbSNP:rs61752413." evidence="14">
    <original>S</original>
    <variation>P</variation>
    <location>
        <position position="1063"/>
    </location>
</feature>
<feature type="sequence variant" id="VAR_008434" description="In STGD1; likely pathogenic; dbSNP:rs61750065." evidence="15 56">
    <original>S</original>
    <variation>L</variation>
    <location>
        <position position="1071"/>
    </location>
</feature>
<feature type="sequence variant" id="VAR_008435" description="In STGD1; dbSNP:rs1660532719." evidence="51 56">
    <original>V</original>
    <variation>A</variation>
    <location>
        <position position="1072"/>
    </location>
</feature>
<feature type="sequence variant" id="VAR_084901" description="In STGD1; uncertain significance." evidence="43">
    <original>I</original>
    <variation>L</variation>
    <location>
        <position position="1074"/>
    </location>
</feature>
<feature type="sequence variant" id="VAR_084902" description="In STGD1; uncertain significance; dbSNP:rs1660532440." evidence="31">
    <original>G</original>
    <variation>E</variation>
    <location>
        <position position="1078"/>
    </location>
</feature>
<feature type="sequence variant" id="VAR_012559" description="In STGD1; decreased basal ATPase activity and loss of N-Ret-PE-stimulated ATPase activity; dbSNP:rs61752416." evidence="14 50">
    <original>E</original>
    <variation>D</variation>
    <location>
        <position position="1087"/>
    </location>
</feature>
<feature type="sequence variant" id="VAR_008436" description="In STGD1; dbSNP:rs61751398." evidence="10 26 31 51">
    <original>E</original>
    <variation>K</variation>
    <location>
        <position position="1087"/>
    </location>
</feature>
<feature type="sequence variant" id="VAR_012560" description="In FFM and STGD1; likely pathogenic; decreased solubility; does not affect intracellular vesicle localization; does not affect N-all-trans-retinylidenephosphatidylethanolamine binding; decreased basal and N-Ret-PE-stimulated ATPase activity; dbSNP:rs61752417." evidence="44 55">
    <original>G</original>
    <variation>E</variation>
    <location>
        <position position="1091"/>
    </location>
</feature>
<feature type="sequence variant" id="VAR_090222" description="In STGD1." evidence="38">
    <original>P</original>
    <variation>R</variation>
    <location>
        <position position="1094"/>
    </location>
</feature>
<feature type="sequence variant" id="VAR_084903" description="In STGD1; uncertain significance." evidence="43">
    <original>P</original>
    <variation>T</variation>
    <location>
        <position position="1094"/>
    </location>
</feature>
<feature type="sequence variant" id="VAR_090223" description="In STGD1; dbSNP:rs763267492." evidence="38">
    <original>S</original>
    <variation>L</variation>
    <location>
        <position position="1096"/>
    </location>
</feature>
<feature type="sequence variant" id="VAR_012561" description="In STGD1." evidence="14">
    <original>R</original>
    <variation>C</variation>
    <location>
        <position position="1097"/>
    </location>
</feature>
<feature type="sequence variant" id="VAR_084904" description="In STGD1; uncertain significance; dbSNP:rs61750118." evidence="35">
    <original>R</original>
    <variation>S</variation>
    <location>
        <position position="1097"/>
    </location>
</feature>
<feature type="sequence variant" id="VAR_084905" description="In STGD1; uncertain significance; dbSNP:rs756840095." evidence="26 31 38">
    <original>R</original>
    <variation>C</variation>
    <location>
        <position position="1098"/>
    </location>
</feature>
<feature type="sequence variant" id="VAR_084906" description="In STGD1; uncertain significance." evidence="31">
    <location>
        <begin position="1099"/>
        <end position="2273"/>
    </location>
</feature>
<feature type="sequence variant" id="VAR_084907" description="In STGD1; uncertain significance; dbSNP:rs61750119." evidence="26">
    <original>S</original>
    <variation>P</variation>
    <location>
        <position position="1099"/>
    </location>
</feature>
<feature type="sequence variant" id="VAR_084908" description="In dbSNP:rs138641544." evidence="43">
    <original>D</original>
    <variation>Y</variation>
    <location>
        <position position="1102"/>
    </location>
</feature>
<feature type="sequence variant" id="VAR_012562" description="In STGD1 and FFM; dbSNP:rs61750120." evidence="7 14 19 21 22 26 31 35 41 55">
    <original>R</original>
    <variation>C</variation>
    <location>
        <position position="1108"/>
    </location>
</feature>
<feature type="sequence variant" id="VAR_012563" description="In STGD1; dbSNP:rs61750121." evidence="26 29 30 38 43">
    <original>R</original>
    <variation>H</variation>
    <location>
        <position position="1108"/>
    </location>
</feature>
<feature type="sequence variant" id="VAR_012564" description="In STGD1; dbSNP:rs61750121." evidence="22">
    <original>R</original>
    <variation>L</variation>
    <location>
        <position position="1108"/>
    </location>
</feature>
<feature type="sequence variant" id="VAR_008437" description="In STGD1; dbSNP:rs61750122." evidence="6">
    <original>T</original>
    <variation>N</variation>
    <location>
        <position position="1112"/>
    </location>
</feature>
<feature type="sequence variant" id="VAR_008438" description="In STGD1 and CORD3; dbSNP:rs61751399." evidence="13 22 35 38 43">
    <original>E</original>
    <variation>K</variation>
    <location>
        <position position="1122"/>
    </location>
</feature>
<feature type="sequence variant" id="VAR_090224" description="In STGD1; uncertain significance; dbSNP:rs1570370929." evidence="38">
    <original>G</original>
    <variation>E</variation>
    <location>
        <position position="1127"/>
    </location>
</feature>
<feature type="sequence variant" id="VAR_012565" description="In STGD1; may predispose to develop retinal toxicity after treatment with chloroquine and hydroxychloroquine; dbSNP:rs779426136." evidence="20 56">
    <original>R</original>
    <variation>C</variation>
    <location>
        <position position="1129"/>
    </location>
</feature>
<feature type="sequence variant" id="VAR_008439" description="In STGD1, CORD3 and RP19; pathogenic; also found in patients with fundus flavimaculatus; dbSNP:rs1801269." evidence="26 29 30 35 37 38 52 56">
    <original>R</original>
    <variation>L</variation>
    <location>
        <position position="1129"/>
    </location>
</feature>
<feature type="sequence variant" id="VAR_084909" description="In STGD1; uncertain significance; dbSNP:rs1064793010." evidence="43">
    <original>I</original>
    <variation>T</variation>
    <location>
        <position position="1130"/>
    </location>
</feature>
<feature type="sequence variant" id="VAR_084910" description="In STGD1; uncertain significance; dbSNP:rs2101048569." evidence="43">
    <original>C</original>
    <variation>W</variation>
    <location>
        <position position="1140"/>
    </location>
</feature>
<feature type="sequence variant" id="VAR_084911" description="In CORD3; uncertain significance." evidence="42">
    <original>L</original>
    <variation>H</variation>
    <location>
        <position position="1145"/>
    </location>
</feature>
<feature type="sequence variant" id="VAR_012566" evidence="19">
    <original>K</original>
    <variation>T</variation>
    <location>
        <position position="1148"/>
    </location>
</feature>
<feature type="sequence variant" id="VAR_084912" description="In STGD1; uncertain significance; dbSNP:rs1340749727." evidence="43">
    <original>L</original>
    <variation>S</variation>
    <location>
        <position position="1159"/>
    </location>
</feature>
<feature type="sequence variant" id="VAR_084913" description="In STGD1; uncertain significance; dbSNP:rs768278935." evidence="43">
    <original>R</original>
    <variation>H</variation>
    <location>
        <position position="1161"/>
    </location>
</feature>
<feature type="sequence variant" id="VAR_084914" description="In STGD1; uncertain significance." evidence="31">
    <location>
        <begin position="1177"/>
        <end position="2273"/>
    </location>
</feature>
<feature type="sequence variant" id="VAR_084915" description="In CORD3; uncertain significance; dbSNP:rs75267647." evidence="43">
    <original>G</original>
    <variation>C</variation>
    <location>
        <position position="1183"/>
    </location>
</feature>
<feature type="sequence variant" id="VAR_008440" description="In STGD1; may predispose to develop retinal toxicity after treatment with chloroquine and hydroxychloroquine; dbSNP:rs61750126." evidence="20 22 35">
    <original>L</original>
    <variation>R</variation>
    <location>
        <position position="1201"/>
    </location>
</feature>
<feature type="sequence variant" id="VAR_084916" description="In STGD1." evidence="26">
    <original>G</original>
    <variation>D</variation>
    <location>
        <position position="1203"/>
    </location>
</feature>
<feature type="sequence variant" id="VAR_084917" description="In CORD3; uncertain significance; dbSNP:rs146786552." evidence="42">
    <original>G</original>
    <variation>E</variation>
    <location>
        <position position="1203"/>
    </location>
</feature>
<feature type="sequence variant" id="VAR_084918" description="In STGD1; uncertain significance; dbSNP:rs1064793011." evidence="26">
    <original>G</original>
    <variation>R</variation>
    <location>
        <position position="1203"/>
    </location>
</feature>
<feature type="sequence variant" id="VAR_008441" description="In STGD1; uncertain significance; dbSNP:rs61750127." evidence="26">
    <original>D</original>
    <variation>N</variation>
    <location>
        <position position="1204"/>
    </location>
</feature>
<feature type="sequence variant" id="VAR_084919" description="In dbSNP:rs76258939." evidence="43">
    <original>M</original>
    <variation>T</variation>
    <location>
        <position position="1209"/>
    </location>
</feature>
<feature type="sequence variant" id="VAR_012567" description="In STGD1; dbSNP:rs61750128." evidence="17">
    <original>L</original>
    <variation>P</variation>
    <location>
        <position position="1250"/>
    </location>
</feature>
<feature type="sequence variant" id="VAR_012568" description="In FFM; uncertain significance; dbSNP:rs61752424." evidence="21">
    <original>T</original>
    <variation>M</variation>
    <location>
        <position position="1253"/>
    </location>
</feature>
<feature type="sequence variant" id="VAR_084920" description="In STGD1; uncertain significance; dbSNP:rs61752427." evidence="26 43">
    <location>
        <begin position="1300"/>
        <end position="2273"/>
    </location>
</feature>
<feature type="sequence variant" id="VAR_012569" description="In STGD1; uncertain significance; dbSNP:rs61750129." evidence="22 26 42">
    <original>R</original>
    <variation>Q</variation>
    <location>
        <position position="1300"/>
    </location>
</feature>
<feature type="sequence variant" id="VAR_008442" description="In dbSNP:rs61754041." evidence="17">
    <original>P</original>
    <variation>T</variation>
    <location>
        <position position="1314"/>
    </location>
</feature>
<feature type="sequence variant" id="VAR_084921" description="In STGD1; uncertain significance." evidence="31">
    <location>
        <begin position="1332"/>
        <end position="2273"/>
    </location>
</feature>
<feature type="sequence variant" id="VAR_090225" description="In STGD1; likely pathogenic; decreased solubility; loss of intracellular vesicle localization; does not affect N-all-trans-retinylidenephosphatidylethanolamine binding; decreased basal and N-Ret-PE-stimulated ATPase activity; dbSNP:rs754899711." evidence="38 44">
    <original>A</original>
    <variation>T</variation>
    <location>
        <position position="1357"/>
    </location>
</feature>
<feature type="sequence variant" id="VAR_084922" description="In CORD3; uncertain significance; dbSNP:rs1183074086." evidence="43">
    <original>R</original>
    <variation>C</variation>
    <location>
        <position position="1368"/>
    </location>
</feature>
<feature type="sequence variant" id="VAR_084923" description="In STGD1; uncertain significance." evidence="43">
    <original>K</original>
    <variation>N</variation>
    <location>
        <position position="1371"/>
    </location>
</feature>
<feature type="sequence variant" id="VAR_008443" description="In STGD1; pathogenic; also found in a patient with chorioretinal atrophy; decreased solubility; loss of cytoplasmic vesicle localization; decreased basal and N-Ret-PE-stimulated ATPase activity; decreased N-all-trans-retinylidenephosphatidylethanolamine binding; dbSNP:rs61750130." evidence="14 22 26 29 31 35 37 38 47">
    <original>P</original>
    <variation>L</variation>
    <location>
        <position position="1380"/>
    </location>
</feature>
<feature type="sequence variant" id="VAR_012570" description="In STGD1; dbSNP:rs61750131." evidence="22">
    <original>L</original>
    <variation>P</variation>
    <location>
        <position position="1388"/>
    </location>
</feature>
<feature type="sequence variant" id="VAR_012571" description="In STGD1; likely pathogenic; does not affect solubility; does not affect location in cytoplasmic vesicle; does not affect both basal and N-Ret-PE-stimulated ATPase activity; does not affect N-all-trans-retinylidenephosphatidylethanolamine binding; dbSNP:rs62642573." evidence="10 14 47">
    <original>E</original>
    <variation>K</variation>
    <location>
        <position position="1399"/>
    </location>
</feature>
<feature type="sequence variant" id="VAR_008444" description="In STGD1; dbSNP:rs61750133." evidence="56">
    <original>H</original>
    <variation>Y</variation>
    <location>
        <position position="1406"/>
    </location>
</feature>
<feature type="sequence variant" id="VAR_084924" description="In STGD1; uncertain significance." evidence="31">
    <location>
        <begin position="1408"/>
        <end position="2273"/>
    </location>
</feature>
<feature type="sequence variant" id="VAR_008445" description="In STGD1; likely pathogenic; does not affect secondary structure; decreased all-trans-retinal binding; dbSNP:rs61750134." evidence="7 17 33 56">
    <original>W</original>
    <variation>L</variation>
    <location>
        <position position="1408"/>
    </location>
</feature>
<feature type="sequence variant" id="VAR_008446" description="In STGD1; likely pathogenic; reduced retinal-stimulated ATP hydrolysis; dbSNP:rs61750135." evidence="15 22 41">
    <original>W</original>
    <variation>R</variation>
    <location>
        <position position="1408"/>
    </location>
</feature>
<feature type="sequence variant" id="VAR_085015" description="In STGD1; uncertain significance." evidence="37">
    <location>
        <position position="1416"/>
    </location>
</feature>
<feature type="sequence variant" id="VAR_008447" description="In dbSNP:rs1800549." evidence="43 52">
    <original>T</original>
    <variation>M</variation>
    <location>
        <position position="1428"/>
    </location>
</feature>
<feature type="sequence variant" id="VAR_008448" description="In STGD1; dbSNP:rs61752432." evidence="9">
    <original>V</original>
    <variation>A</variation>
    <location>
        <position position="1429"/>
    </location>
</feature>
<feature type="sequence variant" id="VAR_012572" description="In STGD1; dbSNP:rs1660169151." evidence="14">
    <original>L</original>
    <variation>P</variation>
    <location>
        <position position="1430"/>
    </location>
</feature>
<feature type="sequence variant" id="VAR_008449" description="In STGD1, CORD3 and RP19; dbSNP:rs56357060." evidence="29 30 31">
    <original>V</original>
    <variation>I</variation>
    <location>
        <position position="1433"/>
    </location>
</feature>
<feature type="sequence variant" id="VAR_008450" description="In STGD1; dbSNP:rs61750140." evidence="56">
    <original>G</original>
    <variation>D</variation>
    <location>
        <position position="1439"/>
    </location>
</feature>
<feature type="sequence variant" id="VAR_008451" description="In STGD1; dbSNP:rs61750141." evidence="56">
    <original>F</original>
    <variation>S</variation>
    <location>
        <position position="1440"/>
    </location>
</feature>
<feature type="sequence variant" id="VAR_012573" description="In STGD1; dbSNP:rs61752433." evidence="14">
    <original>F</original>
    <variation>V</variation>
    <location>
        <position position="1440"/>
    </location>
</feature>
<feature type="sequence variant" id="VAR_084925" description="In STGD1; uncertain significance; dbSNP:rs762150575." evidence="35">
    <original>N</original>
    <variation>K</variation>
    <location>
        <position position="1442"/>
    </location>
</feature>
<feature type="sequence variant" id="VAR_012574" description="In STGD1; likely pathogenic; loss of the majority of alpha-helical secondary structure; loss of all-trans-retinal binding; dbSNP:rs61750142." evidence="14 33 37">
    <original>R</original>
    <variation>H</variation>
    <location>
        <position position="1443"/>
    </location>
</feature>
<feature type="sequence variant" id="VAR_084926" description="In STGD1; uncertain significance." evidence="43">
    <location>
        <begin position="1453"/>
        <end position="2273"/>
    </location>
</feature>
<feature type="sequence variant" id="VAR_084927" description="In STGD1; uncertain significance." evidence="31">
    <location>
        <begin position="1461"/>
        <end position="2273"/>
    </location>
</feature>
<feature type="sequence variant" id="VAR_084928" description="In STGD1 and CORD3; uncertain significance; dbSNP:rs61752434." evidence="31 43">
    <location>
        <begin position="1479"/>
        <end position="2273"/>
    </location>
</feature>
<feature type="sequence variant" id="VAR_084929" description="In STGD1; uncertain significance; dbSNP:rs1660139125." evidence="31">
    <original>P</original>
    <variation>S</variation>
    <location>
        <position position="1484"/>
    </location>
</feature>
<feature type="sequence variant" id="VAR_008452" description="In STGD1; dbSNP:rs61750145." evidence="14 22 29 30 35 38">
    <original>P</original>
    <variation>L</variation>
    <location>
        <position position="1486"/>
    </location>
</feature>
<feature type="sequence variant" id="VAR_012575" description="In STGD1; dbSNP:rs61750147." evidence="17">
    <original>C</original>
    <variation>F</variation>
    <location>
        <position position="1488"/>
    </location>
</feature>
<feature type="sequence variant" id="VAR_008453" description="In STGD1 and FFM; pathogenic; also found in a patient with chorioretinal atrophy; reduced retinal-stimulated ATP hydrolysis; does not affect secondary structure; decreased all-trans-retinal binding; dbSNP:rs61750146." evidence="7 15 19 22 33 35 56">
    <original>C</original>
    <variation>R</variation>
    <location>
        <position position="1488"/>
    </location>
</feature>
<feature type="sequence variant" id="VAR_012576" description="In STGD1; dbSNP:rs61750147." evidence="14">
    <original>C</original>
    <variation>Y</variation>
    <location>
        <position position="1488"/>
    </location>
</feature>
<feature type="sequence variant" id="VAR_008454" description="In STGD1 and CORD3; reduced retinal-stimulated ATP hydrolysis; dbSNP:rs61751402." evidence="13 15 22 26 29 35">
    <original>C</original>
    <variation>Y</variation>
    <location>
        <position position="1490"/>
    </location>
</feature>
<feature type="sequence variant" id="VAR_084930" description="In STGD1; uncertain significance." evidence="43">
    <original>P</original>
    <variation>L</variation>
    <location>
        <position position="1503"/>
    </location>
</feature>
<feature type="sequence variant" id="VAR_012577" description="In FFM; dbSNP:rs1444784969." evidence="55">
    <original>G</original>
    <variation>C</variation>
    <location>
        <position position="1508"/>
    </location>
</feature>
<feature type="sequence variant" id="VAR_084931" description="In STGD1; uncertain significance; dbSNP:rs886046564." evidence="43">
    <original>P</original>
    <variation>H</variation>
    <location>
        <position position="1511"/>
    </location>
</feature>
<feature type="sequence variant" id="VAR_084932" description="In STGD1; uncertain significance; dbSNP:rs61750150." evidence="26">
    <original>P</original>
    <variation>R</variation>
    <location>
        <position position="1512"/>
    </location>
</feature>
<feature type="sequence variant" id="VAR_012578" description="In STGD1; dbSNP:rs281865402." evidence="17">
    <original>Q</original>
    <variation>R</variation>
    <location>
        <position position="1513"/>
    </location>
</feature>
<feature type="sequence variant" id="VAR_008455" description="In ARMD2; dbSNP:rs1800550." evidence="52">
    <original>R</original>
    <variation>S</variation>
    <location>
        <position position="1517"/>
    </location>
</feature>
<feature type="sequence variant" id="VAR_012579" description="In STGD1; dbSNP:rs61750151." evidence="17">
    <original>L</original>
    <variation>P</variation>
    <location>
        <position position="1525"/>
    </location>
</feature>
<feature type="sequence variant" id="VAR_008456" description="In STGD1; likely pathogenic; also found in a patient with chorioretinal atrophy; reduced retinal-stimulated ATP hydrolysis; dbSNP:rs61750152." evidence="15 22 26 31 35 38 43">
    <original>T</original>
    <variation>M</variation>
    <location>
        <position position="1526"/>
    </location>
</feature>
<feature type="sequence variant" id="VAR_008457" description="In STGD1; dbSNP:rs62642574." evidence="22">
    <original>D</original>
    <variation>N</variation>
    <location>
        <position position="1532"/>
    </location>
</feature>
<feature type="sequence variant" id="VAR_012580" description="In STGD1; likely pathogenic; moderately decreased ATPase activity; moderately decreased phospholipid translocase activity; dbSNP:rs62642575." evidence="14 39 42 43">
    <original>T</original>
    <variation>M</variation>
    <location>
        <position position="1537"/>
    </location>
</feature>
<feature type="sequence variant" id="VAR_085016" description="In STGD1; uncertain significance." evidence="37">
    <location>
        <position position="1551"/>
    </location>
</feature>
<feature type="sequence variant" id="VAR_085017" description="In STGD1; uncertain significance; dbSNP:rs1385119665." evidence="37">
    <original>R</original>
    <variation>T</variation>
    <location>
        <position position="1556"/>
    </location>
</feature>
<feature type="sequence variant" id="VAR_084933" description="Found in a patient with chorioretinal atrophy; uncertain significance; dbSNP:rs1401716074." evidence="35">
    <original>Y</original>
    <variation>C</variation>
    <location>
        <position position="1557"/>
    </location>
</feature>
<feature type="sequence variant" id="VAR_008458" description="In STGD1, FFM and ARMD2; uncertain significance; dbSNP:rs1762111." evidence="14 19 22 35 52">
    <original>I</original>
    <variation>T</variation>
    <location>
        <position position="1562"/>
    </location>
</feature>
<feature type="sequence variant" id="VAR_084934" description="In dbSNP:rs185093512." evidence="43">
    <original>T</original>
    <variation>M</variation>
    <location>
        <position position="1572"/>
    </location>
</feature>
<feature type="sequence variant" id="VAR_008459" description="In ARMD2; dbSNP:rs1800551." evidence="52">
    <original>G</original>
    <variation>R</variation>
    <location>
        <position position="1578"/>
    </location>
</feature>
<feature type="sequence variant" id="VAR_084935" description="In STGD1; uncertain significance; dbSNP:rs113106943." evidence="43">
    <original>G</original>
    <variation>R</variation>
    <location>
        <position position="1591"/>
    </location>
</feature>
<feature type="sequence variant" id="VAR_012581" description="In CORD3 and STGD1; pathogenic; dbSNP:rs61750155." evidence="13 26 31 35 38">
    <original>A</original>
    <variation>D</variation>
    <location>
        <position position="1598"/>
    </location>
</feature>
<feature type="sequence variant" id="VAR_084936" evidence="43">
    <location>
        <begin position="1618"/>
        <end position="2273"/>
    </location>
</feature>
<feature type="sequence variant" id="VAR_084937" description="In dbSNP:rs1571257969." evidence="43">
    <original>G</original>
    <variation>V</variation>
    <location>
        <position position="1623"/>
    </location>
</feature>
<feature type="sequence variant" id="VAR_008460" description="In STGD1; dbSNP:rs61750158." evidence="6">
    <original>L</original>
    <variation>P</variation>
    <location>
        <position position="1631"/>
    </location>
</feature>
<feature type="sequence variant" id="VAR_012582" description="In dbSNP:rs61754056." evidence="22">
    <original>A</original>
    <variation>T</variation>
    <location>
        <position position="1637"/>
    </location>
</feature>
<feature type="sequence variant" id="VAR_012583" description="In STGD1, FFM and CORD3; dbSNP:rs61751403." evidence="10 19 22 29 30 38 41 43">
    <original>R</original>
    <variation>Q</variation>
    <location>
        <position position="1640"/>
    </location>
</feature>
<feature type="sequence variant" id="VAR_008461" description="In STGD1; dbSNP:rs61751404." evidence="9 22 29 41 42 55">
    <original>R</original>
    <variation>W</variation>
    <location>
        <position position="1640"/>
    </location>
</feature>
<feature type="sequence variant" id="VAR_084938" description="In CORD3; uncertain significance." evidence="43">
    <location>
        <begin position="1650"/>
        <end position="2273"/>
    </location>
</feature>
<feature type="sequence variant" id="VAR_084939" description="In STGD1 and FFM; uncertain significance." evidence="26 43">
    <location>
        <begin position="1652"/>
        <end position="2273"/>
    </location>
</feature>
<feature type="sequence variant" id="VAR_008462" description="In STGD1; dbSNP:rs61750560." evidence="7">
    <original>Y</original>
    <variation>D</variation>
    <location>
        <position position="1652"/>
    </location>
</feature>
<feature type="sequence variant" id="VAR_012584" description="In STGD1." evidence="37">
    <location>
        <begin position="1681"/>
        <end position="1685"/>
    </location>
</feature>
<feature type="sequence variant" id="VAR_012585" description="In STGD1; dbSNP:rs61753020." evidence="14">
    <original>S</original>
    <variation>P</variation>
    <location>
        <position position="1689"/>
    </location>
</feature>
<feature type="sequence variant" id="VAR_012586" description="In STGD1; dbSNP:rs61750563." evidence="17">
    <original>V</original>
    <variation>I</variation>
    <location>
        <position position="1693"/>
    </location>
</feature>
<feature type="sequence variant" id="VAR_008463" description="In STGD1; likely pathogenic; does not affect solubility; does not affect location in cytoplasmic vesicle; does not affect both basal and N-Ret-PE-stimulated ATPase activity; does not affect N-all-trans-retinylidenephosphatidylethanolamine binding; dbSNP:rs61750564." evidence="31 47 56">
    <original>S</original>
    <variation>N</variation>
    <location>
        <position position="1696"/>
    </location>
</feature>
<feature type="sequence variant" id="VAR_085018" description="In STGD1; uncertain significance; does not affect solubility; does not affect location in cytoplasmic vesicle; decreased basal ATPase activity to less than 50% and N-Ret-PE-induced activity to less than 20% of wild-type values; decreased N-all-trans-retinylidenephosphatidylethanolamine binding; dbSNP:rs61750565." evidence="9 47">
    <original>Q</original>
    <variation>E</variation>
    <location>
        <position position="1703"/>
    </location>
</feature>
<feature type="sequence variant" id="VAR_012587" description="In STGD1; likely pathogenic; moderately decreases solubility; loss of cytoplasmic vesicle localization; results in a modest decrease of basal ATPase activity, while N-Ret-PE-stimulated activity is decreased to 50% of wild-type values; decreased N-all-trans-retinylidenephosphatidylethanolamine binding; dbSNP:rs61753021." evidence="14 47">
    <original>R</original>
    <variation>L</variation>
    <location>
        <position position="1705"/>
    </location>
</feature>
<feature type="sequence variant" id="VAR_085019" description="In STGD1; uncertain significance; dbSNP:rs61753021." evidence="37">
    <original>R</original>
    <variation>Q</variation>
    <location>
        <position position="1705"/>
    </location>
</feature>
<feature type="sequence variant" id="VAR_084940" description="In STGD1; uncertain significance." evidence="43">
    <location>
        <begin position="1724"/>
        <end position="2273"/>
    </location>
</feature>
<feature type="sequence variant" id="VAR_067428" description="In STGD1; dbSNP:rs1557767754." evidence="30 38">
    <original>W</original>
    <variation>C</variation>
    <location>
        <position position="1724"/>
    </location>
</feature>
<feature type="sequence variant" id="VAR_008465" description="In STGD1; dbSNP:rs61750567." evidence="7">
    <original>L</original>
    <variation>P</variation>
    <location>
        <position position="1729"/>
    </location>
</feature>
<feature type="sequence variant" id="VAR_012588" description="In STGD1; dbSNP:rs765563320." evidence="14">
    <original>M</original>
    <variation>T</variation>
    <location>
        <position position="1733"/>
    </location>
</feature>
<feature type="sequence variant" id="VAR_012589" description="In STGD1; dbSNP:rs61750568." evidence="17">
    <original>S</original>
    <variation>P</variation>
    <location>
        <position position="1736"/>
    </location>
</feature>
<feature type="sequence variant" id="VAR_012590" description="In STGD1; dbSNP:rs61753025." evidence="14 29">
    <original>G</original>
    <variation>R</variation>
    <location>
        <position position="1748"/>
    </location>
</feature>
<feature type="sequence variant" id="VAR_084941" description="In STGD1; uncertain significance." evidence="35">
    <original>Y</original>
    <variation>D</variation>
    <location>
        <position position="1754"/>
    </location>
</feature>
<feature type="sequence variant" id="VAR_012591" description="In STGD1." evidence="56">
    <location>
        <begin position="1761"/>
        <end position="1763"/>
    </location>
</feature>
<feature type="sequence variant" id="VAR_084942" description="In STGD1; uncertain significance; dbSNP:rs121909206." evidence="26">
    <original>A</original>
    <variation>D</variation>
    <location>
        <position position="1762"/>
    </location>
</feature>
<feature type="sequence variant" id="VAR_012592" description="In STGD1; dbSNP:rs61753028." evidence="14 42">
    <original>L</original>
    <variation>P</variation>
    <location>
        <position position="1763"/>
    </location>
</feature>
<feature type="sequence variant" id="VAR_084943" description="Found in a patient with chorioretinal atrophy; likely pathogenic; severely decreases solubility; loss of cytoplasmic vesicle localization; decreased basal ATPase activity to 30-50% and N-Ret-PE-induced activity to 20% of wild-type values; decreased N-all-trans-retinylidenephosphatidylethanolamine binding; dbSNP:rs760549861." evidence="35 47">
    <original>A</original>
    <variation>E</variation>
    <location>
        <position position="1773"/>
    </location>
</feature>
<feature type="sequence variant" id="VAR_084944" description="In STGD1; likely pathogenic; severely decreases solubility; loss of cytoplasmic vesicle localization; decreases basal and N-Ret-PE-induced ATPase activity to less than 30% of wild-type values; decreased N-all-trans-retinylidenephosphatidylethanolamine binding; dbSNP:rs760549861." evidence="37 43 47">
    <original>A</original>
    <variation>V</variation>
    <location>
        <position position="1773"/>
    </location>
</feature>
<feature type="sequence variant" id="VAR_085020" description="In STGD1; uncertain significance; dbSNP:rs771742619." evidence="37">
    <original>I</original>
    <variation>N</variation>
    <location>
        <position position="1775"/>
    </location>
</feature>
<feature type="sequence variant" id="VAR_012593" description="In STGD1; dbSNP:rs1553187939." evidence="22 43">
    <original>P</original>
    <variation>L</variation>
    <location>
        <position position="1776"/>
    </location>
</feature>
<feature type="sequence variant" id="VAR_085021" description="In STGD1; uncertain significance." evidence="9">
    <location>
        <begin position="1779"/>
        <end position="2273"/>
    </location>
</feature>
<feature type="sequence variant" id="VAR_085022" description="In STGD1; uncertain significance." evidence="37">
    <original>Y</original>
    <variation>H</variation>
    <location>
        <position position="1779"/>
    </location>
</feature>
<feature type="sequence variant" id="VAR_012594" description="In STGD1; dbSNP:rs121909207." evidence="11">
    <original>P</original>
    <variation>A</variation>
    <location>
        <position position="1780"/>
    </location>
</feature>
<feature type="sequence variant" id="VAR_008466" description="In STGD1; also found in a patient with bull's eye maculopathy; likely pathogenic; moderately decreases solubility; loss of cytoplasmic vesicle localization; decreased basal and N-Ret-PE-stimulated ATPase activity; decreased N-all-trans-retinylidenephosphatidylethanolamine binding; dbSNP:rs61751406." evidence="6 35 47">
    <original>A</original>
    <variation>D</variation>
    <location>
        <position position="1794"/>
    </location>
</feature>
<feature type="sequence variant" id="VAR_085023" description="In STGD1; likely pathogenic; loss of cytoplasmic vesicle localization; decreases basal and N-Ret-PE-stimulated ATPase activity; decreases solubility; reduces N-all-trans-retinylidenephosphatidylethanolamine binding; dbSNP:rs1571252997." evidence="44 47">
    <original>A</original>
    <variation>P</variation>
    <location>
        <position position="1794"/>
    </location>
</feature>
<feature type="sequence variant" id="VAR_012595" description="In STGD1; dbSNP:rs61750574." evidence="21 29 38">
    <original>N</original>
    <variation>D</variation>
    <location>
        <position position="1799"/>
    </location>
</feature>
<feature type="sequence variant" id="VAR_012596" description="In STGD1; likely pathogenic; decreases basal and N-Ret-PE-stimulated ATPase activity; reduces N-all-trans-retinylidenephosphatidylethanolamine binding; does not affect solubility; does not affect location in cytoplasmic vesicle; dbSNP:rs61753029." evidence="21 28 38 47">
    <original>N</original>
    <variation>D</variation>
    <location>
        <position position="1805"/>
    </location>
</feature>
<feature type="sequence variant" id="VAR_012597" description="In dbSNP:rs1029950404." evidence="51 54">
    <original>E</original>
    <variation>D</variation>
    <location>
        <position position="1817"/>
    </location>
</feature>
<feature type="sequence variant" id="VAR_008467" description="In STGD1; dbSNP:rs62646875." evidence="56">
    <original>R</original>
    <variation>P</variation>
    <location>
        <position position="1820"/>
    </location>
</feature>
<feature type="sequence variant" id="VAR_085024" description="In STGD1; likely pathogenic; decreases solubility; loss of cytoplasmic vesicle localization; decreased basal and N-Ret-PE-stimulated ATPase activity below 50% of wild-type values; decreased N-all-trans-retinylidenephosphatidylethanolamine binding; dbSNP:rs62642562." evidence="38 41 47">
    <original>H</original>
    <variation>D</variation>
    <location>
        <position position="1838"/>
    </location>
</feature>
<feature type="sequence variant" id="VAR_084945" description="In STGD1; likely pathogenic; does not affect solubility; does not affect location in cytoplasmic vesicle; decreased basal and N-Ret-PE-stimulated ATPase activity to 50-60% of wild-type values; decreased N-all-trans-retinylidenephosphatidylethanolamine binding; dbSNP:rs62642562." evidence="26 47">
    <original>H</original>
    <variation>N</variation>
    <location>
        <position position="1838"/>
    </location>
</feature>
<feature type="sequence variant" id="VAR_008468" description="In STGD1; likely pathogenic; decreases solubility; loss of cytoplasmic vesicle localization; decreased basal and N-Ret-PE-stimulated ATPase activity below 50% of wild-type values; decreased N-all-trans-retinylidenephosphatidylethanolamine binding; dbSNP:rs62642562." evidence="26 47 56">
    <original>H</original>
    <variation>Y</variation>
    <location>
        <position position="1838"/>
    </location>
</feature>
<feature type="sequence variant" id="VAR_008469" description="In STGD1; likely pathogenic; does not affect solubility; does not affect location in cytoplasmic vesicle; decreased basal and N-Ret-PE-stimulated ATPase activity between 50% and 70% of wild-type values; does not affect N-all-trans-retinylidenephosphatidylethanolamine binding; dbSNP:rs62642576." evidence="47 56">
    <original>R</original>
    <variation>W</variation>
    <location>
        <position position="1843"/>
    </location>
</feature>
<feature type="sequence variant" id="VAR_090226" description="In STGD1; dbSNP:rs1659540498." evidence="38">
    <original>G</original>
    <variation>D</variation>
    <location>
        <position position="1844"/>
    </location>
</feature>
<feature type="sequence variant" id="VAR_008494" description="In STGD1; dbSNP:rs61750575." evidence="22 35">
    <original>I</original>
    <variation>T</variation>
    <location>
        <position position="1846"/>
    </location>
</feature>
<feature type="sequence variant" id="VAR_008470" description="Found in patients with ABCA4-related ocular disorders; uncertain significance; slightly reduced retinal-stimulated ATP hydrolysis according to PubMed:11017087; no effect on both basal and N-Ret-PE-stimulated ATPase activity according to PubMed:33375396; does not affect N-all-trans-retinylidenephosphatidylethanolamine binding; does not affect solubility; does not affect location in cytoplasmic vesicle; dbSNP:rs1801466." evidence="14 15 19 20 22 23 26 37 43 45 47">
    <original>N</original>
    <variation>I</variation>
    <location>
        <position position="1868"/>
    </location>
</feature>
<feature type="sequence variant" id="VAR_084946" description="In CORD3; uncertain significance; dbSNP:rs752160946." evidence="43">
    <original>M</original>
    <variation>I</variation>
    <location>
        <position position="1882"/>
    </location>
</feature>
<feature type="sequence variant" id="VAR_012598" description="In STGD1; dbSNP:rs62642578." evidence="17">
    <original>V</original>
    <variation>E</variation>
    <location>
        <position position="1884"/>
    </location>
</feature>
<feature type="sequence variant" id="VAR_012599" description="In STGD1; dbSNP:rs62642563." evidence="14 43">
    <original>E</original>
    <variation>K</variation>
    <location>
        <position position="1885"/>
    </location>
</feature>
<feature type="sequence variant" id="VAR_008471" description="In STGD1; likely pathogenic; dbSNP:rs62642579." evidence="56">
    <original>G</original>
    <variation>E</variation>
    <location>
        <position position="1886"/>
    </location>
</feature>
<feature type="sequence variant" id="VAR_008472" description="In STGD1; dbSNP:rs61750635.">
    <location>
        <position position="1890"/>
    </location>
</feature>
<feature type="sequence variant" id="VAR_012600" description="In STGD1; dbSNP:rs61750636." evidence="17">
    <original>V</original>
    <variation>D</variation>
    <location>
        <position position="1896"/>
    </location>
</feature>
<feature type="sequence variant" id="VAR_085025" description="Does not affect solubility; does not affect location in cytoplasmic vesicle; does not affect both basal and N-Ret-PE-stimulated ATPase activity; modest decrease of N-all-trans-retinylidenephosphatidylethanolamine binding; dbSNP:rs201357151." evidence="47">
    <original>R</original>
    <variation>C</variation>
    <location>
        <position position="1898"/>
    </location>
</feature>
<feature type="sequence variant" id="VAR_008473" description="In STGD1 and ARMD2; likely benign; does not affect solubility; does not affect location in cytoplasmic vesicle; does not affect both basal and N-Ret-PE-stimulated ATPase activity; does not affect N-all-trans-retinylidenephosphatidylethanolamine binding; dbSNP:rs1800552." evidence="11 14 42 47 52">
    <original>R</original>
    <variation>H</variation>
    <location>
        <position position="1898"/>
    </location>
</feature>
<feature type="sequence variant" id="VAR_084947" description="In STGD1; uncertain significance." evidence="43">
    <original>V</original>
    <variation>G</variation>
    <location>
        <position position="1921"/>
    </location>
</feature>
<feature type="sequence variant" id="VAR_012601" description="In STGD1; dbSNP:rs61753032." evidence="14 43">
    <original>V</original>
    <variation>M</variation>
    <location>
        <position position="1921"/>
    </location>
</feature>
<feature type="sequence variant" id="VAR_012602" description="In STGD1 and FFM; dbSNP:rs61753033." evidence="21 29 38">
    <original>L</original>
    <variation>P</variation>
    <location>
        <position position="1940"/>
    </location>
</feature>
<feature type="sequence variant" id="VAR_085026" description="In STGD1; uncertain significance; dbSNP:rs760353830." evidence="37">
    <original>E</original>
    <variation>Q</variation>
    <location>
        <position position="1942"/>
    </location>
</feature>
<feature type="sequence variant" id="VAR_008474" description="In dbSNP:rs56142141." evidence="14 21 22 23 26">
    <original>P</original>
    <variation>L</variation>
    <location>
        <position position="1948"/>
    </location>
</feature>
<feature type="sequence variant" id="VAR_085027" evidence="9">
    <original>P</original>
    <variation>S</variation>
    <location>
        <position position="1948"/>
    </location>
</feature>
<feature type="sequence variant" id="VAR_008475" description="In STGD1, FFM and CORD3; pathogenic; risk factor for ARMD2; also found in patients with cone dystrophy and with macular dystrophy; does not affect solubility; does not affect location to cytoplasmic vesicle; severely decreased basal and N-Ret-PE-stimulated ATPase activity; decreased N-all-trans-retinylidenephosphatidylethanolamine binding; dbSNP:rs1800553." evidence="7 10 12 14 15 18 22 26 29 30 31 35 38 41 42 44 52 56">
    <original>G</original>
    <variation>E</variation>
    <location>
        <position position="1961"/>
    </location>
</feature>
<feature type="sequence variant" id="VAR_084948" description="In STGD1; likely pathogenic; dbSNP:rs142253670." evidence="38 43">
    <original>G</original>
    <variation>R</variation>
    <location>
        <position position="1961"/>
    </location>
</feature>
<feature type="sequence variant" id="VAR_008476" description="In ARMD2, FFM and STGD1; also found in a patient with cone dystrophy; dbSNP:rs28938473." evidence="14 26 31 42 52 55">
    <original>L</original>
    <variation>F</variation>
    <location>
        <position position="1970"/>
    </location>
</feature>
<feature type="sequence variant" id="VAR_012603" description="In FFM; 4-fold decreased binding affinity for ATP; decreased basal ATPase activity; abolishes retinal-stimulated ATP hydrolysis; dbSNP:rs61753034." evidence="15 25 55">
    <original>L</original>
    <variation>R</variation>
    <location>
        <position position="1971"/>
    </location>
</feature>
<feature type="sequence variant" id="VAR_012604" description="In STGD1; dbSNP:rs61753036." evidence="14">
    <original>G</original>
    <variation>R</variation>
    <location>
        <position position="1975"/>
    </location>
</feature>
<feature type="sequence variant" id="VAR_008477" description="In STGD1; pathogenic; highly reduced ATP-binding capacity; loss of retinal-stimulated ATP hydrolysis; dbSNP:rs61750639." evidence="14 15 22 29 30 31 38 43 55">
    <original>G</original>
    <variation>S</variation>
    <location>
        <position position="1977"/>
    </location>
</feature>
<feature type="sequence variant" id="VAR_084949" description="In STGD1; uncertain significance." evidence="43">
    <original>C</original>
    <variation>Y</variation>
    <location>
        <position position="2017"/>
    </location>
</feature>
<feature type="sequence variant" id="VAR_084950" description="In STGD1; uncertain significance; dbSNP:rs150633517." evidence="43">
    <original>I</original>
    <variation>T</variation>
    <location>
        <position position="2023"/>
    </location>
</feature>
<feature type="sequence variant" id="VAR_008478" description="In STGD1 and FFM; pathogenic; also found in a patient with chorioretinal atrophy; decreased basal and N-Ret-PE-stimulated ATPase activity; 34-fold decreased binding affinity for ATP; 4-fold decreased Vmax for basal ATP hydrolysis; decreased solubility; does not localize to cytoplasmic vesicle; decreased N-all-trans-retinylidenephosphatidylethanolamine binding; dbSNP:rs61751408." evidence="15 19 22 25 26 29 30 35 42 44">
    <original>L</original>
    <variation>F</variation>
    <location>
        <position position="2027"/>
    </location>
</feature>
<feature type="sequence variant" id="VAR_084951" description="In STGD1 and CORD3; uncertain significance; dbSNP:rs61751383." evidence="9 31 43">
    <location>
        <begin position="2030"/>
        <end position="2273"/>
    </location>
</feature>
<feature type="sequence variant" id="VAR_008480" description="In STGD1 and FFM; dbSNP:rs61750641." evidence="19 22 26 35 42">
    <original>R</original>
    <variation>Q</variation>
    <location>
        <position position="2030"/>
    </location>
</feature>
<feature type="sequence variant" id="VAR_084952" description="In STGD1; uncertain significance; dbSNP:rs1242866408." evidence="43">
    <original>H</original>
    <variation>R</variation>
    <location>
        <position position="2032"/>
    </location>
</feature>
<feature type="sequence variant" id="VAR_084953" description="In STGD1; uncertain significance; dbSNP:rs1553186896." evidence="42">
    <original>L</original>
    <variation>R</variation>
    <location>
        <position position="2033"/>
    </location>
</feature>
<feature type="sequence variant" id="VAR_012605" description="In STGD1; dbSNP:rs61750642." evidence="22">
    <original>L</original>
    <variation>P</variation>
    <location>
        <position position="2035"/>
    </location>
</feature>
<feature type="sequence variant" id="VAR_008495" description="In STGD1; pathogenic; 2-fold decreased binding affinity for ATP; decreased basal ATPase activity; dbSNP:rs61750643." evidence="7 25 43 51">
    <original>R</original>
    <variation>W</variation>
    <location>
        <position position="2038"/>
    </location>
</feature>
<feature type="sequence variant" id="VAR_084954" description="In STGD1; uncertain significance; also found in a patient with chorioretinal atrophy; uncertain significance; dbSNP:rs61753038." evidence="35 43">
    <location>
        <begin position="2040"/>
        <end position="2273"/>
    </location>
</feature>
<feature type="sequence variant" id="VAR_084955" description="In STGD1; uncertain significance; dbSNP:rs148460146." evidence="43">
    <original>R</original>
    <variation>Q</variation>
    <location>
        <position position="2040"/>
    </location>
</feature>
<feature type="sequence variant" id="VAR_084956" description="In STGD1; uncertain significance." evidence="43">
    <original>V</original>
    <variation>G</variation>
    <location>
        <position position="2042"/>
    </location>
</feature>
<feature type="sequence variant" id="VAR_084957" description="In CORD3; uncertain significance; dbSNP:rs763230559." evidence="43">
    <original>P</original>
    <variation>S</variation>
    <location>
        <position position="2043"/>
    </location>
</feature>
<feature type="sequence variant" id="VAR_067429" description="In STGD1; dbSNP:rs1659351816." evidence="30 38">
    <original>I</original>
    <variation>N</variation>
    <location>
        <position position="2047"/>
    </location>
</feature>
<feature type="sequence variant" id="VAR_008481" description="In STGD1 and CORD3; may act as a modifier of macular dystrophy in patients who also have a Trp-172 mutation in PRPH2; dbSNP:rs41292677." evidence="22 26 32 42">
    <original>V</original>
    <variation>L</variation>
    <location>
        <position position="2050"/>
    </location>
</feature>
<feature type="sequence variant" id="VAR_012606" evidence="14">
    <original>G</original>
    <variation>A</variation>
    <location>
        <position position="2059"/>
    </location>
</feature>
<feature type="sequence variant" id="VAR_012607" description="In CORD3 and STGD1; dbSNP:rs61753039." evidence="21 29 38">
    <original>L</original>
    <variation>R</variation>
    <location>
        <position position="2060"/>
    </location>
</feature>
<feature type="sequence variant" id="VAR_084958" description="In STGD1; uncertain significance; dbSNP:rs61753040." evidence="43">
    <original>A</original>
    <variation>T</variation>
    <location>
        <position position="2064"/>
    </location>
</feature>
<feature type="sequence variant" id="VAR_012608" description="In STGD1; dbSNP:rs1659197100." evidence="17">
    <original>Y</original>
    <variation>F</variation>
    <location>
        <position position="2071"/>
    </location>
</feature>
<feature type="sequence variant" id="VAR_085028" description="In STGD1; uncertain significance; dbSNP:rs367839100." evidence="37">
    <original>G</original>
    <variation>V</variation>
    <location>
        <position position="2074"/>
    </location>
</feature>
<feature type="sequence variant" id="VAR_012609" description="In STGD1; dbSNP:rs61750645." evidence="14">
    <original>R</original>
    <variation>G</variation>
    <location>
        <position position="2077"/>
    </location>
</feature>
<feature type="sequence variant" id="VAR_090227" description="In STGD1; dbSNP:rs886044759." evidence="38">
    <original>R</original>
    <variation>Q</variation>
    <location>
        <position position="2077"/>
    </location>
</feature>
<feature type="sequence variant" id="VAR_008482" description="In STGD1; pathogenic; highly reduced ATP-binding capacity; decreased solubility; loss of intracellular vesicle localization; decreased basal and N-Ret-PE-stimulated ATPase activity; decreased N-all-trans-retinylidenephosphatidylethanolamine binding; dbSNP:rs61750645." evidence="7 14 15 44">
    <original>R</original>
    <variation>W</variation>
    <location>
        <position position="2077"/>
    </location>
</feature>
<feature type="sequence variant" id="VAR_084959" description="In STGD1; uncertain significance." evidence="43">
    <original>K</original>
    <variation>E</variation>
    <location>
        <position position="2078"/>
    </location>
</feature>
<feature type="sequence variant" id="VAR_008483" description="In STGD1; likely pathogenic; loss of retinal-stimulated ATPase activity; dbSNP:rs61750646." evidence="15 31">
    <original>E</original>
    <variation>K</variation>
    <location>
        <position position="2096"/>
    </location>
</feature>
<feature type="sequence variant" id="VAR_084960" description="In STGD1; uncertain significance; dbSNP:rs1166357291." evidence="43">
    <original>P</original>
    <variation>S</variation>
    <location>
        <position position="2097"/>
    </location>
</feature>
<feature type="sequence variant" id="VAR_008484" description="In STGD1 and FFM; likely pathogenic; dbSNP:rs61750648." evidence="19 35">
    <original>R</original>
    <variation>C</variation>
    <location>
        <position position="2106"/>
    </location>
</feature>
<feature type="sequence variant" id="VAR_012610" description="In STGD1; likely pathogenic; dbSNP:rs2297669." evidence="22 35">
    <original>R</original>
    <variation>C</variation>
    <location>
        <position position="2107"/>
    </location>
</feature>
<feature type="sequence variant" id="VAR_008485" description="In STGD1 and CORD3; likely pathogenic; may predispose to develop retinal toxicity after treatment with chloroquine and hydroxychloroquine; dbSNP:rs62642564." evidence="7 20 22 26 29 30 41 43 55">
    <original>R</original>
    <variation>H</variation>
    <location>
        <position position="2107"/>
    </location>
</feature>
<feature type="sequence variant" id="VAR_008486" description="In STGD1; dbSNP:rs61750651." evidence="7 37">
    <original>H</original>
    <variation>R</variation>
    <location>
        <position position="2128"/>
    </location>
</feature>
<feature type="sequence variant" id="VAR_008487" description="In STGD1; uncertain significance; dbSNP:rs61750652." evidence="35">
    <original>E</original>
    <variation>K</variation>
    <location>
        <position position="2131"/>
    </location>
</feature>
<feature type="sequence variant" id="VAR_067430" description="In STGD1; dbSNP:rs1659154730." evidence="30 38">
    <original>C</original>
    <variation>Y</variation>
    <location>
        <position position="2137"/>
    </location>
</feature>
<feature type="sequence variant" id="VAR_008488" description="In STGD1; dbSNP:rs61750653." evidence="22 26">
    <original>R</original>
    <variation>W</variation>
    <location>
        <position position="2139"/>
    </location>
</feature>
<feature type="sequence variant" id="VAR_084961" description="In STGD1; uncertain significance; dbSNP:rs774475956." evidence="31">
    <original>L</original>
    <variation>Q</variation>
    <location>
        <position position="2140"/>
    </location>
</feature>
<feature type="sequence variant" id="VAR_012611" description="In CORD3; 2-fold decreased binding affinity for ATP; decreased basal ATPase activity; dbSNP:rs61753044." evidence="22 25 43">
    <original>G</original>
    <variation>D</variation>
    <location>
        <position position="2146"/>
    </location>
</feature>
<feature type="sequence variant" id="VAR_012612" description="In STGD1; dbSNP:rs61750655." evidence="26">
    <original>R</original>
    <variation>L</variation>
    <location>
        <position position="2149"/>
    </location>
</feature>
<feature type="sequence variant" id="VAR_012613" description="In STGD1; dbSNP:rs61750656." evidence="22 43">
    <original>C</original>
    <variation>R</variation>
    <location>
        <position position="2150"/>
    </location>
</feature>
<feature type="sequence variant" id="VAR_008489" description="In STGD1 and CORD3; dbSNP:rs61751384." evidence="7 9 22 26 29 35 38">
    <original>C</original>
    <variation>Y</variation>
    <location>
        <position position="2150"/>
    </location>
</feature>
<feature type="sequence variant" id="VAR_008490" description="In STGD1; dbSNP:rs281865405." evidence="9">
    <original>K</original>
    <variation>R</variation>
    <location>
        <position position="2160"/>
    </location>
</feature>
<feature type="sequence variant" id="VAR_008491" description="In CORD3 and STGD1; likely benign; also found in patients with age-related macular degeneration although association with disease in these patients is controversial; increased retinal-stimulated ATP hydrolysis; 4-fold decreased binding affinity for ATP; dbSNP:rs1800555." evidence="12 14 15 18 25 26 42 52">
    <original>D</original>
    <variation>N</variation>
    <location>
        <position position="2177"/>
    </location>
</feature>
<feature type="sequence variant" id="VAR_084962" description="In STGD1; pathogenic; dbSNP:rs61750658." evidence="38 43">
    <original>F</original>
    <variation>S</variation>
    <location>
        <position position="2188"/>
    </location>
</feature>
<feature type="sequence variant" id="VAR_012614" description="In dbSNP:rs886044763." evidence="14">
    <original>A</original>
    <variation>V</variation>
    <location>
        <position position="2216"/>
    </location>
</feature>
<feature type="sequence variant" id="VAR_084963" description="In STGD1; uncertain significance; dbSNP:rs1367504380." evidence="31">
    <original>L</original>
    <variation>P</variation>
    <location>
        <position position="2221"/>
    </location>
</feature>
<feature type="sequence variant" id="VAR_012615" description="In STGD1; dbSNP:rs61750659." evidence="17">
    <original>L</original>
    <variation>P</variation>
    <location>
        <position position="2229"/>
    </location>
</feature>
<feature type="sequence variant" id="VAR_084964" description="In STGD1; uncertain significance; dbSNP:rs1659051890." evidence="35">
    <original>T</original>
    <variation>P</variation>
    <location>
        <position position="2237"/>
    </location>
</feature>
<feature type="sequence variant" id="VAR_012616" description="In STGD1; dbSNP:rs61748521." evidence="14 26 29">
    <original>L</original>
    <variation>V</variation>
    <location>
        <position position="2241"/>
    </location>
</feature>
<feature type="sequence variant" id="VAR_009157" description="In dbSNP:rs6666652." evidence="19 20 21 37 43 52">
    <original>S</original>
    <variation>I</variation>
    <location>
        <position position="2255"/>
    </location>
</feature>
<feature type="sequence variant" id="VAR_012617" description="In STGD1; dbSNP:rs281865407." evidence="17">
    <original>R</original>
    <variation>L</variation>
    <location>
        <position position="2263"/>
    </location>
</feature>
<feature type="mutagenesis site" description="Loss of N-Ret-PE-stimulated ATPase activity. No effect on basal ATPase activity." evidence="49">
    <original>Y</original>
    <variation>A</variation>
    <location>
        <position position="345"/>
    </location>
</feature>
<feature type="mutagenesis site" description="Loss of N-Ret-PE-stimulated ATPase activity. No effect on basal ATPase activity. Decreased N-retinylidene-phosphatidylethanolamine flippase activity. Decreased affinity for N-all-trans-retinylidenephosphatidylethanolamine." evidence="49">
    <original>Y</original>
    <variation>C</variation>
    <location>
        <position position="345"/>
    </location>
</feature>
<feature type="mutagenesis site" description="Loss of N-Ret-PE-stimulated ATPase activity. No effect on basal ATPase activity. Decreased N-retinylidene-phosphatidylethanolamine flippase activity. Decreased affinity for N-all-trans-retinylidenephosphatidylethanolamine." evidence="49">
    <original>R</original>
    <variation>A</variation>
    <location>
        <position position="587"/>
    </location>
</feature>
<feature type="mutagenesis site" description="Reduced retinal-stimulated ATP hydrolysis." evidence="15">
    <location>
        <position position="863"/>
    </location>
</feature>
<feature type="mutagenesis site" description="Decreases 11-cis-Retinal binding affinity by 50%." evidence="36">
    <original>P</original>
    <variation>R</variation>
    <location>
        <position position="940"/>
    </location>
</feature>
<feature type="mutagenesis site" description="No significant effect on basal ATPase activity. Decreased N-Ret-PE-stimulated ATPase activity." evidence="50">
    <original>N</original>
    <variation>A</variation>
    <location>
        <position position="965"/>
    </location>
</feature>
<feature type="mutagenesis site" description="Decreased N-Ret-PE binding to 50%-63% of wild-type values." evidence="50">
    <original>N</original>
    <variation>D</variation>
    <variation>K</variation>
    <location>
        <position position="965"/>
    </location>
</feature>
<feature type="mutagenesis site" description="Results in minimal, if any, basal ATPase activity. Loss of N-Ret-PE-stimulated ATPase activity." evidence="50">
    <original>N</original>
    <variation>D</variation>
    <variation>K</variation>
    <location>
        <position position="965"/>
    </location>
</feature>
<feature type="mutagenesis site" description="Decreased basal ATPase activity. Loss of N-Ret-PE-stimulated ATPase activity." evidence="50">
    <original>N</original>
    <variation>Q</variation>
    <location>
        <position position="965"/>
    </location>
</feature>
<feature type="mutagenesis site" description="Abolishes basal and retinal-stimulated ATP hydrolysis." evidence="15">
    <original>G</original>
    <variation>D</variation>
    <location>
        <position position="966"/>
    </location>
</feature>
<feature type="mutagenesis site" description="Abolishes basal and retinal-stimulated ATP hydrolysis." evidence="15">
    <original>K</original>
    <variation>M</variation>
    <location>
        <position position="969"/>
    </location>
</feature>
<feature type="mutagenesis site" description="Inhibits ATPase activity; when associated with M-1978. Decreases translocase activity; when associated with M-1978. Does not affect protein subcellular localization in endoplasmic reticulum; when associated with M-1978. Loss of ATP-dependent all-trans-retinal transport; when associated with M-1978. Loss in N-retinylidene-PE transfer activity. Inhibits ATPase activity with increasing retinal concentration. Does not affect N-retinylidene-PE binding. Impairs ATP-dependent release of N-retinylidene-PE. Significantly reduces PE flippase activity." evidence="34 39">
    <original>K</original>
    <variation>M</variation>
    <location>
        <position position="969"/>
    </location>
</feature>
<feature type="mutagenesis site" description="Severely decreased basal ATPase activity and loss of N-Ret-PE-stimulated ATPase activity. Does not affect protein folding; when associated with Q-2096. Loss of basal and N-Ret-PE-stimulated ATPase activity; when associated with Q-2096." evidence="48 50">
    <original>E</original>
    <variation>Q</variation>
    <location>
        <position position="1087"/>
    </location>
</feature>
<feature type="mutagenesis site" description="Moderately decreased protein abundance. Moderately decreased ATPase activity. Moderately decreased phospholipid translocase activity." evidence="39">
    <original>C</original>
    <variation>R</variation>
    <location>
        <position position="1502"/>
    </location>
</feature>
<feature type="mutagenesis site" description="Decreased solubility. Loss of cytoplasmic vesicle localization. Severely decreased basal and N-Ret-PE-induced ATPase activity. Decreased N-all-trans-retinylidenephosphatidylethanolamine binding." evidence="47">
    <original>Q</original>
    <variation>K</variation>
    <location>
        <position position="1703"/>
    </location>
</feature>
<feature type="mutagenesis site" description="Severely decreases solubility. Loss of cytoplasmic vesicle localization. Decreases basal ATPase activity below 50%. Severe decrease of N-Ret-PE-induced stimulation in ATPase activity. Decreased N-all-trans-retinylidenephosphatidylethanolamine binding." evidence="47">
    <original>H</original>
    <variation>R</variation>
    <location>
        <position position="1838"/>
    </location>
</feature>
<feature type="mutagenesis site" description="Decreased basal ATPase activity and loss of N-Ret-PE-stimulated ATPase activity." evidence="50">
    <original>N</original>
    <variation>D</variation>
    <variation>K</variation>
    <variation>Y</variation>
    <location>
        <position position="1974"/>
    </location>
</feature>
<feature type="mutagenesis site" description="Decreased N-Ret-PE binding to 25% of wild-type values." evidence="50">
    <original>N</original>
    <variation>D</variation>
    <location>
        <position position="1974"/>
    </location>
</feature>
<feature type="mutagenesis site" description="No significant effect on basal ATPase activity. Decreased N-Ret-PE-stimulated ATPase activity." evidence="50">
    <original>N</original>
    <variation>S</variation>
    <variation>A</variation>
    <variation>Q</variation>
    <location>
        <position position="1974"/>
    </location>
</feature>
<feature type="mutagenesis site" description="Inhibition of retinal-stimulated ATP hydrolysis." evidence="15">
    <original>G</original>
    <variation>D</variation>
    <location>
        <position position="1975"/>
    </location>
</feature>
<feature type="mutagenesis site" description="Inhibits ATPase activity; when associated with M-969. Decreases translocase activity; when associated with M-969. Does not affect protein subcellular localization in endoplasmic reticulum; when associated with M-969. Loss of ATP-dependent all-trans-retinal transport; when associated with M-1978. Loss in N-retinylidene-PE transfer activity. Inhibits ATPase activity with increasing retinal concentration. Does not affect ATP-independent N-retinylidene-PE binding. Does not affect ATP-dependent of N-retinylidene-PE release. Significantly reduces PE flippase activity. Inhibition of retinal-stimulated ATP hydrolysis." evidence="15 34 39">
    <original>K</original>
    <variation>M</variation>
    <location>
        <position position="1978"/>
    </location>
</feature>
<feature type="mutagenesis site" description="Decreased basal ATPase activity and loss of N-Ret-PE-stimulated ATPase activity. Does not affect protein folding; when associated with Q-1087. Loss of ATPase activity; when associated with Q-1087." evidence="48 50">
    <original>E</original>
    <variation>Q</variation>
    <location>
        <position position="2096"/>
    </location>
</feature>
<feature type="mutagenesis site" description="Highly decreased protein abundance. Highly decreased ATPase activity. Highly decreased phospholipid translocase activity." evidence="39">
    <original>R</original>
    <variation>P</variation>
    <location>
        <position position="2107"/>
    </location>
</feature>
<feature type="mutagenesis site" description="2-fold decreased binding affinity for ATP. Loss of ATPase activity." evidence="25">
    <original>K</original>
    <variation>A</variation>
    <location>
        <position position="2175"/>
    </location>
</feature>
<feature type="mutagenesis site" description="Does not affect protein abundance. Does not affect ATPase activity. Moderately decreased phospholipid translocase activity." evidence="39">
    <original>P</original>
    <variation>L</variation>
    <location>
        <position position="2180"/>
    </location>
</feature>
<feature type="sequence conflict" description="In Ref. 2; AAC23915." evidence="59" ref="2">
    <original>G</original>
    <variation>V</variation>
    <location>
        <position position="722"/>
    </location>
</feature>
<feature type="sequence conflict" description="In Ref. 1; AAC51144." evidence="59" ref="1">
    <original>V</original>
    <variation>C</variation>
    <location>
        <position position="849"/>
    </location>
</feature>
<feature type="sequence conflict" description="In Ref. 1; AAC51144 and 3; CAA75729." evidence="59" ref="1 3">
    <original>G</original>
    <variation>S</variation>
    <location>
        <position position="882"/>
    </location>
</feature>
<feature type="sequence conflict" description="In Ref. 2; AAC23915." evidence="59" ref="2">
    <original>C</original>
    <variation>S</variation>
    <location>
        <position position="941"/>
    </location>
</feature>
<feature type="sequence conflict" description="In Ref. 1; AAC51144." evidence="59" ref="1">
    <original>S</original>
    <variation>P</variation>
    <location>
        <position position="1116"/>
    </location>
</feature>
<feature type="sequence conflict" description="In Ref. 1; AAC51144." evidence="59" ref="1">
    <original>LL</original>
    <variation>HQ</variation>
    <location>
        <begin position="1125"/>
        <end position="1126"/>
    </location>
</feature>
<feature type="sequence conflict" description="In Ref. 1; AAC51144 and 3; CAA75729." evidence="59" ref="1 3">
    <original>P</original>
    <variation>L</variation>
    <location>
        <position position="1395"/>
    </location>
</feature>
<feature type="sequence conflict" description="In Ref. 4; AAC05632." evidence="59" ref="4">
    <original>S</original>
    <variation>C</variation>
    <location>
        <position position="1465"/>
    </location>
</feature>
<feature type="sequence conflict" description="In Ref. 4; AAC05632." evidence="59" ref="4">
    <original>S</original>
    <variation>T</variation>
    <location>
        <position position="1518"/>
    </location>
</feature>
<feature type="sequence conflict" description="In Ref. 2; AAC23915." evidence="59" ref="2">
    <original>M</original>
    <variation>V</variation>
    <location>
        <position position="1733"/>
    </location>
</feature>
<feature type="sequence conflict" description="In Ref. 2; AAC23915." evidence="59" ref="2">
    <original>T</original>
    <variation>N</variation>
    <location>
        <position position="1989"/>
    </location>
</feature>
<feature type="sequence conflict" description="In Ref. 1; AAC51144." evidence="59" ref="1">
    <original>E</original>
    <variation>K</variation>
    <location>
        <position position="2119"/>
    </location>
</feature>
<feature type="helix" evidence="74">
    <location>
        <begin position="4"/>
        <end position="21"/>
    </location>
</feature>
<feature type="helix" evidence="74">
    <location>
        <begin position="24"/>
        <end position="44"/>
    </location>
</feature>
<feature type="strand" evidence="69">
    <location>
        <begin position="48"/>
        <end position="51"/>
    </location>
</feature>
<feature type="strand" evidence="72">
    <location>
        <begin position="58"/>
        <end position="60"/>
    </location>
</feature>
<feature type="helix" evidence="74">
    <location>
        <begin position="62"/>
        <end position="64"/>
    </location>
</feature>
<feature type="helix" evidence="74">
    <location>
        <begin position="66"/>
        <end position="75"/>
    </location>
</feature>
<feature type="helix" evidence="73">
    <location>
        <begin position="76"/>
        <end position="78"/>
    </location>
</feature>
<feature type="strand" evidence="74">
    <location>
        <begin position="81"/>
        <end position="84"/>
    </location>
</feature>
<feature type="helix" evidence="74">
    <location>
        <begin position="87"/>
        <end position="89"/>
    </location>
</feature>
<feature type="strand" evidence="74">
    <location>
        <begin position="90"/>
        <end position="92"/>
    </location>
</feature>
<feature type="helix" evidence="74">
    <location>
        <begin position="101"/>
        <end position="112"/>
    </location>
</feature>
<feature type="turn" evidence="74">
    <location>
        <begin position="113"/>
        <end position="115"/>
    </location>
</feature>
<feature type="strand" evidence="74">
    <location>
        <begin position="116"/>
        <end position="118"/>
    </location>
</feature>
<feature type="helix" evidence="74">
    <location>
        <begin position="119"/>
        <end position="137"/>
    </location>
</feature>
<feature type="strand" evidence="69">
    <location>
        <begin position="140"/>
        <end position="142"/>
    </location>
</feature>
<feature type="strand" evidence="74">
    <location>
        <begin position="147"/>
        <end position="149"/>
    </location>
</feature>
<feature type="strand" evidence="74">
    <location>
        <begin position="151"/>
        <end position="154"/>
    </location>
</feature>
<feature type="turn" evidence="74">
    <location>
        <begin position="157"/>
        <end position="159"/>
    </location>
</feature>
<feature type="strand" evidence="74">
    <location>
        <begin position="170"/>
        <end position="172"/>
    </location>
</feature>
<feature type="strand" evidence="74">
    <location>
        <begin position="175"/>
        <end position="177"/>
    </location>
</feature>
<feature type="helix" evidence="69">
    <location>
        <begin position="210"/>
        <end position="217"/>
    </location>
</feature>
<feature type="turn" evidence="69">
    <location>
        <begin position="234"/>
        <end position="238"/>
    </location>
</feature>
<feature type="strand" evidence="74">
    <location>
        <begin position="240"/>
        <end position="245"/>
    </location>
</feature>
<feature type="strand" evidence="69">
    <location>
        <begin position="246"/>
        <end position="248"/>
    </location>
</feature>
<feature type="strand" evidence="74">
    <location>
        <begin position="249"/>
        <end position="251"/>
    </location>
</feature>
<feature type="helix" evidence="74">
    <location>
        <begin position="260"/>
        <end position="263"/>
    </location>
</feature>
<feature type="strand" evidence="74">
    <location>
        <begin position="264"/>
        <end position="266"/>
    </location>
</feature>
<feature type="helix" evidence="74">
    <location>
        <begin position="272"/>
        <end position="276"/>
    </location>
</feature>
<feature type="turn" evidence="74">
    <location>
        <begin position="277"/>
        <end position="279"/>
    </location>
</feature>
<feature type="helix" evidence="74">
    <location>
        <begin position="280"/>
        <end position="289"/>
    </location>
</feature>
<feature type="helix" evidence="74">
    <location>
        <begin position="291"/>
        <end position="300"/>
    </location>
</feature>
<feature type="turn" evidence="74">
    <location>
        <begin position="301"/>
        <end position="304"/>
    </location>
</feature>
<feature type="helix" evidence="74">
    <location>
        <begin position="313"/>
        <end position="323"/>
    </location>
</feature>
<feature type="turn" evidence="71">
    <location>
        <begin position="328"/>
        <end position="330"/>
    </location>
</feature>
<feature type="helix" evidence="74">
    <location>
        <begin position="339"/>
        <end position="342"/>
    </location>
</feature>
<feature type="helix" evidence="74">
    <location>
        <begin position="345"/>
        <end position="349"/>
    </location>
</feature>
<feature type="strand" evidence="72">
    <location>
        <begin position="364"/>
        <end position="366"/>
    </location>
</feature>
<feature type="helix" evidence="74">
    <location>
        <begin position="368"/>
        <end position="379"/>
    </location>
</feature>
<feature type="turn" evidence="74">
    <location>
        <begin position="381"/>
        <end position="383"/>
    </location>
</feature>
<feature type="helix" evidence="74">
    <location>
        <begin position="384"/>
        <end position="394"/>
    </location>
</feature>
<feature type="strand" evidence="74">
    <location>
        <begin position="397"/>
        <end position="401"/>
    </location>
</feature>
<feature type="helix" evidence="74">
    <location>
        <begin position="405"/>
        <end position="414"/>
    </location>
</feature>
<feature type="helix" evidence="74">
    <location>
        <begin position="416"/>
        <end position="429"/>
    </location>
</feature>
<feature type="helix" evidence="74">
    <location>
        <begin position="431"/>
        <end position="442"/>
    </location>
</feature>
<feature type="helix" evidence="74">
    <location>
        <begin position="447"/>
        <end position="456"/>
    </location>
</feature>
<feature type="helix" evidence="74">
    <location>
        <begin position="458"/>
        <end position="460"/>
    </location>
</feature>
<feature type="helix" evidence="72">
    <location>
        <begin position="462"/>
        <end position="467"/>
    </location>
</feature>
<feature type="strand" evidence="70">
    <location>
        <begin position="471"/>
        <end position="473"/>
    </location>
</feature>
<feature type="helix" evidence="74">
    <location>
        <begin position="474"/>
        <end position="477"/>
    </location>
</feature>
<feature type="turn" evidence="74">
    <location>
        <begin position="478"/>
        <end position="481"/>
    </location>
</feature>
<feature type="turn" evidence="74">
    <location>
        <begin position="483"/>
        <end position="486"/>
    </location>
</feature>
<feature type="strand" evidence="72">
    <location>
        <begin position="488"/>
        <end position="490"/>
    </location>
</feature>
<feature type="helix" evidence="74">
    <location>
        <begin position="499"/>
        <end position="517"/>
    </location>
</feature>
<feature type="strand" evidence="74">
    <location>
        <begin position="525"/>
        <end position="527"/>
    </location>
</feature>
<feature type="turn" evidence="74">
    <location>
        <begin position="531"/>
        <end position="536"/>
    </location>
</feature>
<feature type="helix" evidence="74">
    <location>
        <begin position="537"/>
        <end position="543"/>
    </location>
</feature>
<feature type="strand" evidence="74">
    <location>
        <begin position="547"/>
        <end position="552"/>
    </location>
</feature>
<feature type="strand" evidence="74">
    <location>
        <begin position="565"/>
        <end position="572"/>
    </location>
</feature>
<feature type="helix" evidence="74">
    <location>
        <begin position="575"/>
        <end position="577"/>
    </location>
</feature>
<feature type="turn" evidence="74">
    <location>
        <begin position="597"/>
        <end position="599"/>
    </location>
</feature>
<feature type="helix" evidence="74">
    <location>
        <begin position="602"/>
        <end position="605"/>
    </location>
</feature>
<feature type="helix" evidence="74">
    <location>
        <begin position="608"/>
        <end position="624"/>
    </location>
</feature>
<feature type="strand" evidence="72">
    <location>
        <begin position="632"/>
        <end position="636"/>
    </location>
</feature>
<feature type="strand" evidence="69">
    <location>
        <begin position="642"/>
        <end position="646"/>
    </location>
</feature>
<feature type="helix" evidence="74">
    <location>
        <begin position="647"/>
        <end position="679"/>
    </location>
</feature>
<feature type="helix" evidence="74">
    <location>
        <begin position="683"/>
        <end position="689"/>
    </location>
</feature>
<feature type="helix" evidence="74">
    <location>
        <begin position="695"/>
        <end position="721"/>
    </location>
</feature>
<feature type="strand" evidence="74">
    <location>
        <begin position="724"/>
        <end position="727"/>
    </location>
</feature>
<feature type="helix" evidence="74">
    <location>
        <begin position="730"/>
        <end position="754"/>
    </location>
</feature>
<feature type="helix" evidence="74">
    <location>
        <begin position="758"/>
        <end position="781"/>
    </location>
</feature>
<feature type="helix" evidence="74">
    <location>
        <begin position="783"/>
        <end position="785"/>
    </location>
</feature>
<feature type="helix" evidence="74">
    <location>
        <begin position="790"/>
        <end position="794"/>
    </location>
</feature>
<feature type="helix" evidence="74">
    <location>
        <begin position="798"/>
        <end position="814"/>
    </location>
</feature>
<feature type="turn" evidence="74">
    <location>
        <begin position="821"/>
        <end position="825"/>
    </location>
</feature>
<feature type="strand" evidence="73">
    <location>
        <begin position="828"/>
        <end position="831"/>
    </location>
</feature>
<feature type="helix" evidence="74">
    <location>
        <begin position="837"/>
        <end position="860"/>
    </location>
</feature>
<feature type="strand" evidence="74">
    <location>
        <begin position="863"/>
        <end position="865"/>
    </location>
</feature>
<feature type="turn" evidence="73">
    <location>
        <begin position="872"/>
        <end position="876"/>
    </location>
</feature>
<feature type="strand" evidence="73">
    <location>
        <begin position="877"/>
        <end position="879"/>
    </location>
</feature>
<feature type="strand" evidence="71">
    <location>
        <begin position="923"/>
        <end position="925"/>
    </location>
</feature>
<feature type="strand" evidence="72">
    <location>
        <begin position="927"/>
        <end position="934"/>
    </location>
</feature>
<feature type="helix" evidence="73">
    <location>
        <begin position="939"/>
        <end position="941"/>
    </location>
</feature>
<feature type="strand" evidence="73">
    <location>
        <begin position="945"/>
        <end position="949"/>
    </location>
</feature>
<feature type="strand" evidence="74">
    <location>
        <begin position="956"/>
        <end position="960"/>
    </location>
</feature>
<feature type="turn" evidence="74">
    <location>
        <begin position="965"/>
        <end position="968"/>
    </location>
</feature>
<feature type="helix" evidence="74">
    <location>
        <begin position="969"/>
        <end position="977"/>
    </location>
</feature>
<feature type="strand" evidence="74">
    <location>
        <begin position="978"/>
        <end position="980"/>
    </location>
</feature>
<feature type="strand" evidence="72">
    <location>
        <begin position="986"/>
        <end position="989"/>
    </location>
</feature>
<feature type="turn" evidence="74">
    <location>
        <begin position="993"/>
        <end position="995"/>
    </location>
</feature>
<feature type="strand" evidence="74">
    <location>
        <begin position="1001"/>
        <end position="1004"/>
    </location>
</feature>
<feature type="strand" evidence="73">
    <location>
        <begin position="1005"/>
        <end position="1008"/>
    </location>
</feature>
<feature type="strand" evidence="73">
    <location>
        <begin position="1016"/>
        <end position="1018"/>
    </location>
</feature>
<feature type="helix" evidence="74">
    <location>
        <begin position="1020"/>
        <end position="1030"/>
    </location>
</feature>
<feature type="helix" evidence="74">
    <location>
        <begin position="1035"/>
        <end position="1043"/>
    </location>
</feature>
<feature type="turn" evidence="74">
    <location>
        <begin position="1049"/>
        <end position="1054"/>
    </location>
</feature>
<feature type="strand" evidence="74">
    <location>
        <begin position="1055"/>
        <end position="1058"/>
    </location>
</feature>
<feature type="turn" evidence="74">
    <location>
        <begin position="1059"/>
        <end position="1061"/>
    </location>
</feature>
<feature type="helix" evidence="74">
    <location>
        <begin position="1064"/>
        <end position="1073"/>
    </location>
</feature>
<feature type="helix" evidence="74">
    <location>
        <begin position="1074"/>
        <end position="1076"/>
    </location>
</feature>
<feature type="helix" evidence="72">
    <location>
        <begin position="1077"/>
        <end position="1079"/>
    </location>
</feature>
<feature type="strand" evidence="72">
    <location>
        <begin position="1081"/>
        <end position="1084"/>
    </location>
</feature>
<feature type="strand" evidence="72">
    <location>
        <begin position="1086"/>
        <end position="1091"/>
    </location>
</feature>
<feature type="helix" evidence="74">
    <location>
        <begin position="1094"/>
        <end position="1106"/>
    </location>
</feature>
<feature type="strand" evidence="74">
    <location>
        <begin position="1113"/>
        <end position="1115"/>
    </location>
</feature>
<feature type="helix" evidence="74">
    <location>
        <begin position="1121"/>
        <end position="1123"/>
    </location>
</feature>
<feature type="turn" evidence="74">
    <location>
        <begin position="1134"/>
        <end position="1137"/>
    </location>
</feature>
<feature type="helix" evidence="74">
    <location>
        <begin position="1144"/>
        <end position="1148"/>
    </location>
</feature>
<feature type="strand" evidence="74">
    <location>
        <begin position="1156"/>
        <end position="1158"/>
    </location>
</feature>
<feature type="strand" evidence="69">
    <location>
        <begin position="1159"/>
        <end position="1161"/>
    </location>
</feature>
<feature type="strand" evidence="73">
    <location>
        <begin position="1201"/>
        <end position="1203"/>
    </location>
</feature>
<feature type="helix" evidence="74">
    <location>
        <begin position="1205"/>
        <end position="1215"/>
    </location>
</feature>
<feature type="strand" evidence="72">
    <location>
        <begin position="1223"/>
        <end position="1225"/>
    </location>
</feature>
<feature type="strand" evidence="72">
    <location>
        <begin position="1228"/>
        <end position="1230"/>
    </location>
</feature>
<feature type="strand" evidence="71">
    <location>
        <begin position="1231"/>
        <end position="1233"/>
    </location>
</feature>
<feature type="strand" evidence="70">
    <location>
        <begin position="1236"/>
        <end position="1238"/>
    </location>
</feature>
<feature type="helix" evidence="74">
    <location>
        <begin position="1240"/>
        <end position="1254"/>
    </location>
</feature>
<feature type="turn" evidence="73">
    <location>
        <begin position="1255"/>
        <end position="1258"/>
    </location>
</feature>
<feature type="strand" evidence="71">
    <location>
        <begin position="1259"/>
        <end position="1262"/>
    </location>
</feature>
<feature type="strand" evidence="74">
    <location>
        <begin position="1263"/>
        <end position="1265"/>
    </location>
</feature>
<feature type="helix" evidence="74">
    <location>
        <begin position="1269"/>
        <end position="1276"/>
    </location>
</feature>
<feature type="helix" evidence="74">
    <location>
        <begin position="1349"/>
        <end position="1368"/>
    </location>
</feature>
<feature type="helix" evidence="74">
    <location>
        <begin position="1371"/>
        <end position="1374"/>
    </location>
</feature>
<feature type="turn" evidence="74">
    <location>
        <begin position="1375"/>
        <end position="1378"/>
    </location>
</feature>
<feature type="helix" evidence="74">
    <location>
        <begin position="1379"/>
        <end position="1393"/>
    </location>
</feature>
<feature type="helix" evidence="74">
    <location>
        <begin position="1407"/>
        <end position="1409"/>
    </location>
</feature>
<feature type="strand" evidence="74">
    <location>
        <begin position="1410"/>
        <end position="1412"/>
    </location>
</feature>
<feature type="strand" evidence="74">
    <location>
        <begin position="1414"/>
        <end position="1419"/>
    </location>
</feature>
<feature type="helix" evidence="74">
    <location>
        <begin position="1425"/>
        <end position="1435"/>
    </location>
</feature>
<feature type="strand" evidence="70">
    <location>
        <begin position="1436"/>
        <end position="1438"/>
    </location>
</feature>
<feature type="strand" evidence="72">
    <location>
        <begin position="1440"/>
        <end position="1442"/>
    </location>
</feature>
<feature type="strand" evidence="70">
    <location>
        <begin position="1451"/>
        <end position="1453"/>
    </location>
</feature>
<feature type="helix" evidence="74">
    <location>
        <begin position="1468"/>
        <end position="1476"/>
    </location>
</feature>
<feature type="strand" evidence="74">
    <location>
        <begin position="1481"/>
        <end position="1483"/>
    </location>
</feature>
<feature type="strand" evidence="74">
    <location>
        <begin position="1493"/>
        <end position="1495"/>
    </location>
</feature>
<feature type="turn" evidence="72">
    <location>
        <begin position="1504"/>
        <end position="1507"/>
    </location>
</feature>
<feature type="strand" evidence="73">
    <location>
        <begin position="1513"/>
        <end position="1515"/>
    </location>
</feature>
<feature type="turn" evidence="74">
    <location>
        <begin position="1517"/>
        <end position="1519"/>
    </location>
</feature>
<feature type="strand" evidence="74">
    <location>
        <begin position="1520"/>
        <end position="1524"/>
    </location>
</feature>
<feature type="strand" evidence="72">
    <location>
        <begin position="1526"/>
        <end position="1528"/>
    </location>
</feature>
<feature type="helix" evidence="74">
    <location>
        <begin position="1530"/>
        <end position="1545"/>
    </location>
</feature>
<feature type="strand" evidence="74">
    <location>
        <begin position="1548"/>
        <end position="1551"/>
    </location>
</feature>
<feature type="strand" evidence="74">
    <location>
        <begin position="1558"/>
        <end position="1562"/>
    </location>
</feature>
<feature type="turn" evidence="74">
    <location>
        <begin position="1570"/>
        <end position="1573"/>
    </location>
</feature>
<feature type="helix" evidence="74">
    <location>
        <begin position="1574"/>
        <end position="1586"/>
    </location>
</feature>
<feature type="helix" evidence="74">
    <location>
        <begin position="1593"/>
        <end position="1599"/>
    </location>
</feature>
<feature type="helix" evidence="74">
    <location>
        <begin position="1602"/>
        <end position="1609"/>
    </location>
</feature>
<feature type="strand" evidence="74">
    <location>
        <begin position="1612"/>
        <end position="1619"/>
    </location>
</feature>
<feature type="helix" evidence="74">
    <location>
        <begin position="1627"/>
        <end position="1641"/>
    </location>
</feature>
<feature type="strand" evidence="74">
    <location>
        <begin position="1645"/>
        <end position="1647"/>
    </location>
</feature>
<feature type="turn" evidence="74">
    <location>
        <begin position="1649"/>
        <end position="1651"/>
    </location>
</feature>
<feature type="strand" evidence="74">
    <location>
        <begin position="1653"/>
        <end position="1658"/>
    </location>
</feature>
<feature type="helix" evidence="74">
    <location>
        <begin position="1665"/>
        <end position="1690"/>
    </location>
</feature>
<feature type="helix" evidence="74">
    <location>
        <begin position="1692"/>
        <end position="1706"/>
    </location>
</feature>
<feature type="helix" evidence="74">
    <location>
        <begin position="1709"/>
        <end position="1716"/>
    </location>
</feature>
<feature type="helix" evidence="74">
    <location>
        <begin position="1720"/>
        <end position="1747"/>
    </location>
</feature>
<feature type="turn" evidence="74">
    <location>
        <begin position="1748"/>
        <end position="1750"/>
    </location>
</feature>
<feature type="helix" evidence="74">
    <location>
        <begin position="1752"/>
        <end position="1755"/>
    </location>
</feature>
<feature type="turn" evidence="74">
    <location>
        <begin position="1757"/>
        <end position="1759"/>
    </location>
</feature>
<feature type="helix" evidence="74">
    <location>
        <begin position="1760"/>
        <end position="1778"/>
    </location>
</feature>
<feature type="helix" evidence="74">
    <location>
        <begin position="1781"/>
        <end position="1784"/>
    </location>
</feature>
<feature type="helix" evidence="74">
    <location>
        <begin position="1788"/>
        <end position="1813"/>
    </location>
</feature>
<feature type="strand" evidence="74">
    <location>
        <begin position="1817"/>
        <end position="1820"/>
    </location>
</feature>
<feature type="helix" evidence="74">
    <location>
        <begin position="1821"/>
        <end position="1829"/>
    </location>
</feature>
<feature type="turn" evidence="74">
    <location>
        <begin position="1830"/>
        <end position="1832"/>
    </location>
</feature>
<feature type="helix" evidence="74">
    <location>
        <begin position="1833"/>
        <end position="1835"/>
    </location>
</feature>
<feature type="helix" evidence="74">
    <location>
        <begin position="1837"/>
        <end position="1860"/>
    </location>
</feature>
<feature type="strand" evidence="74">
    <location>
        <begin position="1870"/>
        <end position="1875"/>
    </location>
</feature>
<feature type="helix" evidence="74">
    <location>
        <begin position="1876"/>
        <end position="1896"/>
    </location>
</feature>
<feature type="helix" evidence="72">
    <location>
        <begin position="1919"/>
        <end position="1929"/>
    </location>
</feature>
<feature type="strand" evidence="70">
    <location>
        <begin position="1931"/>
        <end position="1933"/>
    </location>
</feature>
<feature type="strand" evidence="72">
    <location>
        <begin position="1937"/>
        <end position="1946"/>
    </location>
</feature>
<feature type="turn" evidence="72">
    <location>
        <begin position="1948"/>
        <end position="1950"/>
    </location>
</feature>
<feature type="strand" evidence="72">
    <location>
        <begin position="1952"/>
        <end position="1958"/>
    </location>
</feature>
<feature type="strand" evidence="73">
    <location>
        <begin position="1967"/>
        <end position="1969"/>
    </location>
</feature>
<feature type="strand" evidence="74">
    <location>
        <begin position="1974"/>
        <end position="1976"/>
    </location>
</feature>
<feature type="helix" evidence="74">
    <location>
        <begin position="1978"/>
        <end position="1985"/>
    </location>
</feature>
<feature type="strand" evidence="74">
    <location>
        <begin position="1986"/>
        <end position="1988"/>
    </location>
</feature>
<feature type="strand" evidence="72">
    <location>
        <begin position="1993"/>
        <end position="1998"/>
    </location>
</feature>
<feature type="strand" evidence="72">
    <location>
        <begin position="2003"/>
        <end position="2005"/>
    </location>
</feature>
<feature type="turn" evidence="74">
    <location>
        <begin position="2009"/>
        <end position="2011"/>
    </location>
</feature>
<feature type="strand" evidence="74">
    <location>
        <begin position="2013"/>
        <end position="2020"/>
    </location>
</feature>
<feature type="strand" evidence="72">
    <location>
        <begin position="2025"/>
        <end position="2028"/>
    </location>
</feature>
<feature type="helix" evidence="74">
    <location>
        <begin position="2034"/>
        <end position="2040"/>
    </location>
</feature>
<feature type="helix" evidence="72">
    <location>
        <begin position="2044"/>
        <end position="2046"/>
    </location>
</feature>
<feature type="turn" evidence="74">
    <location>
        <begin position="2050"/>
        <end position="2053"/>
    </location>
</feature>
<feature type="helix" evidence="74">
    <location>
        <begin position="2055"/>
        <end position="2058"/>
    </location>
</feature>
<feature type="turn" evidence="74">
    <location>
        <begin position="2062"/>
        <end position="2065"/>
    </location>
</feature>
<feature type="turn" evidence="74">
    <location>
        <begin position="2068"/>
        <end position="2070"/>
    </location>
</feature>
<feature type="helix" evidence="74">
    <location>
        <begin position="2073"/>
        <end position="2084"/>
    </location>
</feature>
<feature type="turn" evidence="73">
    <location>
        <begin position="2085"/>
        <end position="2087"/>
    </location>
</feature>
<feature type="strand" evidence="74">
    <location>
        <begin position="2090"/>
        <end position="2097"/>
    </location>
</feature>
<feature type="helix" evidence="74">
    <location>
        <begin position="2103"/>
        <end position="2119"/>
    </location>
</feature>
<feature type="strand" evidence="74">
    <location>
        <begin position="2122"/>
        <end position="2126"/>
    </location>
</feature>
<feature type="strand" evidence="74">
    <location>
        <begin position="2131"/>
        <end position="2133"/>
    </location>
</feature>
<feature type="turn" evidence="74">
    <location>
        <begin position="2134"/>
        <end position="2136"/>
    </location>
</feature>
<feature type="strand" evidence="72">
    <location>
        <begin position="2138"/>
        <end position="2152"/>
    </location>
</feature>
<feature type="helix" evidence="74">
    <location>
        <begin position="2154"/>
        <end position="2160"/>
    </location>
</feature>
<feature type="strand" evidence="74">
    <location>
        <begin position="2166"/>
        <end position="2169"/>
    </location>
</feature>
<feature type="helix" evidence="74">
    <location>
        <begin position="2179"/>
        <end position="2192"/>
    </location>
</feature>
<feature type="strand" evidence="72">
    <location>
        <begin position="2197"/>
        <end position="2202"/>
    </location>
</feature>
<feature type="strand" evidence="74">
    <location>
        <begin position="2205"/>
        <end position="2209"/>
    </location>
</feature>
<feature type="helix" evidence="74">
    <location>
        <begin position="2217"/>
        <end position="2224"/>
    </location>
</feature>
<feature type="turn" evidence="74">
    <location>
        <begin position="2225"/>
        <end position="2228"/>
    </location>
</feature>
<feature type="strand" evidence="74">
    <location>
        <begin position="2235"/>
        <end position="2237"/>
    </location>
</feature>
<feature type="helix" evidence="72">
    <location>
        <begin position="2241"/>
        <end position="2252"/>
    </location>
</feature>